<evidence type="ECO:0000250" key="1"/>
<evidence type="ECO:0000250" key="2">
    <source>
        <dbReference type="UniProtKB" id="P00520"/>
    </source>
</evidence>
<evidence type="ECO:0000250" key="3">
    <source>
        <dbReference type="UniProtKB" id="P42684"/>
    </source>
</evidence>
<evidence type="ECO:0000255" key="4"/>
<evidence type="ECO:0000255" key="5">
    <source>
        <dbReference type="PROSITE-ProRule" id="PRU00159"/>
    </source>
</evidence>
<evidence type="ECO:0000255" key="6">
    <source>
        <dbReference type="PROSITE-ProRule" id="PRU00191"/>
    </source>
</evidence>
<evidence type="ECO:0000255" key="7">
    <source>
        <dbReference type="PROSITE-ProRule" id="PRU00192"/>
    </source>
</evidence>
<evidence type="ECO:0000255" key="8">
    <source>
        <dbReference type="PROSITE-ProRule" id="PRU10028"/>
    </source>
</evidence>
<evidence type="ECO:0000256" key="9">
    <source>
        <dbReference type="SAM" id="MobiDB-lite"/>
    </source>
</evidence>
<evidence type="ECO:0000269" key="10">
    <source>
    </source>
</evidence>
<evidence type="ECO:0000269" key="11">
    <source>
    </source>
</evidence>
<evidence type="ECO:0000269" key="12">
    <source>
    </source>
</evidence>
<evidence type="ECO:0000269" key="13">
    <source>
    </source>
</evidence>
<evidence type="ECO:0000269" key="14">
    <source>
    </source>
</evidence>
<evidence type="ECO:0000269" key="15">
    <source>
    </source>
</evidence>
<evidence type="ECO:0000269" key="16">
    <source>
    </source>
</evidence>
<evidence type="ECO:0000269" key="17">
    <source>
    </source>
</evidence>
<evidence type="ECO:0000269" key="18">
    <source>
    </source>
</evidence>
<evidence type="ECO:0000269" key="19">
    <source>
    </source>
</evidence>
<evidence type="ECO:0000269" key="20">
    <source>
    </source>
</evidence>
<evidence type="ECO:0000269" key="21">
    <source>
    </source>
</evidence>
<evidence type="ECO:0000269" key="22">
    <source>
    </source>
</evidence>
<evidence type="ECO:0000269" key="23">
    <source>
    </source>
</evidence>
<evidence type="ECO:0000269" key="24">
    <source>
    </source>
</evidence>
<evidence type="ECO:0000269" key="25">
    <source>
    </source>
</evidence>
<evidence type="ECO:0000269" key="26">
    <source>
    </source>
</evidence>
<evidence type="ECO:0000269" key="27">
    <source>
    </source>
</evidence>
<evidence type="ECO:0000269" key="28">
    <source>
    </source>
</evidence>
<evidence type="ECO:0000269" key="29">
    <source>
    </source>
</evidence>
<evidence type="ECO:0000269" key="30">
    <source>
    </source>
</evidence>
<evidence type="ECO:0000269" key="31">
    <source>
    </source>
</evidence>
<evidence type="ECO:0000269" key="32">
    <source>
    </source>
</evidence>
<evidence type="ECO:0000269" key="33">
    <source>
    </source>
</evidence>
<evidence type="ECO:0000269" key="34">
    <source>
    </source>
</evidence>
<evidence type="ECO:0000269" key="35">
    <source>
    </source>
</evidence>
<evidence type="ECO:0000269" key="36">
    <source>
    </source>
</evidence>
<evidence type="ECO:0000269" key="37">
    <source>
    </source>
</evidence>
<evidence type="ECO:0000269" key="38">
    <source>
    </source>
</evidence>
<evidence type="ECO:0000269" key="39">
    <source>
    </source>
</evidence>
<evidence type="ECO:0000269" key="40">
    <source>
    </source>
</evidence>
<evidence type="ECO:0000269" key="41">
    <source>
    </source>
</evidence>
<evidence type="ECO:0000269" key="42">
    <source>
    </source>
</evidence>
<evidence type="ECO:0000269" key="43">
    <source>
    </source>
</evidence>
<evidence type="ECO:0000269" key="44">
    <source>
    </source>
</evidence>
<evidence type="ECO:0000269" key="45">
    <source>
    </source>
</evidence>
<evidence type="ECO:0000269" key="46">
    <source>
    </source>
</evidence>
<evidence type="ECO:0000269" key="47">
    <source>
    </source>
</evidence>
<evidence type="ECO:0000269" key="48">
    <source>
    </source>
</evidence>
<evidence type="ECO:0000269" key="49">
    <source>
    </source>
</evidence>
<evidence type="ECO:0000269" key="50">
    <source>
    </source>
</evidence>
<evidence type="ECO:0000269" key="51">
    <source>
    </source>
</evidence>
<evidence type="ECO:0000269" key="52">
    <source>
    </source>
</evidence>
<evidence type="ECO:0000269" key="53">
    <source>
    </source>
</evidence>
<evidence type="ECO:0000269" key="54">
    <source>
    </source>
</evidence>
<evidence type="ECO:0000269" key="55">
    <source ref="4"/>
</evidence>
<evidence type="ECO:0000303" key="56">
    <source>
    </source>
</evidence>
<evidence type="ECO:0000305" key="57"/>
<evidence type="ECO:0007744" key="58">
    <source>
    </source>
</evidence>
<evidence type="ECO:0007744" key="59">
    <source>
    </source>
</evidence>
<evidence type="ECO:0007744" key="60">
    <source>
    </source>
</evidence>
<evidence type="ECO:0007744" key="61">
    <source>
    </source>
</evidence>
<evidence type="ECO:0007744" key="62">
    <source>
    </source>
</evidence>
<evidence type="ECO:0007744" key="63">
    <source>
    </source>
</evidence>
<evidence type="ECO:0007744" key="64">
    <source>
    </source>
</evidence>
<evidence type="ECO:0007829" key="65">
    <source>
        <dbReference type="PDB" id="1OPL"/>
    </source>
</evidence>
<evidence type="ECO:0007829" key="66">
    <source>
        <dbReference type="PDB" id="1ZZP"/>
    </source>
</evidence>
<evidence type="ECO:0007829" key="67">
    <source>
        <dbReference type="PDB" id="2F4J"/>
    </source>
</evidence>
<evidence type="ECO:0007829" key="68">
    <source>
        <dbReference type="PDB" id="2FO0"/>
    </source>
</evidence>
<evidence type="ECO:0007829" key="69">
    <source>
        <dbReference type="PDB" id="2G1T"/>
    </source>
</evidence>
<evidence type="ECO:0007829" key="70">
    <source>
        <dbReference type="PDB" id="2G2F"/>
    </source>
</evidence>
<evidence type="ECO:0007829" key="71">
    <source>
        <dbReference type="PDB" id="2G2H"/>
    </source>
</evidence>
<evidence type="ECO:0007829" key="72">
    <source>
        <dbReference type="PDB" id="2GQG"/>
    </source>
</evidence>
<evidence type="ECO:0007829" key="73">
    <source>
        <dbReference type="PDB" id="2HZI"/>
    </source>
</evidence>
<evidence type="ECO:0007829" key="74">
    <source>
        <dbReference type="PDB" id="3QRJ"/>
    </source>
</evidence>
<evidence type="ECO:0007829" key="75">
    <source>
        <dbReference type="PDB" id="4XEY"/>
    </source>
</evidence>
<evidence type="ECO:0007829" key="76">
    <source>
        <dbReference type="PDB" id="5DC4"/>
    </source>
</evidence>
<evidence type="ECO:0007829" key="77">
    <source>
        <dbReference type="PDB" id="5HU9"/>
    </source>
</evidence>
<evidence type="ECO:0007829" key="78">
    <source>
        <dbReference type="PDB" id="5MO4"/>
    </source>
</evidence>
<evidence type="ECO:0007829" key="79">
    <source>
        <dbReference type="PDB" id="5OAZ"/>
    </source>
</evidence>
<evidence type="ECO:0007829" key="80">
    <source>
        <dbReference type="PDB" id="6AMV"/>
    </source>
</evidence>
<evidence type="ECO:0007829" key="81">
    <source>
        <dbReference type="PDB" id="7PW2"/>
    </source>
</evidence>
<reference key="1">
    <citation type="journal article" date="1986" name="Cell">
        <title>Alternative splicing of RNAs transcribed from the human abl gene and from the bcr-abl fused gene.</title>
        <authorList>
            <person name="Shtivelman E."/>
            <person name="Lifshitz B."/>
            <person name="Gale R.P."/>
            <person name="Roe B.A."/>
            <person name="Canaani E."/>
        </authorList>
    </citation>
    <scope>NUCLEOTIDE SEQUENCE [MRNA] (ISOFORM IA)</scope>
    <scope>ALTERNATIVE SPLICING</scope>
    <scope>CHROMOSOMAL TRANSLOCATION WITH BRC</scope>
    <scope>VARIANT PRO-140</scope>
</reference>
<reference key="2">
    <citation type="journal article" date="1989" name="Oncogene">
        <title>Nucleotide sequence analysis of human abl and bcr-abl cDNAs.</title>
        <authorList>
            <person name="Fainstein E."/>
            <person name="Einat M."/>
            <person name="Gokkel E."/>
            <person name="Marcelle C."/>
            <person name="Croce C.M."/>
            <person name="Gale R.P."/>
            <person name="Canaani E."/>
        </authorList>
    </citation>
    <scope>NUCLEOTIDE SEQUENCE [MRNA] (ISOFORM IA)</scope>
    <source>
        <tissue>Fibroblast</tissue>
    </source>
</reference>
<reference key="3">
    <citation type="journal article" date="1995" name="Genomics">
        <title>Sequence and analysis of the human ABL gene, the BCR gene, and regions involved in the Philadelphia chromosomal translocation.</title>
        <authorList>
            <person name="Chissoe S.L."/>
            <person name="Bodenteich A."/>
            <person name="Wang Y.-F."/>
            <person name="Wang Y.-P."/>
            <person name="Burian D."/>
            <person name="Clifton S.W."/>
            <person name="Crabtree J."/>
            <person name="Freeman A."/>
            <person name="Iyer K."/>
            <person name="Jian L."/>
            <person name="Ma Y."/>
            <person name="McLaury H.-J."/>
            <person name="Pan H.-Q."/>
            <person name="Sarhan O.H."/>
            <person name="Toth S."/>
            <person name="Wang Z."/>
            <person name="Zhang G."/>
            <person name="Heisterkamp N."/>
            <person name="Groffen J."/>
            <person name="Roe B.A."/>
        </authorList>
    </citation>
    <scope>NUCLEOTIDE SEQUENCE [GENOMIC DNA] (ISOFORMS IA AND IB)</scope>
    <source>
        <tissue>Lung</tissue>
    </source>
</reference>
<reference key="4">
    <citation type="submission" date="2005-07" db="EMBL/GenBank/DDBJ databases">
        <authorList>
            <consortium name="NIEHS SNPs program"/>
        </authorList>
    </citation>
    <scope>NUCLEOTIDE SEQUENCE [GENOMIC DNA]</scope>
    <scope>VARIANTS VAL-706; PRO-852; SER-900 AND LEU-972</scope>
</reference>
<reference key="5">
    <citation type="journal article" date="2004" name="Nature">
        <title>DNA sequence and analysis of human chromosome 9.</title>
        <authorList>
            <person name="Humphray S.J."/>
            <person name="Oliver K."/>
            <person name="Hunt A.R."/>
            <person name="Plumb R.W."/>
            <person name="Loveland J.E."/>
            <person name="Howe K.L."/>
            <person name="Andrews T.D."/>
            <person name="Searle S."/>
            <person name="Hunt S.E."/>
            <person name="Scott C.E."/>
            <person name="Jones M.C."/>
            <person name="Ainscough R."/>
            <person name="Almeida J.P."/>
            <person name="Ambrose K.D."/>
            <person name="Ashwell R.I.S."/>
            <person name="Babbage A.K."/>
            <person name="Babbage S."/>
            <person name="Bagguley C.L."/>
            <person name="Bailey J."/>
            <person name="Banerjee R."/>
            <person name="Barker D.J."/>
            <person name="Barlow K.F."/>
            <person name="Bates K."/>
            <person name="Beasley H."/>
            <person name="Beasley O."/>
            <person name="Bird C.P."/>
            <person name="Bray-Allen S."/>
            <person name="Brown A.J."/>
            <person name="Brown J.Y."/>
            <person name="Burford D."/>
            <person name="Burrill W."/>
            <person name="Burton J."/>
            <person name="Carder C."/>
            <person name="Carter N.P."/>
            <person name="Chapman J.C."/>
            <person name="Chen Y."/>
            <person name="Clarke G."/>
            <person name="Clark S.Y."/>
            <person name="Clee C.M."/>
            <person name="Clegg S."/>
            <person name="Collier R.E."/>
            <person name="Corby N."/>
            <person name="Crosier M."/>
            <person name="Cummings A.T."/>
            <person name="Davies J."/>
            <person name="Dhami P."/>
            <person name="Dunn M."/>
            <person name="Dutta I."/>
            <person name="Dyer L.W."/>
            <person name="Earthrowl M.E."/>
            <person name="Faulkner L."/>
            <person name="Fleming C.J."/>
            <person name="Frankish A."/>
            <person name="Frankland J.A."/>
            <person name="French L."/>
            <person name="Fricker D.G."/>
            <person name="Garner P."/>
            <person name="Garnett J."/>
            <person name="Ghori J."/>
            <person name="Gilbert J.G.R."/>
            <person name="Glison C."/>
            <person name="Grafham D.V."/>
            <person name="Gribble S."/>
            <person name="Griffiths C."/>
            <person name="Griffiths-Jones S."/>
            <person name="Grocock R."/>
            <person name="Guy J."/>
            <person name="Hall R.E."/>
            <person name="Hammond S."/>
            <person name="Harley J.L."/>
            <person name="Harrison E.S.I."/>
            <person name="Hart E.A."/>
            <person name="Heath P.D."/>
            <person name="Henderson C.D."/>
            <person name="Hopkins B.L."/>
            <person name="Howard P.J."/>
            <person name="Howden P.J."/>
            <person name="Huckle E."/>
            <person name="Johnson C."/>
            <person name="Johnson D."/>
            <person name="Joy A.A."/>
            <person name="Kay M."/>
            <person name="Keenan S."/>
            <person name="Kershaw J.K."/>
            <person name="Kimberley A.M."/>
            <person name="King A."/>
            <person name="Knights A."/>
            <person name="Laird G.K."/>
            <person name="Langford C."/>
            <person name="Lawlor S."/>
            <person name="Leongamornlert D.A."/>
            <person name="Leversha M."/>
            <person name="Lloyd C."/>
            <person name="Lloyd D.M."/>
            <person name="Lovell J."/>
            <person name="Martin S."/>
            <person name="Mashreghi-Mohammadi M."/>
            <person name="Matthews L."/>
            <person name="McLaren S."/>
            <person name="McLay K.E."/>
            <person name="McMurray A."/>
            <person name="Milne S."/>
            <person name="Nickerson T."/>
            <person name="Nisbett J."/>
            <person name="Nordsiek G."/>
            <person name="Pearce A.V."/>
            <person name="Peck A.I."/>
            <person name="Porter K.M."/>
            <person name="Pandian R."/>
            <person name="Pelan S."/>
            <person name="Phillimore B."/>
            <person name="Povey S."/>
            <person name="Ramsey Y."/>
            <person name="Rand V."/>
            <person name="Scharfe M."/>
            <person name="Sehra H.K."/>
            <person name="Shownkeen R."/>
            <person name="Sims S.K."/>
            <person name="Skuce C.D."/>
            <person name="Smith M."/>
            <person name="Steward C.A."/>
            <person name="Swarbreck D."/>
            <person name="Sycamore N."/>
            <person name="Tester J."/>
            <person name="Thorpe A."/>
            <person name="Tracey A."/>
            <person name="Tromans A."/>
            <person name="Thomas D.W."/>
            <person name="Wall M."/>
            <person name="Wallis J.M."/>
            <person name="West A.P."/>
            <person name="Whitehead S.L."/>
            <person name="Willey D.L."/>
            <person name="Williams S.A."/>
            <person name="Wilming L."/>
            <person name="Wray P.W."/>
            <person name="Young L."/>
            <person name="Ashurst J.L."/>
            <person name="Coulson A."/>
            <person name="Blocker H."/>
            <person name="Durbin R.M."/>
            <person name="Sulston J.E."/>
            <person name="Hubbard T."/>
            <person name="Jackson M.J."/>
            <person name="Bentley D.R."/>
            <person name="Beck S."/>
            <person name="Rogers J."/>
            <person name="Dunham I."/>
        </authorList>
    </citation>
    <scope>NUCLEOTIDE SEQUENCE [LARGE SCALE GENOMIC DNA]</scope>
</reference>
<reference key="6">
    <citation type="submission" date="2005-07" db="EMBL/GenBank/DDBJ databases">
        <authorList>
            <person name="Mural R.J."/>
            <person name="Istrail S."/>
            <person name="Sutton G.G."/>
            <person name="Florea L."/>
            <person name="Halpern A.L."/>
            <person name="Mobarry C.M."/>
            <person name="Lippert R."/>
            <person name="Walenz B."/>
            <person name="Shatkay H."/>
            <person name="Dew I."/>
            <person name="Miller J.R."/>
            <person name="Flanigan M.J."/>
            <person name="Edwards N.J."/>
            <person name="Bolanos R."/>
            <person name="Fasulo D."/>
            <person name="Halldorsson B.V."/>
            <person name="Hannenhalli S."/>
            <person name="Turner R."/>
            <person name="Yooseph S."/>
            <person name="Lu F."/>
            <person name="Nusskern D.R."/>
            <person name="Shue B.C."/>
            <person name="Zheng X.H."/>
            <person name="Zhong F."/>
            <person name="Delcher A.L."/>
            <person name="Huson D.H."/>
            <person name="Kravitz S.A."/>
            <person name="Mouchard L."/>
            <person name="Reinert K."/>
            <person name="Remington K.A."/>
            <person name="Clark A.G."/>
            <person name="Waterman M.S."/>
            <person name="Eichler E.E."/>
            <person name="Adams M.D."/>
            <person name="Hunkapiller M.W."/>
            <person name="Myers E.W."/>
            <person name="Venter J.C."/>
        </authorList>
    </citation>
    <scope>NUCLEOTIDE SEQUENCE [LARGE SCALE GENOMIC DNA]</scope>
</reference>
<reference key="7">
    <citation type="journal article" date="2004" name="Genome Res.">
        <title>The status, quality, and expansion of the NIH full-length cDNA project: the Mammalian Gene Collection (MGC).</title>
        <authorList>
            <consortium name="The MGC Project Team"/>
        </authorList>
    </citation>
    <scope>NUCLEOTIDE SEQUENCE [LARGE SCALE MRNA] (ISOFORM IB)</scope>
    <source>
        <tissue>Cerebellum</tissue>
    </source>
</reference>
<reference key="8">
    <citation type="journal article" date="1987" name="Nature">
        <title>A new fused transcript in Philadelphia chromosome positive acute lymphocytic leukaemia.</title>
        <authorList>
            <person name="Fainstein E."/>
            <person name="Marcelle C."/>
            <person name="Rosner A."/>
            <person name="Canaani E."/>
            <person name="Gale R.P."/>
            <person name="Dreazen O."/>
            <person name="Smith S.D."/>
            <person name="Croce C.M."/>
        </authorList>
    </citation>
    <scope>NUCLEOTIDE SEQUENCE [MRNA] OF 27-40</scope>
    <scope>SUBCELLULAR COMPONENT</scope>
</reference>
<reference key="9">
    <citation type="journal article" date="1983" name="Nature">
        <title>Homology between phosphotyrosine acceptor site of human c-abl and viral oncogene products.</title>
        <authorList>
            <person name="Groffen J."/>
            <person name="Heisterkamp N."/>
            <person name="Reynolds F.H. Jr."/>
            <person name="Stephenson J.R."/>
        </authorList>
    </citation>
    <scope>NUCLEOTIDE SEQUENCE OF 360-426</scope>
</reference>
<reference key="10">
    <citation type="journal article" date="1994" name="Leukemia">
        <title>Sequence analysis of the mutation at codon 834 and the sequence variation of codon 837 of c-abl gene.</title>
        <authorList>
            <person name="Inokuchi K."/>
            <person name="Futaki M."/>
            <person name="Dan K."/>
            <person name="Nomura T."/>
        </authorList>
    </citation>
    <scope>NUCLEOTIDE SEQUENCE [GENOMIC DNA] OF 825-845</scope>
</reference>
<reference key="11">
    <citation type="journal article" date="1989" name="EMBO J.">
        <title>N-terminal mutations activate the leukemogenic potential of the myristoylated form of c-abl.</title>
        <authorList>
            <person name="Jackson P."/>
            <person name="Baltimore D."/>
        </authorList>
    </citation>
    <scope>MYRISTOYLATION AT GLY-2 (ISOFORM IB)</scope>
</reference>
<reference key="12">
    <citation type="journal article" date="1990" name="Science">
        <title>Differential phosphorylation of c-Abl in cell cycle determined by cdc2 kinase and phosphatase activity.</title>
        <authorList>
            <person name="Kipreos E.T."/>
            <person name="Wang J.Y."/>
        </authorList>
    </citation>
    <scope>DOMAIN</scope>
    <scope>DNA-BINDING</scope>
</reference>
<reference key="13">
    <citation type="journal article" date="1997" name="Proc. Natl. Acad. Sci. U.S.A.">
        <title>Regulation of DNA damage-induced apoptosis by the c-Abl tyrosine kinase.</title>
        <authorList>
            <person name="Yuan Z.M."/>
            <person name="Huang Y."/>
            <person name="Ishiko T."/>
            <person name="Kharbanda S."/>
            <person name="Weichselbaum R."/>
            <person name="Kufe D."/>
        </authorList>
    </citation>
    <scope>FUNCTION</scope>
</reference>
<reference key="14">
    <citation type="journal article" date="1997" name="Proc. Natl. Acad. Sci. U.S.A.">
        <title>Protein binding and signaling properties of RIN1 suggest a unique effector function.</title>
        <authorList>
            <person name="Han L."/>
            <person name="Wong D."/>
            <person name="Dhaka A."/>
            <person name="Afar D.E.H."/>
            <person name="White M."/>
            <person name="Xie W."/>
            <person name="Herschman H."/>
            <person name="Witte O."/>
            <person name="Colicelli J."/>
        </authorList>
    </citation>
    <scope>INTERACTION WITH RIN1</scope>
    <scope>FUNCTION</scope>
</reference>
<reference key="15">
    <citation type="journal article" date="1998" name="J. Biol. Chem.">
        <title>Regulation of Rad51 function by c-Abl in response to DNA damage.</title>
        <authorList>
            <person name="Yuan Z.M."/>
            <person name="Huang Y."/>
            <person name="Ishiko T."/>
            <person name="Nakada S."/>
            <person name="Utsugisawa T."/>
            <person name="Kharbanda S."/>
            <person name="Wang R."/>
            <person name="Sung P."/>
            <person name="Shinohara A."/>
            <person name="Weichselbaum R."/>
            <person name="Kufe D."/>
        </authorList>
    </citation>
    <scope>FUNCTION</scope>
    <scope>INTERACTION WITH RAD51</scope>
</reference>
<reference key="16">
    <citation type="journal article" date="1999" name="Blood">
        <title>A novel SH2-containing phosphatidylinositol 3,4,5-trisphosphate 5-phosphatase (SHIP2) is constitutively tyrosine phosphorylated and associated with src homologous and collagen gene (SHC) in chronic myelogenous leukemia progenitor cells.</title>
        <authorList>
            <person name="Wisniewski D."/>
            <person name="Strife A."/>
            <person name="Swendeman S."/>
            <person name="Erdjument-Bromage H."/>
            <person name="Geromanos S."/>
            <person name="Kavanaugh W.M."/>
            <person name="Tempst P."/>
            <person name="Clarkson B."/>
        </authorList>
    </citation>
    <scope>INTERACTION WITH INPPL1</scope>
</reference>
<reference key="17">
    <citation type="journal article" date="1999" name="Nature">
        <title>Interaction of c-Abl and p73alpha and their collaboration to induce apoptosis.</title>
        <authorList>
            <person name="Agami R."/>
            <person name="Blandino G."/>
            <person name="Oren M."/>
            <person name="Shaul Y."/>
        </authorList>
    </citation>
    <scope>FUNCTION</scope>
    <scope>ACTIVITY REGULATION</scope>
    <scope>INTERACTION WITH TP73</scope>
</reference>
<reference key="18">
    <citation type="journal article" date="1999" name="Nucleic Acids Res.">
        <title>The DNA-binding domain of human c-Abl tyrosine kinase promotes the interaction of a HMG chromosomal protein with DNA.</title>
        <authorList>
            <person name="David-Cordonnier M.H."/>
            <person name="Payet D."/>
            <person name="D'Halluin J.C."/>
            <person name="Waring M.J."/>
            <person name="Travers A.A."/>
            <person name="Bailly C."/>
        </authorList>
    </citation>
    <scope>DNA-BINDING</scope>
</reference>
<reference key="19">
    <citation type="journal article" date="2000" name="Oncogene">
        <title>Regulation of cell death by the Abl tyrosine kinase.</title>
        <authorList>
            <person name="Wang J.Y."/>
        </authorList>
    </citation>
    <scope>REVIEW ON FUNCTION</scope>
</reference>
<reference key="20">
    <citation type="journal article" date="2001" name="Genomics">
        <title>Cloning, mapping, and characterization of the human sorbin and SH3 domain containing 1 (SORBS1) gene: a protein associated with c-Abl during insulin signaling in the hepatoma cell line Hep3B.</title>
        <authorList>
            <person name="Lin W.-H."/>
            <person name="Huang C.-J."/>
            <person name="Liu M.-W."/>
            <person name="Chang H.-M."/>
            <person name="Chen Y.-J."/>
            <person name="Tai T.-Y."/>
            <person name="Chuang L.-M."/>
        </authorList>
    </citation>
    <scope>INTERACTION WITH SORBS1</scope>
</reference>
<reference key="21">
    <citation type="journal article" date="2002" name="J. Biol. Chem.">
        <title>Regulation of ionizing radiation-induced Rad52 nuclear foci formation by c-Abl-mediated phosphorylation.</title>
        <authorList>
            <person name="Kitao H."/>
            <person name="Yuan Z.M."/>
        </authorList>
    </citation>
    <scope>FUNCTION</scope>
    <scope>INTERACTION WITH RAD52</scope>
</reference>
<reference key="22">
    <citation type="journal article" date="2002" name="Mol. Cell. Biol.">
        <title>c-Abl tyrosine kinase regulates the human Rad9 checkpoint protein in response to DNA damage.</title>
        <authorList>
            <person name="Yoshida K."/>
            <person name="Komatsu K."/>
            <person name="Wang H.-G."/>
            <person name="Kufe D."/>
        </authorList>
    </citation>
    <scope>FUNCTION</scope>
    <scope>INTERACTION WITH RAD9A</scope>
</reference>
<reference key="23">
    <citation type="journal article" date="2003" name="Biochem. J.">
        <title>Cbl-ArgBP2 complex mediates ubiquitination and degradation of c-Abl.</title>
        <authorList>
            <person name="Soubeyran P."/>
            <person name="Barac A."/>
            <person name="Szymkiewicz I."/>
            <person name="Dikic I."/>
        </authorList>
    </citation>
    <scope>UBIQUITINATION</scope>
</reference>
<reference key="24">
    <citation type="journal article" date="2003" name="Cell. Signal.">
        <title>c-Abl is required for oxidative stress-induced phosphorylation of caveolin-1 on tyrosine 14.</title>
        <authorList>
            <person name="Sanguinetti A.R."/>
            <person name="Mastick C.C."/>
        </authorList>
    </citation>
    <scope>FUNCTION</scope>
</reference>
<reference key="25">
    <citation type="journal article" date="2003" name="J. Biol. Chem.">
        <title>Abl interactor 1 promotes tyrosine 296 phosphorylation of mammalian enabled (Mena) by c-Abl kinase.</title>
        <authorList>
            <person name="Tani K."/>
            <person name="Sato S."/>
            <person name="Sukezane T."/>
            <person name="Kojima H."/>
            <person name="Hirose H."/>
            <person name="Hanafusa H."/>
            <person name="Shishido T."/>
        </authorList>
    </citation>
    <scope>FUNCTION</scope>
</reference>
<reference key="26">
    <citation type="journal article" date="2003" name="J. Cell Sci.">
        <title>Regulation of F-actin-dependent processes by the Abl family of tyrosine kinases.</title>
        <authorList>
            <person name="Woodring P.J."/>
            <person name="Hunter T."/>
            <person name="Wang J.Y."/>
        </authorList>
    </citation>
    <scope>REVIEW ON FUNCTION</scope>
</reference>
<reference key="27">
    <citation type="journal article" date="2004" name="Exp. Cell Res.">
        <title>The c-Fes tyrosine kinase cooperates with the breakpoint cluster region protein (Bcr) to induce neurite extension in a Rac- and Cdc42-dependent manner.</title>
        <authorList>
            <person name="Laurent C.E."/>
            <person name="Smithgall T.E."/>
        </authorList>
    </citation>
    <scope>INTERACTION WITH BCR</scope>
</reference>
<reference key="28">
    <citation type="journal article" date="2004" name="FEBS Lett.">
        <title>Catalytic domains of tyrosine kinases determine the phosphorylation sites within c-Cbl.</title>
        <authorList>
            <person name="Grossmann A.H."/>
            <person name="Kolibaba K.S."/>
            <person name="Willis S.G."/>
            <person name="Corbin A.S."/>
            <person name="Langdon W.S."/>
            <person name="Deininger M.W."/>
            <person name="Druker B.J."/>
        </authorList>
    </citation>
    <scope>FUNCTION</scope>
</reference>
<reference key="29">
    <citation type="journal article" date="2004" name="J. Biol. Chem.">
        <title>The c-Abl tyrosine kinase phosphorylates the Fe65 adaptor protein to stimulate Fe65/amyloid precursor protein nuclear signaling.</title>
        <authorList>
            <person name="Perkinton M.S."/>
            <person name="Standen C.L."/>
            <person name="Lau K.F."/>
            <person name="Kesavapany S."/>
            <person name="Byers H.L."/>
            <person name="Ward M."/>
            <person name="McLoughlin D.M."/>
            <person name="Miller C.C."/>
        </authorList>
    </citation>
    <scope>FUNCTION</scope>
</reference>
<reference key="30">
    <citation type="journal article" date="2005" name="Cell Res.">
        <title>Role of c-Abl in the DNA damage stress response.</title>
        <authorList>
            <person name="Shaul Y."/>
            <person name="Ben-Yehoyada M."/>
        </authorList>
    </citation>
    <scope>REVIEW ON FUNCTION</scope>
</reference>
<reference key="31">
    <citation type="journal article" date="2005" name="Curr. Biol.">
        <title>RIN1 is an ABL tyrosine kinase activator and a regulator of epithelial-cell adhesion and migration.</title>
        <authorList>
            <person name="Hu H."/>
            <person name="Bliss J.M."/>
            <person name="Wang Y."/>
            <person name="Colicelli J."/>
        </authorList>
    </citation>
    <scope>FUNCTION</scope>
</reference>
<reference key="32">
    <citation type="journal article" date="2005" name="J. Biol. Chem.">
        <title>c-Abl tyrosine kinase regulates caspase-9 autocleavage in the apoptotic response to DNA damage.</title>
        <authorList>
            <person name="Raina D."/>
            <person name="Pandey P."/>
            <person name="Ahmad R."/>
            <person name="Bharti A."/>
            <person name="Ren J."/>
            <person name="Kharbanda S."/>
            <person name="Weichselbaum R."/>
            <person name="Kufe D."/>
        </authorList>
    </citation>
    <scope>FUNCTION</scope>
    <scope>INTERACTION WITH CASP9</scope>
</reference>
<reference key="33">
    <citation type="journal article" date="2005" name="Nat. Cell Biol.">
        <title>JNK phosphorylation of 14-3-3 proteins regulates nuclear targeting of c-Abl in the apoptotic response to DNA damage.</title>
        <authorList>
            <person name="Yoshida K."/>
            <person name="Yamaguchi T."/>
            <person name="Natsume T."/>
            <person name="Kufe D."/>
            <person name="Miki Y."/>
        </authorList>
    </citation>
    <scope>INTERACTION WITH YWHAB; YWHAE; YWHAG; YWHAH; SFN AND YWHAZ</scope>
    <scope>PHOSPHORYLATION AT THR-735</scope>
    <scope>IDENTIFICATION BY MASS SPECTROMETRY</scope>
    <scope>SUBCELLULAR LOCATION</scope>
    <scope>MUTAGENESIS OF THR-735</scope>
</reference>
<reference key="34">
    <citation type="journal article" date="2006" name="Cell">
        <title>Global, in vivo, and site-specific phosphorylation dynamics in signaling networks.</title>
        <authorList>
            <person name="Olsen J.V."/>
            <person name="Blagoev B."/>
            <person name="Gnad F."/>
            <person name="Macek B."/>
            <person name="Kumar C."/>
            <person name="Mortensen P."/>
            <person name="Mann M."/>
        </authorList>
    </citation>
    <scope>PHOSPHORYLATION [LARGE SCALE ANALYSIS] AT SER-569</scope>
    <scope>IDENTIFICATION BY MASS SPECTROMETRY [LARGE SCALE ANALYSIS]</scope>
    <source>
        <tissue>Cervix carcinoma</tissue>
    </source>
</reference>
<reference key="35">
    <citation type="journal article" date="2006" name="EMBO Rep.">
        <title>c-Abl acetylation by histone acetyltransferases regulates its nuclear-cytoplasmic localization.</title>
        <authorList>
            <person name="di Bari M.G."/>
            <person name="Ciuffini L."/>
            <person name="Mingardi M."/>
            <person name="Testi R."/>
            <person name="Soddu S."/>
            <person name="Barila D."/>
        </authorList>
    </citation>
    <scope>ACETYLATION AT LYS-711</scope>
    <scope>SUBCELLULAR LOCATION</scope>
</reference>
<reference key="36">
    <citation type="journal article" date="2006" name="J. Biol. Chem.">
        <title>Src family kinases phosphorylate the Bcr-Abl SH3-SH2 region and modulate Bcr-Abl transforming activity.</title>
        <authorList>
            <person name="Meyn M.A. III"/>
            <person name="Wilson M.B."/>
            <person name="Abdi F.A."/>
            <person name="Fahey N."/>
            <person name="Schiavone A.P."/>
            <person name="Wu J."/>
            <person name="Hochrein J.M."/>
            <person name="Engen J.R."/>
            <person name="Smithgall T.E."/>
        </authorList>
    </citation>
    <scope>PHOSPHORYLATION AT TYR-70; TYR-115; TYR-128; TYR-139; TYR-172; TYR-185 TYR-215; TYR-226 AND TYR-393</scope>
    <scope>INTERACTION WITH HCK; LYN AND FYN</scope>
    <scope>IDENTIFICATION BY MASS SPECTROMETRY</scope>
</reference>
<reference key="37">
    <citation type="journal article" date="2006" name="J. Biol. Chem.">
        <title>Abl tyrosine kinase regulates endocytosis of the epidermal growth factor receptor.</title>
        <authorList>
            <person name="Tanos B."/>
            <person name="Pendergast A.M."/>
        </authorList>
    </citation>
    <scope>FUNCTION</scope>
</reference>
<reference key="38">
    <citation type="journal article" date="2006" name="Mol. Cell">
        <title>Interaction between c-Abl and Arg tyrosine kinases and proteasome subunit PSMA7 regulates proteasome degradation.</title>
        <authorList>
            <person name="Liu X."/>
            <person name="Huang W."/>
            <person name="Li C."/>
            <person name="Li P."/>
            <person name="Yuan J."/>
            <person name="Li X."/>
            <person name="Qiu X.B."/>
            <person name="Ma Q."/>
            <person name="Cao C."/>
        </authorList>
    </citation>
    <scope>FUNCTION</scope>
    <scope>INTERACTION WITH PSMA7</scope>
</reference>
<reference key="39">
    <citation type="journal article" date="2007" name="Curr. Biol.">
        <title>A critical role for cortactin phosphorylation by Abl-family kinases in PDGF-induced dorsal-wave formation.</title>
        <authorList>
            <person name="Boyle S.N."/>
            <person name="Michaud G.A."/>
            <person name="Schweitzer B."/>
            <person name="Predki P.F."/>
            <person name="Koleske A.J."/>
        </authorList>
    </citation>
    <scope>FUNCTION</scope>
</reference>
<reference key="40">
    <citation type="journal article" date="2007" name="J. Biol. Chem.">
        <title>c-Abl-mediated phosphorylation of WAVE3 is required for lamellipodia formation and cell migration.</title>
        <authorList>
            <person name="Sossey-Alaoui K."/>
            <person name="Li X."/>
            <person name="Cowell J.K."/>
        </authorList>
    </citation>
    <scope>FUNCTION</scope>
    <scope>SUBCELLULAR LOCATION</scope>
    <scope>INTERACTION WITH WASF3</scope>
</reference>
<reference key="41">
    <citation type="journal article" date="2008" name="Biochemistry">
        <title>Phosphorylation of c-Abl by protein kinase Pak2 regulates differential binding of ABI2 and CRK.</title>
        <authorList>
            <person name="Jung J.H."/>
            <person name="Pendergast A.M."/>
            <person name="Zipfel P.A."/>
            <person name="Traugh J.A."/>
        </authorList>
    </citation>
    <scope>PHOSPHORYLATION AT SER-618 AND SER-619</scope>
    <scope>INTERACTION WITH ABI2 AND CRK</scope>
</reference>
<reference key="42">
    <citation type="journal article" date="2008" name="Biochim. Biophys. Acta">
        <title>Allosteric inhibition of the nonMyristoylated c-Abl tyrosine kinase by phosphopeptides derived from Abi1/Hssh3bp1.</title>
        <authorList>
            <person name="Xiong X."/>
            <person name="Cui P."/>
            <person name="Hossain S."/>
            <person name="Xu R."/>
            <person name="Warner B."/>
            <person name="Guo X."/>
            <person name="An X."/>
            <person name="Debnath A.K."/>
            <person name="Cowburn D."/>
            <person name="Kotula L."/>
        </authorList>
    </citation>
    <scope>FUNCTION</scope>
    <scope>ACTIVITY REGULATION</scope>
</reference>
<reference key="43">
    <citation type="journal article" date="2008" name="J. Biol. Chem.">
        <title>Abl kinases regulate autophagy by promoting the trafficking and function of lysosomal components.</title>
        <authorList>
            <person name="Yogalingam G."/>
            <person name="Pendergast A.M."/>
        </authorList>
    </citation>
    <scope>FUNCTION</scope>
</reference>
<reference key="44">
    <citation type="journal article" date="2008" name="J. Mol. Biol.">
        <title>Tyrosine phosphorylation in the SH3 domain disrupts negative regulatory interactions within the c-Abl kinase core.</title>
        <authorList>
            <person name="Chen S."/>
            <person name="O'Reilly L.P."/>
            <person name="Smithgall T.E."/>
            <person name="Engen J.R."/>
        </authorList>
    </citation>
    <scope>PHOSPHORYLATION AT TYR-70</scope>
    <scope>INTERACTION WITH ABI1</scope>
</reference>
<reference key="45">
    <citation type="journal article" date="2008" name="Mol. Cell">
        <title>Kinase-selective enrichment enables quantitative phosphoproteomics of the kinome across the cell cycle.</title>
        <authorList>
            <person name="Daub H."/>
            <person name="Olsen J.V."/>
            <person name="Bairlein M."/>
            <person name="Gnad F."/>
            <person name="Oppermann F.S."/>
            <person name="Korner R."/>
            <person name="Greff Z."/>
            <person name="Keri G."/>
            <person name="Stemmann O."/>
            <person name="Mann M."/>
        </authorList>
    </citation>
    <scope>PHOSPHORYLATION [LARGE SCALE ANALYSIS] AT SER-50; SER-569; SER-659; THR-814; THR-844 AND SER-977</scope>
    <scope>IDENTIFICATION BY MASS SPECTROMETRY [LARGE SCALE ANALYSIS]</scope>
    <source>
        <tissue>Cervix carcinoma</tissue>
    </source>
</reference>
<reference key="46">
    <citation type="journal article" date="2008" name="Proc. Natl. Acad. Sci. U.S.A.">
        <title>A quantitative atlas of mitotic phosphorylation.</title>
        <authorList>
            <person name="Dephoure N."/>
            <person name="Zhou C."/>
            <person name="Villen J."/>
            <person name="Beausoleil S.A."/>
            <person name="Bakalarski C.E."/>
            <person name="Elledge S.J."/>
            <person name="Gygi S.P."/>
        </authorList>
    </citation>
    <scope>PHOSPHORYLATION [LARGE SCALE ANALYSIS] AT SER-569; THR-852 AND SER-917</scope>
    <scope>IDENTIFICATION BY MASS SPECTROMETRY [LARGE SCALE ANALYSIS]</scope>
    <source>
        <tissue>Cervix carcinoma</tissue>
    </source>
</reference>
<reference key="47">
    <citation type="journal article" date="2008" name="Trends Biochem. Sci.">
        <title>Emerging roles of Abl family tyrosine kinases in microbial pathogenesis.</title>
        <authorList>
            <person name="Backert S."/>
            <person name="Feller S.M."/>
            <person name="Wessler S."/>
        </authorList>
    </citation>
    <scope>REVIEW ON FUNCTION</scope>
</reference>
<reference key="48">
    <citation type="journal article" date="2009" name="Anal. Chem.">
        <title>Lys-N and trypsin cover complementary parts of the phosphoproteome in a refined SCX-based approach.</title>
        <authorList>
            <person name="Gauci S."/>
            <person name="Helbig A.O."/>
            <person name="Slijper M."/>
            <person name="Krijgsveld J."/>
            <person name="Heck A.J."/>
            <person name="Mohammed S."/>
        </authorList>
    </citation>
    <scope>IDENTIFICATION BY MASS SPECTROMETRY [LARGE SCALE ANALYSIS]</scope>
</reference>
<reference key="49">
    <citation type="journal article" date="2009" name="BMC Cell Biol.">
        <title>Cbl-associated protein is tyrosine phosphorylated by c-Abl and c-Src kinases.</title>
        <authorList>
            <person name="Fernow I."/>
            <person name="Tomasovic A."/>
            <person name="Siehoff-Icking A."/>
            <person name="Tikkanen R."/>
        </authorList>
    </citation>
    <scope>FUNCTION</scope>
</reference>
<reference key="50">
    <citation type="journal article" date="2009" name="Mol. Cell. Proteomics">
        <title>Large-scale proteomics analysis of the human kinome.</title>
        <authorList>
            <person name="Oppermann F.S."/>
            <person name="Gnad F."/>
            <person name="Olsen J.V."/>
            <person name="Hornberger R."/>
            <person name="Greff Z."/>
            <person name="Keri G."/>
            <person name="Mann M."/>
            <person name="Daub H."/>
        </authorList>
    </citation>
    <scope>PHOSPHORYLATION [LARGE SCALE ANALYSIS] AT SER-569</scope>
    <scope>IDENTIFICATION BY MASS SPECTROMETRY [LARGE SCALE ANALYSIS]</scope>
</reference>
<reference key="51">
    <citation type="journal article" date="2009" name="PLoS ONE">
        <title>Unc119 protects from Shigella infection by inhibiting the Abl family kinases.</title>
        <authorList>
            <person name="Vepachedu R."/>
            <person name="Karim Z."/>
            <person name="Patel O."/>
            <person name="Goplen N."/>
            <person name="Alam R."/>
        </authorList>
    </citation>
    <scope>IDENTIFICATION IN A COMPLEX WITH UNC119; ABL2 AND CRK</scope>
</reference>
<reference key="52">
    <citation type="journal article" date="2009" name="Sci. Signal.">
        <title>Quantitative phosphoproteomic analysis of T cell receptor signaling reveals system-wide modulation of protein-protein interactions.</title>
        <authorList>
            <person name="Mayya V."/>
            <person name="Lundgren D.H."/>
            <person name="Hwang S.-I."/>
            <person name="Rezaul K."/>
            <person name="Wu L."/>
            <person name="Eng J.K."/>
            <person name="Rodionov V."/>
            <person name="Han D.K."/>
        </authorList>
    </citation>
    <scope>PHOSPHORYLATION [LARGE SCALE ANALYSIS] AT SER-50 AND SER-569</scope>
    <scope>IDENTIFICATION BY MASS SPECTROMETRY [LARGE SCALE ANALYSIS]</scope>
    <source>
        <tissue>Leukemic T-cell</tissue>
    </source>
</reference>
<reference key="53">
    <citation type="journal article" date="2010" name="Curr. Biol.">
        <title>c-Abl, Lamellipodin, and Ena/VASP proteins cooperate in dorsal ruffling of fibroblasts and axonal morphogenesis.</title>
        <authorList>
            <person name="Michael M."/>
            <person name="Vehlow A."/>
            <person name="Navarro C."/>
            <person name="Krause M."/>
        </authorList>
    </citation>
    <scope>FUNCTION</scope>
</reference>
<reference key="54">
    <citation type="journal article" date="2010" name="Mol. Biol. Cell">
        <title>Abl tyrosine kinase phosphorylates nonmuscle Myosin light chain kinase to regulate endothelial barrier function.</title>
        <authorList>
            <person name="Dudek S.M."/>
            <person name="Chiang E.T."/>
            <person name="Camp S.M."/>
            <person name="Guo Y."/>
            <person name="Zhao J."/>
            <person name="Brown M.E."/>
            <person name="Singleton P.A."/>
            <person name="Wang L."/>
            <person name="Desai A."/>
            <person name="Arce F.T."/>
            <person name="Lal R."/>
            <person name="Van Eyk J.E."/>
            <person name="Imam S.Z."/>
            <person name="Garcia J.G.N."/>
        </authorList>
    </citation>
    <scope>INTERACTION WITH MYLK AND CTTN</scope>
</reference>
<reference key="55">
    <citation type="journal article" date="2010" name="Sci. Signal.">
        <title>ABL tyrosine kinases: evolution of function, regulation, and specificity.</title>
        <authorList>
            <person name="Colicelli J."/>
        </authorList>
    </citation>
    <scope>REVIEW ON FUNCTION</scope>
    <scope>DOMAIN</scope>
</reference>
<reference key="56">
    <citation type="journal article" date="2011" name="BMC Syst. Biol.">
        <title>Initial characterization of the human central proteome.</title>
        <authorList>
            <person name="Burkard T.R."/>
            <person name="Planyavsky M."/>
            <person name="Kaupe I."/>
            <person name="Breitwieser F.P."/>
            <person name="Buerckstuemmer T."/>
            <person name="Bennett K.L."/>
            <person name="Superti-Furga G."/>
            <person name="Colinge J."/>
        </authorList>
    </citation>
    <scope>IDENTIFICATION BY MASS SPECTROMETRY [LARGE SCALE ANALYSIS]</scope>
</reference>
<reference key="57">
    <citation type="journal article" date="2012" name="Biochim. Biophys. Acta">
        <title>Tyrosine phosphorylation of a SNARE protein, Syntaxin 17: Implications for membrane trafficking in the early secretory pathway.</title>
        <authorList>
            <person name="Muppirala M."/>
            <person name="Gupta V."/>
            <person name="Swarup G."/>
        </authorList>
    </citation>
    <scope>INTERACTION WITH STX17</scope>
</reference>
<reference key="58">
    <citation type="journal article" date="2012" name="Sci. Signal.">
        <title>Abl family kinases modulate T cell-mediated inflammation and chemokine-induced migration through the adaptor HEF1 and the GTPase Rap1.</title>
        <authorList>
            <person name="Gu J.J."/>
            <person name="Lavau C.P."/>
            <person name="Pugacheva E."/>
            <person name="Soderblom E.J."/>
            <person name="Moseley M.A."/>
            <person name="Pendergast A.M."/>
        </authorList>
    </citation>
    <scope>FUNCTION</scope>
    <scope>INTERACTION WITH NEDD9</scope>
</reference>
<reference key="59">
    <citation type="journal article" date="2013" name="J. Proteome Res.">
        <title>Toward a comprehensive characterization of a human cancer cell phosphoproteome.</title>
        <authorList>
            <person name="Zhou H."/>
            <person name="Di Palma S."/>
            <person name="Preisinger C."/>
            <person name="Peng M."/>
            <person name="Polat A.N."/>
            <person name="Heck A.J."/>
            <person name="Mohammed S."/>
        </authorList>
    </citation>
    <scope>PHOSPHORYLATION [LARGE SCALE ANALYSIS] AT TYR-253; TYR-257; TYR-413; SER-559; SER-569; SER-620; SER-683; SER-718; THR-751; THR-781; THR-823; THR-844; THR-852; SER-855 AND SER-917</scope>
    <scope>IDENTIFICATION BY MASS SPECTROMETRY [LARGE SCALE ANALYSIS]</scope>
    <source>
        <tissue>Cervix carcinoma</tissue>
        <tissue>Erythroleukemia</tissue>
    </source>
</reference>
<reference key="60">
    <citation type="journal article" date="2014" name="J. Proteomics">
        <title>An enzyme assisted RP-RPLC approach for in-depth analysis of human liver phosphoproteome.</title>
        <authorList>
            <person name="Bian Y."/>
            <person name="Song C."/>
            <person name="Cheng K."/>
            <person name="Dong M."/>
            <person name="Wang F."/>
            <person name="Huang J."/>
            <person name="Sun D."/>
            <person name="Wang L."/>
            <person name="Ye M."/>
            <person name="Zou H."/>
        </authorList>
    </citation>
    <scope>PHOSPHORYLATION [LARGE SCALE ANALYSIS] AT SER-569</scope>
    <scope>IDENTIFICATION BY MASS SPECTROMETRY [LARGE SCALE ANALYSIS]</scope>
    <source>
        <tissue>Liver</tissue>
    </source>
</reference>
<reference key="61">
    <citation type="journal article" date="2017" name="Sci. Rep.">
        <title>Differential regulation of PKD isoforms in oxidative stress conditions through phosphorylation of a conserved Tyr in the P+1 loop.</title>
        <authorList>
            <person name="Cobbaut M."/>
            <person name="Derua R."/>
            <person name="Doeppler H."/>
            <person name="Lou H.J."/>
            <person name="Vandoninck S."/>
            <person name="Storz P."/>
            <person name="Turk B.E."/>
            <person name="Seufferlein T."/>
            <person name="Waelkens E."/>
            <person name="Janssens V."/>
            <person name="Van Lint J."/>
        </authorList>
    </citation>
    <scope>FUNCTION</scope>
    <scope>CATALYTIC ACTIVITY</scope>
    <scope>ACTIVITY REGULATION</scope>
</reference>
<reference key="62">
    <citation type="journal article" date="1992" name="Cell">
        <title>Three-dimensional solution structure of the src homology 2 domain of c-abl.</title>
        <authorList>
            <person name="Overduin M."/>
            <person name="Rios C.B."/>
            <person name="Mayer B.J."/>
            <person name="Baltimore D."/>
            <person name="Cowburn D."/>
        </authorList>
    </citation>
    <scope>STRUCTURE BY NMR OF SH2 DOMAIN</scope>
</reference>
<reference key="63">
    <citation type="journal article" date="1992" name="Proc. Natl. Acad. Sci. U.S.A.">
        <title>Secondary structure of Src homology 2 domain of c-Abl by heteronuclear NMR spectroscopy in solution.</title>
        <authorList>
            <person name="Overduin M."/>
            <person name="Mayer B.J."/>
            <person name="Rios C.B."/>
            <person name="Baltimore D."/>
            <person name="Cowburn D."/>
        </authorList>
    </citation>
    <scope>STRUCTURE BY NMR OF SH2 DOMAIN</scope>
</reference>
<reference key="64">
    <citation type="journal article" date="1994" name="Proteins">
        <title>Homology modeling of the Abl-SH3 domain.</title>
        <authorList>
            <person name="Pisabarro M.T."/>
            <person name="Ortiz A.R."/>
            <person name="Serrano L."/>
            <person name="Wade R.C."/>
        </authorList>
    </citation>
    <scope>3D-STRUCTURE MODELING OF SH3 DOMAIN</scope>
</reference>
<reference key="65">
    <citation type="journal article" date="1995" name="Structure">
        <title>The solution structure of Abl SH3, and its relationship to SH2 in the SH(32) construct.</title>
        <authorList>
            <person name="Gosser Y.Q."/>
            <person name="Zheng J."/>
            <person name="Overduin M."/>
            <person name="Mayer B.J."/>
            <person name="Cowburn D."/>
        </authorList>
    </citation>
    <scope>STRUCTURE BY NMR OF SH3 DOMAIN</scope>
</reference>
<reference key="66">
    <citation type="journal article" date="1998" name="J. Mol. Biol.">
        <title>Crystal structure of the abl-SH3 domain complexed with a designed high-affinity peptide ligand: implications for SH3-ligand interactions.</title>
        <authorList>
            <person name="Pisabarro M.T."/>
            <person name="Serrano L."/>
            <person name="Wilmanns M."/>
        </authorList>
    </citation>
    <scope>X-RAY CRYSTALLOGRAPHY (1.65 ANGSTROMS) OF 64-121</scope>
</reference>
<reference key="67">
    <citation type="journal article" date="2002" name="Proc. Natl. Acad. Sci. U.S.A.">
        <title>Structure of a regulatory complex involving the Abl SH3 domain, the Crk SH2 domain, and a Crk-derived phosphopeptide.</title>
        <authorList>
            <person name="Donaldson L.W."/>
            <person name="Gish G."/>
            <person name="Pawson T."/>
            <person name="Kay L.E."/>
            <person name="Forman-Kay J.D."/>
        </authorList>
    </citation>
    <scope>STRUCTURE BY NMR OF 62-122 IN COMPLEX WITH CRK</scope>
</reference>
<reference key="68">
    <citation type="journal article" date="2003" name="Cell">
        <title>Structural basis for the autoinhibition of c-Abl tyrosine kinase.</title>
        <authorList>
            <person name="Nagar B."/>
            <person name="Hantschel O."/>
            <person name="Young M.A."/>
            <person name="Scheffzek K."/>
            <person name="Veach D."/>
            <person name="Bornmann W."/>
            <person name="Clarkson B."/>
            <person name="Superti-Furga G."/>
            <person name="Kuriyan J."/>
        </authorList>
    </citation>
    <scope>X-RAY CRYSTALLOGRAPHY (3.42 ANGSTROMS) OF 27-512</scope>
    <scope>MYRISTOYLATION AT GLY-2 (ISOFORM IB)</scope>
    <scope>ACTIVITY REGULATION</scope>
    <scope>IDENTIFICATION BY MASS SPECTROMETRY</scope>
</reference>
<reference key="69">
    <citation type="journal article" date="2006" name="Cancer Res.">
        <title>Structure of the kinase domain of an imatinib-resistant Abl mutant in complex with the Aurora kinase inhibitor VX-680.</title>
        <authorList>
            <person name="Young M.A."/>
            <person name="Shah N.P."/>
            <person name="Chao L.H."/>
            <person name="Seeliger M."/>
            <person name="Milanov Z.V."/>
            <person name="Biggs W.H. III"/>
            <person name="Treiber D.K."/>
            <person name="Patel H.K."/>
            <person name="Zarrinkar P.P."/>
            <person name="Lockhart D.J."/>
            <person name="Sawyers C.L."/>
            <person name="Kuriyan J."/>
        </authorList>
    </citation>
    <scope>X-RAY CRYSTALLOGRAPHY (1.91 ANGSTROMS) OF 229-513 OF MUTANT PRO-396 IN COMPLEX WITH INHIBITOR VX-680</scope>
    <scope>FUNCTION</scope>
    <scope>ACTIVITY REGULATION</scope>
</reference>
<reference key="70">
    <citation type="journal article" date="2006" name="Mol. Cell">
        <title>Organization of the SH3-SH2 unit in active and inactive forms of the c-Abl tyrosine kinase.</title>
        <authorList>
            <person name="Nagar B."/>
            <person name="Hantschel O."/>
            <person name="Seeliger M."/>
            <person name="Davies J.M."/>
            <person name="Weis W.I."/>
            <person name="Superti-Furga G."/>
            <person name="Kuriyan J."/>
        </authorList>
    </citation>
    <scope>X-RAY CRYSTALLOGRAPHY (2.27 ANGSTROMS) OF 38-512</scope>
    <scope>IDENTIFICATION BY MASS SPECTROMETRY</scope>
    <scope>MYRISTOYLATION AT GLY-2 (ISOFORM IB)</scope>
    <scope>PHOSPHORYLATION AT SER-50</scope>
    <scope>AUTOINHIBITORY MECHANISM</scope>
    <scope>ACTIVITY REGULATION</scope>
</reference>
<reference key="71">
    <citation type="journal article" date="2006" name="PLoS Biol.">
        <title>A Src-like inactive conformation in the abl tyrosine kinase domain.</title>
        <authorList>
            <person name="Levinson N.M."/>
            <person name="Kuchment O."/>
            <person name="Shen K."/>
            <person name="Young M.A."/>
            <person name="Koldobskiy M."/>
            <person name="Karplus M."/>
            <person name="Cole P.A."/>
            <person name="Kuriyan J."/>
        </authorList>
    </citation>
    <scope>X-RAY CRYSTALLOGRAPHY (1.8 ANGSTROMS) OF 229-512 IN COMPLEXES WITH ATP-PEPTIDE CONJUGATE</scope>
    <scope>CONFORMATION CHANGES DURING ACTIVATION</scope>
</reference>
<reference key="72">
    <citation type="journal article" date="2007" name="Acta Crystallogr. D">
        <title>Structural biology contributions to the discovery of drugs to treat chronic myelogenous leukaemia.</title>
        <authorList>
            <person name="Cowan-Jacob S.W."/>
            <person name="Fendrich G."/>
            <person name="Floersheimer A."/>
            <person name="Furet P."/>
            <person name="Liebetanz J."/>
            <person name="Rummel G."/>
            <person name="Rheinberger P."/>
            <person name="Centeleghe M."/>
            <person name="Fabbro D."/>
            <person name="Manley P.W."/>
        </authorList>
    </citation>
    <scope>X-RAY CRYSTALLOGRAPHY (1.7 ANGSTROMS) OF 229-500 IN COMPLEXES WITH IMATINIB AND WITH THE INHIBITORS NVP-AEG082; NVP-AFN941; NVP-AFG210 AND PD180970</scope>
</reference>
<reference key="73">
    <citation type="journal article" date="2007" name="Acta Crystallogr. D">
        <title>Crystallization by capillary counter-diffusion and structure determination of the N114A mutant of the SH3 domain of Abl tyrosine kinase complexed with a high-affinity peptide ligand.</title>
        <authorList>
            <person name="Camara-Artigas A."/>
            <person name="Palencia A."/>
            <person name="Martinez J.C."/>
            <person name="Luque I."/>
            <person name="Gavira J.A."/>
            <person name="Garcia-Ruiz J.M."/>
        </authorList>
    </citation>
    <scope>X-RAY CRYSTALLOGRAPHY (1.75 ANGSTROMS) OF 64-121 OF MUTANT ALA-114 IN COMPLEX WITH PROLINE-RICH PEPTIDE</scope>
</reference>
<reference key="74">
    <citation type="journal article" date="2010" name="J. Biol. Chem.">
        <title>Role of interfacial water molecules in proline-rich ligand recognition by the Src homology 3 domain of Abl.</title>
        <authorList>
            <person name="Palencia A."/>
            <person name="Camara-Artigas A."/>
            <person name="Pisabarro M.T."/>
            <person name="Martinez J.C."/>
            <person name="Luque I."/>
        </authorList>
    </citation>
    <scope>X-RAY CRYSTALLOGRAPHY (1.4 ANGSTROMS) OF 60-121 IN COMPLEX WITH PROLINE-RICH PEPTIDE P41</scope>
</reference>
<reference key="75">
    <citation type="journal article" date="2010" name="Nat. Struct. Mol. Biol.">
        <title>A potent and highly specific FN3 monobody inhibitor of the Abl SH2 domain.</title>
        <authorList>
            <person name="Wojcik J."/>
            <person name="Hantschel O."/>
            <person name="Grebien F."/>
            <person name="Kaupe I."/>
            <person name="Bennett K.L."/>
            <person name="Barkinge J."/>
            <person name="Jones R.B."/>
            <person name="Koide A."/>
            <person name="Superti-Furga G."/>
            <person name="Koide S."/>
        </authorList>
    </citation>
    <scope>X-RAY CRYSTALLOGRAPHY (1.75 ANGSTROMS) OF 121-232 IN COMPLEX WITH ANTIBODY MIMIC HA4</scope>
    <scope>FUNCTION</scope>
    <scope>CATALYTIC ACTIVITY</scope>
</reference>
<reference key="76">
    <citation type="journal article" date="2004" name="Nat. Genet.">
        <title>Fusion of NUP214 to ABL1 on amplified episomes in T-cell acute lymphoblastic leukemia.</title>
        <authorList>
            <person name="Graux C."/>
            <person name="Cools J."/>
            <person name="Melotte C."/>
            <person name="Quentmeier H."/>
            <person name="Ferrando A."/>
            <person name="Levine R."/>
            <person name="Vermeesch J.R."/>
            <person name="Stul M."/>
            <person name="Dutta B."/>
            <person name="Boeckx N."/>
            <person name="Bosly A."/>
            <person name="Heimann P."/>
            <person name="Uyttebroeck A."/>
            <person name="Mentens N."/>
            <person name="Somers R."/>
            <person name="MacLeod R.A."/>
            <person name="Drexler H.G."/>
            <person name="Look A.T."/>
            <person name="Gilliland D.G."/>
            <person name="Michaux L."/>
            <person name="Vandenberghe P."/>
            <person name="Wlodarska I."/>
            <person name="Marynen P."/>
            <person name="Hagemeijer A."/>
        </authorList>
    </citation>
    <scope>DISEASE</scope>
    <scope>CHROMOSOMAL TRANSLOCATION WITH NUP214</scope>
</reference>
<reference key="77">
    <citation type="journal article" date="2007" name="Nature">
        <title>Patterns of somatic mutation in human cancer genomes.</title>
        <authorList>
            <person name="Greenman C."/>
            <person name="Stephens P."/>
            <person name="Smith R."/>
            <person name="Dalgliesh G.L."/>
            <person name="Hunter C."/>
            <person name="Bignell G."/>
            <person name="Davies H."/>
            <person name="Teague J."/>
            <person name="Butler A."/>
            <person name="Stevens C."/>
            <person name="Edkins S."/>
            <person name="O'Meara S."/>
            <person name="Vastrik I."/>
            <person name="Schmidt E.E."/>
            <person name="Avis T."/>
            <person name="Barthorpe S."/>
            <person name="Bhamra G."/>
            <person name="Buck G."/>
            <person name="Choudhury B."/>
            <person name="Clements J."/>
            <person name="Cole J."/>
            <person name="Dicks E."/>
            <person name="Forbes S."/>
            <person name="Gray K."/>
            <person name="Halliday K."/>
            <person name="Harrison R."/>
            <person name="Hills K."/>
            <person name="Hinton J."/>
            <person name="Jenkinson A."/>
            <person name="Jones D."/>
            <person name="Menzies A."/>
            <person name="Mironenko T."/>
            <person name="Perry J."/>
            <person name="Raine K."/>
            <person name="Richardson D."/>
            <person name="Shepherd R."/>
            <person name="Small A."/>
            <person name="Tofts C."/>
            <person name="Varian J."/>
            <person name="Webb T."/>
            <person name="West S."/>
            <person name="Widaa S."/>
            <person name="Yates A."/>
            <person name="Cahill D.P."/>
            <person name="Louis D.N."/>
            <person name="Goldstraw P."/>
            <person name="Nicholson A.G."/>
            <person name="Brasseur F."/>
            <person name="Looijenga L."/>
            <person name="Weber B.L."/>
            <person name="Chiew Y.-E."/>
            <person name="DeFazio A."/>
            <person name="Greaves M.F."/>
            <person name="Green A.R."/>
            <person name="Campbell P."/>
            <person name="Birney E."/>
            <person name="Easton D.F."/>
            <person name="Chenevix-Trench G."/>
            <person name="Tan M.-H."/>
            <person name="Khoo S.K."/>
            <person name="Teh B.T."/>
            <person name="Yuen S.T."/>
            <person name="Leung S.Y."/>
            <person name="Wooster R."/>
            <person name="Futreal P.A."/>
            <person name="Stratton M.R."/>
        </authorList>
    </citation>
    <scope>VARIANTS GLY-47; LYS-166; VAL-706; LEU-810 AND LEU-972</scope>
</reference>
<reference key="78">
    <citation type="journal article" date="2017" name="Nat. Genet.">
        <title>Germline mutations in ABL1 cause an autosomal dominant syndrome characterized by congenital heart defects and skeletal malformations.</title>
        <authorList>
            <person name="Wang X."/>
            <person name="Charng W.L."/>
            <person name="Chen C.A."/>
            <person name="Rosenfeld J.A."/>
            <person name="Al Shamsi A."/>
            <person name="Al-Gazali L."/>
            <person name="McGuire M."/>
            <person name="Mew N.A."/>
            <person name="Arnold G.L."/>
            <person name="Qu C."/>
            <person name="Ding Y."/>
            <person name="Muzny D.M."/>
            <person name="Gibbs R.A."/>
            <person name="Eng C.M."/>
            <person name="Walkiewicz M."/>
            <person name="Xia F."/>
            <person name="Plon S.E."/>
            <person name="Lupski J.R."/>
            <person name="Schaaf C.P."/>
            <person name="Yang Y."/>
        </authorList>
    </citation>
    <scope>INVOLVEMENT IN CHDSKM</scope>
    <scope>VARIANTS CHDSKM CYS-226 AND THR-337</scope>
    <scope>CHARACTERIZATION OF VARIANTS CHDSKM CYS-226 AND THR-337</scope>
</reference>
<proteinExistence type="evidence at protein level"/>
<protein>
    <recommendedName>
        <fullName>Tyrosine-protein kinase ABL1</fullName>
        <ecNumber evidence="44 50">2.7.10.2</ecNumber>
    </recommendedName>
    <alternativeName>
        <fullName>Abelson murine leukemia viral oncogene homolog 1</fullName>
    </alternativeName>
    <alternativeName>
        <fullName>Abelson tyrosine-protein kinase 1</fullName>
    </alternativeName>
    <alternativeName>
        <fullName>Proto-oncogene c-Abl</fullName>
    </alternativeName>
    <alternativeName>
        <fullName>p150</fullName>
    </alternativeName>
</protein>
<feature type="chain" id="PRO_0000088050" description="Tyrosine-protein kinase ABL1">
    <location>
        <begin position="1"/>
        <end position="1130"/>
    </location>
</feature>
<feature type="domain" description="SH3" evidence="7">
    <location>
        <begin position="61"/>
        <end position="121"/>
    </location>
</feature>
<feature type="domain" description="SH2" evidence="6">
    <location>
        <begin position="127"/>
        <end position="217"/>
    </location>
</feature>
<feature type="domain" description="Protein kinase" evidence="5">
    <location>
        <begin position="242"/>
        <end position="493"/>
    </location>
</feature>
<feature type="region of interest" description="CAP">
    <location>
        <begin position="1"/>
        <end position="60"/>
    </location>
</feature>
<feature type="region of interest" description="Disordered" evidence="9">
    <location>
        <begin position="518"/>
        <end position="996"/>
    </location>
</feature>
<feature type="region of interest" description="DNA-binding" evidence="1">
    <location>
        <begin position="869"/>
        <end position="968"/>
    </location>
</feature>
<feature type="region of interest" description="F-actin-binding">
    <location>
        <begin position="953"/>
        <end position="1130"/>
    </location>
</feature>
<feature type="short sequence motif" description="Kinase activation loop">
    <location>
        <begin position="381"/>
        <end position="405"/>
    </location>
</feature>
<feature type="short sequence motif" description="Nuclear localization signal 1" evidence="4">
    <location>
        <begin position="605"/>
        <end position="609"/>
    </location>
</feature>
<feature type="short sequence motif" description="Nuclear localization signal 2" evidence="4">
    <location>
        <begin position="709"/>
        <end position="715"/>
    </location>
</feature>
<feature type="short sequence motif" description="Nuclear localization signal 3" evidence="4">
    <location>
        <begin position="762"/>
        <end position="769"/>
    </location>
</feature>
<feature type="short sequence motif" description="Nuclear export signal" evidence="1">
    <location>
        <begin position="1090"/>
        <end position="1100"/>
    </location>
</feature>
<feature type="compositionally biased region" description="Basic and acidic residues" evidence="9">
    <location>
        <begin position="537"/>
        <end position="566"/>
    </location>
</feature>
<feature type="compositionally biased region" description="Basic and acidic residues" evidence="9">
    <location>
        <begin position="586"/>
        <end position="597"/>
    </location>
</feature>
<feature type="compositionally biased region" description="Basic and acidic residues" evidence="9">
    <location>
        <begin position="620"/>
        <end position="640"/>
    </location>
</feature>
<feature type="compositionally biased region" description="Polar residues" evidence="9">
    <location>
        <begin position="689"/>
        <end position="698"/>
    </location>
</feature>
<feature type="compositionally biased region" description="Polar residues" evidence="9">
    <location>
        <begin position="740"/>
        <end position="752"/>
    </location>
</feature>
<feature type="compositionally biased region" description="Basic and acidic residues" evidence="9">
    <location>
        <begin position="755"/>
        <end position="774"/>
    </location>
</feature>
<feature type="compositionally biased region" description="Basic and acidic residues" evidence="9">
    <location>
        <begin position="788"/>
        <end position="802"/>
    </location>
</feature>
<feature type="compositionally biased region" description="Basic and acidic residues" evidence="9">
    <location>
        <begin position="881"/>
        <end position="891"/>
    </location>
</feature>
<feature type="compositionally biased region" description="Low complexity" evidence="9">
    <location>
        <begin position="905"/>
        <end position="915"/>
    </location>
</feature>
<feature type="compositionally biased region" description="Polar residues" evidence="9">
    <location>
        <begin position="965"/>
        <end position="975"/>
    </location>
</feature>
<feature type="compositionally biased region" description="Low complexity" evidence="9">
    <location>
        <begin position="984"/>
        <end position="993"/>
    </location>
</feature>
<feature type="active site" description="Proton acceptor" evidence="5 8">
    <location>
        <position position="363"/>
    </location>
</feature>
<feature type="binding site">
    <location>
        <begin position="248"/>
        <end position="256"/>
    </location>
    <ligand>
        <name>ATP</name>
        <dbReference type="ChEBI" id="CHEBI:30616"/>
    </ligand>
</feature>
<feature type="binding site">
    <location>
        <position position="271"/>
    </location>
    <ligand>
        <name>ATP</name>
        <dbReference type="ChEBI" id="CHEBI:30616"/>
    </ligand>
</feature>
<feature type="binding site">
    <location>
        <begin position="316"/>
        <end position="322"/>
    </location>
    <ligand>
        <name>ATP</name>
        <dbReference type="ChEBI" id="CHEBI:30616"/>
    </ligand>
</feature>
<feature type="site" description="Breakpoint for translocation to form BCR-ABL and NUP214-ABL1 fusion proteins" evidence="22 51">
    <location>
        <begin position="26"/>
        <end position="27"/>
    </location>
</feature>
<feature type="modified residue" description="Phosphoserine" evidence="28 60 62">
    <location>
        <position position="50"/>
    </location>
</feature>
<feature type="modified residue" description="Phosphotyrosine; by autocatalysis" evidence="31 39">
    <location>
        <position position="70"/>
    </location>
</feature>
<feature type="modified residue" description="Phosphotyrosine" evidence="31">
    <location>
        <position position="115"/>
    </location>
</feature>
<feature type="modified residue" description="Phosphotyrosine" evidence="31">
    <location>
        <position position="128"/>
    </location>
</feature>
<feature type="modified residue" description="Phosphotyrosine" evidence="31">
    <location>
        <position position="139"/>
    </location>
</feature>
<feature type="modified residue" description="Phosphotyrosine" evidence="31">
    <location>
        <position position="172"/>
    </location>
</feature>
<feature type="modified residue" description="Phosphotyrosine" evidence="31">
    <location>
        <position position="185"/>
    </location>
</feature>
<feature type="modified residue" description="Phosphotyrosine" evidence="31">
    <location>
        <position position="215"/>
    </location>
</feature>
<feature type="modified residue" description="Phosphotyrosine; by autocatalysis" evidence="31">
    <location>
        <position position="226"/>
    </location>
</feature>
<feature type="modified residue" description="Phosphoserine" evidence="3">
    <location>
        <position position="229"/>
    </location>
</feature>
<feature type="modified residue" description="Phosphotyrosine" evidence="63">
    <location>
        <position position="253"/>
    </location>
</feature>
<feature type="modified residue" description="Phosphotyrosine" evidence="63">
    <location>
        <position position="257"/>
    </location>
</feature>
<feature type="modified residue" description="Phosphotyrosine; by autocatalysis and SRC-type Tyr-kinases" evidence="31">
    <location>
        <position position="393"/>
    </location>
</feature>
<feature type="modified residue" description="Phosphotyrosine" evidence="63">
    <location>
        <position position="413"/>
    </location>
</feature>
<feature type="modified residue" description="Phosphoserine" evidence="2">
    <location>
        <position position="446"/>
    </location>
</feature>
<feature type="modified residue" description="Phosphoserine" evidence="63">
    <location>
        <position position="559"/>
    </location>
</feature>
<feature type="modified residue" description="Phosphoserine" evidence="58 59 60 61 62 63 64">
    <location>
        <position position="569"/>
    </location>
</feature>
<feature type="modified residue" description="Phosphoserine; by PAK2" evidence="37">
    <location>
        <position position="618"/>
    </location>
</feature>
<feature type="modified residue" description="Phosphoserine; by PAK2" evidence="37">
    <location>
        <position position="619"/>
    </location>
</feature>
<feature type="modified residue" description="Phosphoserine" evidence="63">
    <location>
        <position position="620"/>
    </location>
</feature>
<feature type="modified residue" description="Phosphoserine" evidence="60">
    <location>
        <position position="659"/>
    </location>
</feature>
<feature type="modified residue" description="Phosphoserine" evidence="63">
    <location>
        <position position="683"/>
    </location>
</feature>
<feature type="modified residue" description="N6-acetyllysine; by EP300" evidence="29">
    <location>
        <position position="711"/>
    </location>
</feature>
<feature type="modified residue" description="Phosphoserine" evidence="63">
    <location>
        <position position="718"/>
    </location>
</feature>
<feature type="modified residue" description="Phosphothreonine" evidence="25">
    <location>
        <position position="735"/>
    </location>
</feature>
<feature type="modified residue" description="Phosphothreonine" evidence="63">
    <location>
        <position position="751"/>
    </location>
</feature>
<feature type="modified residue" description="Phosphothreonine" evidence="63">
    <location>
        <position position="781"/>
    </location>
</feature>
<feature type="modified residue" description="Phosphothreonine" evidence="60">
    <location>
        <position position="814"/>
    </location>
</feature>
<feature type="modified residue" description="Phosphothreonine" evidence="63">
    <location>
        <position position="823"/>
    </location>
</feature>
<feature type="modified residue" description="Phosphothreonine" evidence="60 63">
    <location>
        <position position="844"/>
    </location>
</feature>
<feature type="modified residue" description="Phosphothreonine" evidence="59 63">
    <location>
        <position position="852"/>
    </location>
</feature>
<feature type="modified residue" description="Phosphoserine" evidence="63">
    <location>
        <position position="855"/>
    </location>
</feature>
<feature type="modified residue" description="Phosphoserine" evidence="59 63">
    <location>
        <position position="917"/>
    </location>
</feature>
<feature type="modified residue" description="Phosphoserine" evidence="60">
    <location>
        <position position="977"/>
    </location>
</feature>
<feature type="splice variant" id="VSP_004957" description="In isoform IB." evidence="56">
    <original>MLEICLKLVGCKSKKGLSSSSSCYLE</original>
    <variation>MGQQPGKVLGDQRRPSLPALHFIKGAGKKESSRHGGPHCNVFVEH</variation>
    <location>
        <begin position="1"/>
        <end position="26"/>
    </location>
</feature>
<feature type="sequence variant" id="VAR_032676" description="In a lung large cell carcinoma sample; somatic mutation." evidence="34">
    <original>R</original>
    <variation>G</variation>
    <location>
        <position position="47"/>
    </location>
</feature>
<feature type="sequence variant" id="VAR_051692" description="In dbSNP:rs1064152." evidence="51">
    <original>L</original>
    <variation>P</variation>
    <location>
        <position position="140"/>
    </location>
</feature>
<feature type="sequence variant" id="VAR_032677" description="In a melanoma sample; somatic mutation; dbSNP:rs2132958430." evidence="34">
    <original>R</original>
    <variation>K</variation>
    <location>
        <position position="166"/>
    </location>
</feature>
<feature type="sequence variant" id="VAR_079482" description="In CHDSKM; increases kinase activity; no effect on protein levels; dbSNP:rs1060499547." evidence="49">
    <original>Y</original>
    <variation>C</variation>
    <location>
        <position position="226"/>
    </location>
</feature>
<feature type="sequence variant" id="VAR_051693" description="In dbSNP:rs34549764.">
    <original>K</original>
    <variation>R</variation>
    <location>
        <position position="247"/>
    </location>
</feature>
<feature type="sequence variant" id="VAR_079483" description="In CHDSKM; increases kinase activity; no effect on protein levels; dbSNP:rs1060499548." evidence="49">
    <original>A</original>
    <variation>T</variation>
    <location>
        <position position="337"/>
    </location>
</feature>
<feature type="sequence variant" id="VAR_025043" description="In dbSNP:rs34634745." evidence="34 55">
    <original>G</original>
    <variation>V</variation>
    <location>
        <position position="706"/>
    </location>
</feature>
<feature type="sequence variant" id="VAR_032678" description="In dbSNP:rs2229071." evidence="34">
    <original>P</original>
    <variation>L</variation>
    <location>
        <position position="810"/>
    </location>
</feature>
<feature type="sequence variant" id="VAR_025044" description="In dbSNP:rs1588283506." evidence="55">
    <original>T</original>
    <variation>P</variation>
    <location>
        <position position="852"/>
    </location>
</feature>
<feature type="sequence variant" id="VAR_025045" description="In dbSNP:rs35266696." evidence="55">
    <original>P</original>
    <variation>S</variation>
    <location>
        <position position="900"/>
    </location>
</feature>
<feature type="sequence variant" id="VAR_051694" description="In dbSNP:rs1064165.">
    <original>S</original>
    <variation>P</variation>
    <location>
        <position position="968"/>
    </location>
</feature>
<feature type="sequence variant" id="VAR_025046" description="In dbSNP:rs2229067." evidence="34 55">
    <original>S</original>
    <variation>L</variation>
    <location>
        <position position="972"/>
    </location>
</feature>
<feature type="mutagenesis site" description="Abolishes phosphorylation. Loss of binding YWHAS and YWHAZ. Localizes to the nucleus. No effect on kinase activity." evidence="25">
    <original>T</original>
    <variation>A</variation>
    <location>
        <position position="735"/>
    </location>
</feature>
<feature type="sequence conflict" description="In Ref. 1; AAA51561." evidence="57" ref="1">
    <original>G</original>
    <variation>S</variation>
    <location>
        <position position="159"/>
    </location>
</feature>
<feature type="sequence conflict" description="In Ref. 9." evidence="57" ref="9">
    <original>AF</original>
    <variation>GK</variation>
    <location>
        <begin position="424"/>
        <end position="425"/>
    </location>
</feature>
<feature type="sequence conflict" description="In Ref. 1; AAA51561." evidence="57" ref="1">
    <original>L</original>
    <variation>R</variation>
    <location>
        <position position="445"/>
    </location>
</feature>
<feature type="sequence conflict" description="In Ref. 1; AAA51561." evidence="57" ref="1">
    <original>E</original>
    <variation>K</variation>
    <location>
        <position position="459"/>
    </location>
</feature>
<feature type="sequence conflict" description="In Ref. 1; AAA51561." evidence="57" ref="1">
    <original>S</original>
    <variation>T</variation>
    <location>
        <position position="520"/>
    </location>
</feature>
<feature type="sequence conflict" description="In Ref. 1; AAA51561." evidence="57" ref="1">
    <original>A</original>
    <variation>V</variation>
    <location>
        <position position="719"/>
    </location>
</feature>
<feature type="sequence conflict" description="In Ref. 2; CAA34438." evidence="57" ref="2">
    <original>G</original>
    <variation>E</variation>
    <location>
        <position position="837"/>
    </location>
</feature>
<feature type="sequence conflict" description="In Ref. 1; AAA51561." evidence="57" ref="1">
    <original>G</original>
    <variation>W</variation>
    <location>
        <position position="837"/>
    </location>
</feature>
<feature type="sequence conflict" description="In Ref. 1; AAA51561." evidence="57" ref="1">
    <original>G</original>
    <variation>R</variation>
    <location>
        <position position="863"/>
    </location>
</feature>
<feature type="sequence conflict" description="In Ref. 1; AAA51561." evidence="57" ref="1">
    <original>R</original>
    <variation>K</variation>
    <location>
        <position position="894"/>
    </location>
</feature>
<feature type="sequence conflict" description="In Ref. 1; AAA51561." evidence="57" ref="1">
    <original>SPS</original>
    <variation>RPG</variation>
    <location>
        <begin position="917"/>
        <end position="919"/>
    </location>
</feature>
<feature type="sequence conflict" description="In Ref. 1; AAA51561." evidence="57" ref="1">
    <original>G</original>
    <variation>A</variation>
    <location>
        <position position="952"/>
    </location>
</feature>
<feature type="sequence conflict" description="In Ref. 1; AAA51561." evidence="57" ref="1">
    <original>QS</original>
    <variation>HP</variation>
    <location>
        <begin position="967"/>
        <end position="968"/>
    </location>
</feature>
<feature type="sequence conflict" description="In Ref. 1; AAA51561." evidence="57" ref="1">
    <original>P</original>
    <variation>PL</variation>
    <location>
        <position position="982"/>
    </location>
</feature>
<feature type="sequence conflict" description="In Ref. 1; AAA51561." evidence="57" ref="1">
    <location>
        <position position="1022"/>
    </location>
</feature>
<feature type="sequence conflict" description="In Ref. 1; AAA51561." evidence="57" ref="1">
    <original>R</original>
    <variation>G</variation>
    <location>
        <position position="1045"/>
    </location>
</feature>
<feature type="sequence conflict" description="In Ref. 1; AAA51561." evidence="57" ref="1">
    <original>T</original>
    <variation>S</variation>
    <location>
        <position position="1103"/>
    </location>
</feature>
<feature type="strand" evidence="80">
    <location>
        <begin position="26"/>
        <end position="32"/>
    </location>
</feature>
<feature type="strand" evidence="80">
    <location>
        <begin position="39"/>
        <end position="44"/>
    </location>
</feature>
<feature type="turn" evidence="80">
    <location>
        <begin position="45"/>
        <end position="47"/>
    </location>
</feature>
<feature type="helix" evidence="68">
    <location>
        <begin position="49"/>
        <end position="53"/>
    </location>
</feature>
<feature type="helix" evidence="68">
    <location>
        <begin position="58"/>
        <end position="60"/>
    </location>
</feature>
<feature type="strand" evidence="79">
    <location>
        <begin position="65"/>
        <end position="70"/>
    </location>
</feature>
<feature type="strand" evidence="81">
    <location>
        <begin position="76"/>
        <end position="79"/>
    </location>
</feature>
<feature type="strand" evidence="79">
    <location>
        <begin position="87"/>
        <end position="93"/>
    </location>
</feature>
<feature type="strand" evidence="79">
    <location>
        <begin position="97"/>
        <end position="104"/>
    </location>
</feature>
<feature type="strand" evidence="79">
    <location>
        <begin position="107"/>
        <end position="112"/>
    </location>
</feature>
<feature type="helix" evidence="79">
    <location>
        <begin position="113"/>
        <end position="115"/>
    </location>
</feature>
<feature type="strand" evidence="79">
    <location>
        <begin position="116"/>
        <end position="118"/>
    </location>
</feature>
<feature type="helix" evidence="76">
    <location>
        <begin position="122"/>
        <end position="124"/>
    </location>
</feature>
<feature type="strand" evidence="76">
    <location>
        <begin position="128"/>
        <end position="131"/>
    </location>
</feature>
<feature type="helix" evidence="76">
    <location>
        <begin position="134"/>
        <end position="140"/>
    </location>
</feature>
<feature type="turn" evidence="76">
    <location>
        <begin position="141"/>
        <end position="143"/>
    </location>
</feature>
<feature type="strand" evidence="76">
    <location>
        <begin position="148"/>
        <end position="153"/>
    </location>
</feature>
<feature type="strand" evidence="76">
    <location>
        <begin position="155"/>
        <end position="157"/>
    </location>
</feature>
<feature type="strand" evidence="76">
    <location>
        <begin position="161"/>
        <end position="167"/>
    </location>
</feature>
<feature type="strand" evidence="76">
    <location>
        <begin position="170"/>
        <end position="175"/>
    </location>
</feature>
<feature type="strand" evidence="75">
    <location>
        <begin position="177"/>
        <end position="179"/>
    </location>
</feature>
<feature type="turn" evidence="75">
    <location>
        <begin position="180"/>
        <end position="182"/>
    </location>
</feature>
<feature type="strand" evidence="76">
    <location>
        <begin position="184"/>
        <end position="187"/>
    </location>
</feature>
<feature type="strand" evidence="76">
    <location>
        <begin position="190"/>
        <end position="194"/>
    </location>
</feature>
<feature type="helix" evidence="76">
    <location>
        <begin position="195"/>
        <end position="202"/>
    </location>
</feature>
<feature type="strand" evidence="76">
    <location>
        <begin position="209"/>
        <end position="211"/>
    </location>
</feature>
<feature type="strand" evidence="78">
    <location>
        <begin position="226"/>
        <end position="228"/>
    </location>
</feature>
<feature type="strand" evidence="72">
    <location>
        <begin position="229"/>
        <end position="231"/>
    </location>
</feature>
<feature type="turn" evidence="69">
    <location>
        <begin position="233"/>
        <end position="235"/>
    </location>
</feature>
<feature type="helix" evidence="77">
    <location>
        <begin position="239"/>
        <end position="241"/>
    </location>
</feature>
<feature type="strand" evidence="77">
    <location>
        <begin position="242"/>
        <end position="247"/>
    </location>
</feature>
<feature type="helix" evidence="77">
    <location>
        <begin position="248"/>
        <end position="251"/>
    </location>
</feature>
<feature type="strand" evidence="77">
    <location>
        <begin position="254"/>
        <end position="261"/>
    </location>
</feature>
<feature type="helix" evidence="77">
    <location>
        <begin position="262"/>
        <end position="264"/>
    </location>
</feature>
<feature type="strand" evidence="77">
    <location>
        <begin position="266"/>
        <end position="271"/>
    </location>
</feature>
<feature type="turn" evidence="77">
    <location>
        <begin position="275"/>
        <end position="277"/>
    </location>
</feature>
<feature type="helix" evidence="77">
    <location>
        <begin position="280"/>
        <end position="290"/>
    </location>
</feature>
<feature type="strand" evidence="77">
    <location>
        <begin position="301"/>
        <end position="305"/>
    </location>
</feature>
<feature type="strand" evidence="77">
    <location>
        <begin position="307"/>
        <end position="310"/>
    </location>
</feature>
<feature type="strand" evidence="77">
    <location>
        <begin position="312"/>
        <end position="316"/>
    </location>
</feature>
<feature type="strand" evidence="73">
    <location>
        <begin position="319"/>
        <end position="322"/>
    </location>
</feature>
<feature type="helix" evidence="77">
    <location>
        <begin position="323"/>
        <end position="329"/>
    </location>
</feature>
<feature type="turn" evidence="77">
    <location>
        <begin position="332"/>
        <end position="334"/>
    </location>
</feature>
<feature type="helix" evidence="77">
    <location>
        <begin position="337"/>
        <end position="356"/>
    </location>
</feature>
<feature type="strand" evidence="71">
    <location>
        <begin position="359"/>
        <end position="361"/>
    </location>
</feature>
<feature type="helix" evidence="77">
    <location>
        <begin position="366"/>
        <end position="368"/>
    </location>
</feature>
<feature type="strand" evidence="77">
    <location>
        <begin position="369"/>
        <end position="371"/>
    </location>
</feature>
<feature type="helix" evidence="77">
    <location>
        <begin position="373"/>
        <end position="375"/>
    </location>
</feature>
<feature type="strand" evidence="77">
    <location>
        <begin position="377"/>
        <end position="379"/>
    </location>
</feature>
<feature type="helix" evidence="70">
    <location>
        <begin position="381"/>
        <end position="383"/>
    </location>
</feature>
<feature type="helix" evidence="69">
    <location>
        <begin position="384"/>
        <end position="387"/>
    </location>
</feature>
<feature type="helix" evidence="69">
    <location>
        <begin position="390"/>
        <end position="392"/>
    </location>
</feature>
<feature type="strand" evidence="74">
    <location>
        <begin position="393"/>
        <end position="396"/>
    </location>
</feature>
<feature type="strand" evidence="77">
    <location>
        <begin position="399"/>
        <end position="401"/>
    </location>
</feature>
<feature type="helix" evidence="77">
    <location>
        <begin position="403"/>
        <end position="405"/>
    </location>
</feature>
<feature type="helix" evidence="77">
    <location>
        <begin position="408"/>
        <end position="413"/>
    </location>
</feature>
<feature type="helix" evidence="77">
    <location>
        <begin position="418"/>
        <end position="433"/>
    </location>
</feature>
<feature type="helix" evidence="77">
    <location>
        <begin position="445"/>
        <end position="447"/>
    </location>
</feature>
<feature type="helix" evidence="77">
    <location>
        <begin position="448"/>
        <end position="453"/>
    </location>
</feature>
<feature type="helix" evidence="77">
    <location>
        <begin position="466"/>
        <end position="475"/>
    </location>
</feature>
<feature type="helix" evidence="77">
    <location>
        <begin position="480"/>
        <end position="482"/>
    </location>
</feature>
<feature type="helix" evidence="77">
    <location>
        <begin position="486"/>
        <end position="496"/>
    </location>
</feature>
<feature type="strand" evidence="65">
    <location>
        <begin position="498"/>
        <end position="500"/>
    </location>
</feature>
<feature type="helix" evidence="69">
    <location>
        <begin position="503"/>
        <end position="506"/>
    </location>
</feature>
<feature type="turn" evidence="67">
    <location>
        <begin position="510"/>
        <end position="512"/>
    </location>
</feature>
<feature type="helix" evidence="66">
    <location>
        <begin position="1029"/>
        <end position="1045"/>
    </location>
</feature>
<feature type="turn" evidence="66">
    <location>
        <begin position="1046"/>
        <end position="1048"/>
    </location>
</feature>
<feature type="helix" evidence="66">
    <location>
        <begin position="1053"/>
        <end position="1070"/>
    </location>
</feature>
<feature type="helix" evidence="66">
    <location>
        <begin position="1071"/>
        <end position="1073"/>
    </location>
</feature>
<feature type="helix" evidence="66">
    <location>
        <begin position="1080"/>
        <end position="1097"/>
    </location>
</feature>
<feature type="strand" evidence="66">
    <location>
        <begin position="1101"/>
        <end position="1104"/>
    </location>
</feature>
<feature type="strand" evidence="66">
    <location>
        <begin position="1106"/>
        <end position="1108"/>
    </location>
</feature>
<feature type="helix" evidence="66">
    <location>
        <begin position="1115"/>
        <end position="1128"/>
    </location>
</feature>
<feature type="lipid moiety-binding region" description="N-myristoyl glycine" evidence="57">
    <location sequence="P00519-2">
        <position position="2"/>
    </location>
</feature>
<dbReference type="EC" id="2.7.10.2" evidence="44 50"/>
<dbReference type="EMBL" id="M14752">
    <property type="protein sequence ID" value="AAA51561.1"/>
    <property type="molecule type" value="mRNA"/>
</dbReference>
<dbReference type="EMBL" id="X16416">
    <property type="protein sequence ID" value="CAA34438.1"/>
    <property type="molecule type" value="mRNA"/>
</dbReference>
<dbReference type="EMBL" id="U07563">
    <property type="protein sequence ID" value="AAB60394.1"/>
    <property type="molecule type" value="Genomic_DNA"/>
</dbReference>
<dbReference type="EMBL" id="U07563">
    <property type="protein sequence ID" value="AAB60393.1"/>
    <property type="molecule type" value="Genomic_DNA"/>
</dbReference>
<dbReference type="EMBL" id="U07561">
    <property type="protein sequence ID" value="AAB60393.1"/>
    <property type="status" value="JOINED"/>
    <property type="molecule type" value="Genomic_DNA"/>
</dbReference>
<dbReference type="EMBL" id="DQ145721">
    <property type="protein sequence ID" value="AAZ38718.1"/>
    <property type="molecule type" value="Genomic_DNA"/>
</dbReference>
<dbReference type="EMBL" id="AL359092">
    <property type="status" value="NOT_ANNOTATED_CDS"/>
    <property type="molecule type" value="Genomic_DNA"/>
</dbReference>
<dbReference type="EMBL" id="AL161733">
    <property type="status" value="NOT_ANNOTATED_CDS"/>
    <property type="molecule type" value="Genomic_DNA"/>
</dbReference>
<dbReference type="EMBL" id="CH471090">
    <property type="protein sequence ID" value="EAW87948.1"/>
    <property type="molecule type" value="Genomic_DNA"/>
</dbReference>
<dbReference type="EMBL" id="BC117451">
    <property type="protein sequence ID" value="AAI17452.1"/>
    <property type="molecule type" value="mRNA"/>
</dbReference>
<dbReference type="EMBL" id="S69223">
    <property type="protein sequence ID" value="AAD14034.1"/>
    <property type="molecule type" value="Genomic_DNA"/>
</dbReference>
<dbReference type="CCDS" id="CCDS35165.1">
    <molecule id="P00519-2"/>
</dbReference>
<dbReference type="CCDS" id="CCDS35166.1">
    <molecule id="P00519-1"/>
</dbReference>
<dbReference type="PIR" id="S08519">
    <property type="entry name" value="TVHUA"/>
</dbReference>
<dbReference type="RefSeq" id="NP_005148.2">
    <molecule id="P00519-1"/>
    <property type="nucleotide sequence ID" value="NM_005157.6"/>
</dbReference>
<dbReference type="RefSeq" id="NP_009297.2">
    <molecule id="P00519-2"/>
    <property type="nucleotide sequence ID" value="NM_007313.3"/>
</dbReference>
<dbReference type="PDB" id="1AB2">
    <property type="method" value="NMR"/>
    <property type="chains" value="A=120-220"/>
</dbReference>
<dbReference type="PDB" id="1AWO">
    <property type="method" value="NMR"/>
    <property type="chains" value="A=65-119"/>
</dbReference>
<dbReference type="PDB" id="1BBZ">
    <property type="method" value="X-ray"/>
    <property type="resolution" value="1.65 A"/>
    <property type="chains" value="A/C/E/G=64-121"/>
</dbReference>
<dbReference type="PDB" id="1JU5">
    <property type="method" value="NMR"/>
    <property type="chains" value="C=62-122"/>
</dbReference>
<dbReference type="PDB" id="1OPL">
    <property type="method" value="X-ray"/>
    <property type="resolution" value="3.42 A"/>
    <property type="chains" value="A/B=27-512"/>
</dbReference>
<dbReference type="PDB" id="1ZZP">
    <property type="method" value="NMR"/>
    <property type="chains" value="A=1007-1130"/>
</dbReference>
<dbReference type="PDB" id="2ABL">
    <property type="method" value="X-ray"/>
    <property type="resolution" value="2.50 A"/>
    <property type="chains" value="A=57-218"/>
</dbReference>
<dbReference type="PDB" id="2E2B">
    <property type="method" value="X-ray"/>
    <property type="resolution" value="2.20 A"/>
    <property type="chains" value="A/B=229-515"/>
</dbReference>
<dbReference type="PDB" id="2F4J">
    <property type="method" value="X-ray"/>
    <property type="resolution" value="1.91 A"/>
    <property type="chains" value="A=229-513"/>
</dbReference>
<dbReference type="PDB" id="2FO0">
    <property type="method" value="X-ray"/>
    <property type="resolution" value="2.27 A"/>
    <property type="chains" value="A=38-512"/>
</dbReference>
<dbReference type="PDB" id="2G1T">
    <property type="method" value="X-ray"/>
    <property type="resolution" value="1.80 A"/>
    <property type="chains" value="A/B/C/D=229-512"/>
</dbReference>
<dbReference type="PDB" id="2G2F">
    <property type="method" value="X-ray"/>
    <property type="resolution" value="2.70 A"/>
    <property type="chains" value="A/B=229-512"/>
</dbReference>
<dbReference type="PDB" id="2G2H">
    <property type="method" value="X-ray"/>
    <property type="resolution" value="2.00 A"/>
    <property type="chains" value="A/B=229-512"/>
</dbReference>
<dbReference type="PDB" id="2G2I">
    <property type="method" value="X-ray"/>
    <property type="resolution" value="3.12 A"/>
    <property type="chains" value="A/B=229-512"/>
</dbReference>
<dbReference type="PDB" id="2GQG">
    <property type="method" value="X-ray"/>
    <property type="resolution" value="2.40 A"/>
    <property type="chains" value="A/B=229-500"/>
</dbReference>
<dbReference type="PDB" id="2HIW">
    <property type="method" value="X-ray"/>
    <property type="resolution" value="2.20 A"/>
    <property type="chains" value="A/B=230-512"/>
</dbReference>
<dbReference type="PDB" id="2HYY">
    <property type="method" value="X-ray"/>
    <property type="resolution" value="2.40 A"/>
    <property type="chains" value="A/B/C/D=228-500"/>
</dbReference>
<dbReference type="PDB" id="2HZ0">
    <property type="method" value="X-ray"/>
    <property type="resolution" value="2.10 A"/>
    <property type="chains" value="A/B=228-497"/>
</dbReference>
<dbReference type="PDB" id="2HZ4">
    <property type="method" value="X-ray"/>
    <property type="resolution" value="2.80 A"/>
    <property type="chains" value="A/B/C=228-500"/>
</dbReference>
<dbReference type="PDB" id="2HZI">
    <property type="method" value="X-ray"/>
    <property type="resolution" value="1.70 A"/>
    <property type="chains" value="A/B=229-500"/>
</dbReference>
<dbReference type="PDB" id="2O88">
    <property type="method" value="X-ray"/>
    <property type="resolution" value="1.75 A"/>
    <property type="chains" value="A/B=64-121"/>
</dbReference>
<dbReference type="PDB" id="2V7A">
    <property type="method" value="X-ray"/>
    <property type="resolution" value="2.50 A"/>
    <property type="chains" value="A/B=229-512"/>
</dbReference>
<dbReference type="PDB" id="3CS9">
    <property type="method" value="X-ray"/>
    <property type="resolution" value="2.21 A"/>
    <property type="chains" value="A/B/C/D=229-500"/>
</dbReference>
<dbReference type="PDB" id="3EG0">
    <property type="method" value="X-ray"/>
    <property type="resolution" value="2.30 A"/>
    <property type="chains" value="A=60-121"/>
</dbReference>
<dbReference type="PDB" id="3EG1">
    <property type="method" value="X-ray"/>
    <property type="resolution" value="1.85 A"/>
    <property type="chains" value="A/B=60-121"/>
</dbReference>
<dbReference type="PDB" id="3EG2">
    <property type="method" value="X-ray"/>
    <property type="resolution" value="1.80 A"/>
    <property type="chains" value="A=60-121"/>
</dbReference>
<dbReference type="PDB" id="3EG3">
    <property type="method" value="X-ray"/>
    <property type="resolution" value="1.40 A"/>
    <property type="chains" value="A=60-121"/>
</dbReference>
<dbReference type="PDB" id="3EGU">
    <property type="method" value="X-ray"/>
    <property type="resolution" value="2.25 A"/>
    <property type="chains" value="A=60-121"/>
</dbReference>
<dbReference type="PDB" id="3K2M">
    <property type="method" value="X-ray"/>
    <property type="resolution" value="1.75 A"/>
    <property type="chains" value="A/B=121-232"/>
</dbReference>
<dbReference type="PDB" id="3PYY">
    <property type="method" value="X-ray"/>
    <property type="resolution" value="1.85 A"/>
    <property type="chains" value="A/B=229-512"/>
</dbReference>
<dbReference type="PDB" id="3QRI">
    <property type="method" value="X-ray"/>
    <property type="resolution" value="2.10 A"/>
    <property type="chains" value="A/B=229-499"/>
</dbReference>
<dbReference type="PDB" id="3QRJ">
    <property type="method" value="X-ray"/>
    <property type="resolution" value="1.82 A"/>
    <property type="chains" value="A/B=229-499"/>
</dbReference>
<dbReference type="PDB" id="3QRK">
    <property type="method" value="X-ray"/>
    <property type="resolution" value="2.30 A"/>
    <property type="chains" value="A=229-499"/>
</dbReference>
<dbReference type="PDB" id="3T04">
    <property type="method" value="X-ray"/>
    <property type="resolution" value="2.10 A"/>
    <property type="chains" value="A=112-232"/>
</dbReference>
<dbReference type="PDB" id="3UE4">
    <property type="method" value="X-ray"/>
    <property type="resolution" value="2.42 A"/>
    <property type="chains" value="A/B=229-512"/>
</dbReference>
<dbReference type="PDB" id="3UYO">
    <property type="method" value="X-ray"/>
    <property type="resolution" value="1.83 A"/>
    <property type="chains" value="A=112-232"/>
</dbReference>
<dbReference type="PDB" id="4J9B">
    <property type="method" value="X-ray"/>
    <property type="resolution" value="1.70 A"/>
    <property type="chains" value="A=60-121"/>
</dbReference>
<dbReference type="PDB" id="4J9C">
    <property type="method" value="X-ray"/>
    <property type="resolution" value="1.05 A"/>
    <property type="chains" value="A=60-121"/>
</dbReference>
<dbReference type="PDB" id="4J9D">
    <property type="method" value="X-ray"/>
    <property type="resolution" value="1.50 A"/>
    <property type="chains" value="A/C/E=60-121"/>
</dbReference>
<dbReference type="PDB" id="4J9E">
    <property type="method" value="X-ray"/>
    <property type="resolution" value="1.40 A"/>
    <property type="chains" value="A/C/E=60-121"/>
</dbReference>
<dbReference type="PDB" id="4J9F">
    <property type="method" value="X-ray"/>
    <property type="resolution" value="1.09 A"/>
    <property type="chains" value="A/C/E=60-121"/>
</dbReference>
<dbReference type="PDB" id="4J9G">
    <property type="method" value="X-ray"/>
    <property type="resolution" value="1.80 A"/>
    <property type="chains" value="A/C/E=60-121"/>
</dbReference>
<dbReference type="PDB" id="4J9H">
    <property type="method" value="X-ray"/>
    <property type="resolution" value="1.70 A"/>
    <property type="chains" value="A/B/C/D/E/F=60-121"/>
</dbReference>
<dbReference type="PDB" id="4J9I">
    <property type="method" value="X-ray"/>
    <property type="resolution" value="2.20 A"/>
    <property type="chains" value="A/C/E=60-121"/>
</dbReference>
<dbReference type="PDB" id="4JJB">
    <property type="method" value="X-ray"/>
    <property type="resolution" value="1.65 A"/>
    <property type="chains" value="A=60-121"/>
</dbReference>
<dbReference type="PDB" id="4JJC">
    <property type="method" value="X-ray"/>
    <property type="resolution" value="1.60 A"/>
    <property type="chains" value="A=60-121"/>
</dbReference>
<dbReference type="PDB" id="4JJD">
    <property type="method" value="X-ray"/>
    <property type="resolution" value="1.60 A"/>
    <property type="chains" value="A=60-121"/>
</dbReference>
<dbReference type="PDB" id="4TWP">
    <property type="method" value="X-ray"/>
    <property type="resolution" value="2.40 A"/>
    <property type="chains" value="A/B=233-503"/>
</dbReference>
<dbReference type="PDB" id="4WA9">
    <property type="method" value="X-ray"/>
    <property type="resolution" value="2.20 A"/>
    <property type="chains" value="A/B=246-512"/>
</dbReference>
<dbReference type="PDB" id="4XEY">
    <property type="method" value="X-ray"/>
    <property type="resolution" value="2.89 A"/>
    <property type="chains" value="A/B=119-515"/>
</dbReference>
<dbReference type="PDB" id="4YC8">
    <property type="method" value="X-ray"/>
    <property type="resolution" value="2.90 A"/>
    <property type="chains" value="A/B=229-512"/>
</dbReference>
<dbReference type="PDB" id="4ZOG">
    <property type="method" value="X-ray"/>
    <property type="resolution" value="2.30 A"/>
    <property type="chains" value="A/B=229-511"/>
</dbReference>
<dbReference type="PDB" id="5DC0">
    <property type="method" value="X-ray"/>
    <property type="resolution" value="2.23 A"/>
    <property type="chains" value="B=112-232"/>
</dbReference>
<dbReference type="PDB" id="5DC4">
    <property type="method" value="X-ray"/>
    <property type="resolution" value="1.48 A"/>
    <property type="chains" value="A=112-232"/>
</dbReference>
<dbReference type="PDB" id="5DC9">
    <property type="method" value="X-ray"/>
    <property type="resolution" value="1.56 A"/>
    <property type="chains" value="A=112-232"/>
</dbReference>
<dbReference type="PDB" id="5HU9">
    <property type="method" value="X-ray"/>
    <property type="resolution" value="1.53 A"/>
    <property type="chains" value="A=229-500"/>
</dbReference>
<dbReference type="PDB" id="5MO4">
    <property type="method" value="X-ray"/>
    <property type="resolution" value="2.17 A"/>
    <property type="chains" value="A=27-515"/>
</dbReference>
<dbReference type="PDB" id="5NP2">
    <property type="method" value="X-ray"/>
    <property type="resolution" value="1.60 A"/>
    <property type="chains" value="A/B=64-120"/>
</dbReference>
<dbReference type="PDB" id="5OAZ">
    <property type="method" value="X-ray"/>
    <property type="resolution" value="1.03 A"/>
    <property type="chains" value="A/B=60-121"/>
</dbReference>
<dbReference type="PDB" id="6AMV">
    <property type="method" value="NMR"/>
    <property type="chains" value="A=26-236"/>
</dbReference>
<dbReference type="PDB" id="6AMW">
    <property type="method" value="NMR"/>
    <property type="chains" value="A=26-236"/>
</dbReference>
<dbReference type="PDB" id="6BL8">
    <property type="method" value="X-ray"/>
    <property type="resolution" value="2.50 A"/>
    <property type="chains" value="A/B=233-504"/>
</dbReference>
<dbReference type="PDB" id="6NPE">
    <property type="method" value="X-ray"/>
    <property type="resolution" value="2.15 A"/>
    <property type="chains" value="A/B=229-512"/>
</dbReference>
<dbReference type="PDB" id="6NPU">
    <property type="method" value="X-ray"/>
    <property type="resolution" value="2.33 A"/>
    <property type="chains" value="A/B=229-512"/>
</dbReference>
<dbReference type="PDB" id="6NPV">
    <property type="method" value="X-ray"/>
    <property type="resolution" value="1.86 A"/>
    <property type="chains" value="A/B=229-512"/>
</dbReference>
<dbReference type="PDB" id="6XR6">
    <property type="method" value="NMR"/>
    <property type="chains" value="A=229-515"/>
</dbReference>
<dbReference type="PDB" id="6XR7">
    <property type="method" value="NMR"/>
    <property type="chains" value="A=229-515"/>
</dbReference>
<dbReference type="PDB" id="6XRG">
    <property type="method" value="NMR"/>
    <property type="chains" value="A=229-515"/>
</dbReference>
<dbReference type="PDB" id="7CC2">
    <property type="method" value="X-ray"/>
    <property type="resolution" value="2.72 A"/>
    <property type="chains" value="A/B=229-510"/>
</dbReference>
<dbReference type="PDB" id="7DT2">
    <property type="method" value="X-ray"/>
    <property type="resolution" value="2.30 A"/>
    <property type="chains" value="A/B=229-510"/>
</dbReference>
<dbReference type="PDB" id="7N9G">
    <property type="method" value="X-ray"/>
    <property type="resolution" value="2.20 A"/>
    <property type="chains" value="A/B/C=229-499"/>
</dbReference>
<dbReference type="PDB" id="7PVQ">
    <property type="method" value="X-ray"/>
    <property type="resolution" value="1.55 A"/>
    <property type="chains" value="A/B=63-120"/>
</dbReference>
<dbReference type="PDB" id="7PVR">
    <property type="method" value="X-ray"/>
    <property type="resolution" value="1.65 A"/>
    <property type="chains" value="A=63-120"/>
</dbReference>
<dbReference type="PDB" id="7PVS">
    <property type="method" value="X-ray"/>
    <property type="resolution" value="1.05 A"/>
    <property type="chains" value="A/B=63-120"/>
</dbReference>
<dbReference type="PDB" id="7PVV">
    <property type="method" value="X-ray"/>
    <property type="resolution" value="1.82 A"/>
    <property type="chains" value="A=63-120"/>
</dbReference>
<dbReference type="PDB" id="7PW2">
    <property type="method" value="X-ray"/>
    <property type="resolution" value="1.10 A"/>
    <property type="chains" value="A=63-120"/>
</dbReference>
<dbReference type="PDB" id="7W7X">
    <property type="method" value="X-ray"/>
    <property type="resolution" value="2.00 A"/>
    <property type="chains" value="A/B=229-500"/>
</dbReference>
<dbReference type="PDB" id="7W7Y">
    <property type="method" value="X-ray"/>
    <property type="resolution" value="2.20 A"/>
    <property type="chains" value="A/B=229-504"/>
</dbReference>
<dbReference type="PDB" id="8H7F">
    <property type="method" value="X-ray"/>
    <property type="resolution" value="2.45 A"/>
    <property type="chains" value="A/B=229-500"/>
</dbReference>
<dbReference type="PDB" id="8H7H">
    <property type="method" value="X-ray"/>
    <property type="resolution" value="2.28 A"/>
    <property type="chains" value="A/B=229-500"/>
</dbReference>
<dbReference type="PDB" id="8I7S">
    <property type="method" value="X-ray"/>
    <property type="resolution" value="1.95 A"/>
    <property type="chains" value="A/B=229-500"/>
</dbReference>
<dbReference type="PDB" id="8I7T">
    <property type="method" value="X-ray"/>
    <property type="resolution" value="2.80 A"/>
    <property type="chains" value="A/B=229-500"/>
</dbReference>
<dbReference type="PDB" id="8I7Z">
    <property type="method" value="X-ray"/>
    <property type="resolution" value="2.25 A"/>
    <property type="chains" value="A/B=229-500"/>
</dbReference>
<dbReference type="PDB" id="8SSN">
    <property type="method" value="X-ray"/>
    <property type="resolution" value="2.86 A"/>
    <property type="chains" value="A/B=64-510"/>
</dbReference>
<dbReference type="PDBsum" id="1AB2"/>
<dbReference type="PDBsum" id="1AWO"/>
<dbReference type="PDBsum" id="1BBZ"/>
<dbReference type="PDBsum" id="1JU5"/>
<dbReference type="PDBsum" id="1OPL"/>
<dbReference type="PDBsum" id="1ZZP"/>
<dbReference type="PDBsum" id="2ABL"/>
<dbReference type="PDBsum" id="2E2B"/>
<dbReference type="PDBsum" id="2F4J"/>
<dbReference type="PDBsum" id="2FO0"/>
<dbReference type="PDBsum" id="2G1T"/>
<dbReference type="PDBsum" id="2G2F"/>
<dbReference type="PDBsum" id="2G2H"/>
<dbReference type="PDBsum" id="2G2I"/>
<dbReference type="PDBsum" id="2GQG"/>
<dbReference type="PDBsum" id="2HIW"/>
<dbReference type="PDBsum" id="2HYY"/>
<dbReference type="PDBsum" id="2HZ0"/>
<dbReference type="PDBsum" id="2HZ4"/>
<dbReference type="PDBsum" id="2HZI"/>
<dbReference type="PDBsum" id="2O88"/>
<dbReference type="PDBsum" id="2V7A"/>
<dbReference type="PDBsum" id="3CS9"/>
<dbReference type="PDBsum" id="3EG0"/>
<dbReference type="PDBsum" id="3EG1"/>
<dbReference type="PDBsum" id="3EG2"/>
<dbReference type="PDBsum" id="3EG3"/>
<dbReference type="PDBsum" id="3EGU"/>
<dbReference type="PDBsum" id="3K2M"/>
<dbReference type="PDBsum" id="3PYY"/>
<dbReference type="PDBsum" id="3QRI"/>
<dbReference type="PDBsum" id="3QRJ"/>
<dbReference type="PDBsum" id="3QRK"/>
<dbReference type="PDBsum" id="3T04"/>
<dbReference type="PDBsum" id="3UE4"/>
<dbReference type="PDBsum" id="3UYO"/>
<dbReference type="PDBsum" id="4J9B"/>
<dbReference type="PDBsum" id="4J9C"/>
<dbReference type="PDBsum" id="4J9D"/>
<dbReference type="PDBsum" id="4J9E"/>
<dbReference type="PDBsum" id="4J9F"/>
<dbReference type="PDBsum" id="4J9G"/>
<dbReference type="PDBsum" id="4J9H"/>
<dbReference type="PDBsum" id="4J9I"/>
<dbReference type="PDBsum" id="4JJB"/>
<dbReference type="PDBsum" id="4JJC"/>
<dbReference type="PDBsum" id="4JJD"/>
<dbReference type="PDBsum" id="4TWP"/>
<dbReference type="PDBsum" id="4WA9"/>
<dbReference type="PDBsum" id="4XEY"/>
<dbReference type="PDBsum" id="4YC8"/>
<dbReference type="PDBsum" id="4ZOG"/>
<dbReference type="PDBsum" id="5DC0"/>
<dbReference type="PDBsum" id="5DC4"/>
<dbReference type="PDBsum" id="5DC9"/>
<dbReference type="PDBsum" id="5HU9"/>
<dbReference type="PDBsum" id="5MO4"/>
<dbReference type="PDBsum" id="5NP2"/>
<dbReference type="PDBsum" id="5OAZ"/>
<dbReference type="PDBsum" id="6AMV"/>
<dbReference type="PDBsum" id="6AMW"/>
<dbReference type="PDBsum" id="6BL8"/>
<dbReference type="PDBsum" id="6NPE"/>
<dbReference type="PDBsum" id="6NPU"/>
<dbReference type="PDBsum" id="6NPV"/>
<dbReference type="PDBsum" id="6XR6"/>
<dbReference type="PDBsum" id="6XR7"/>
<dbReference type="PDBsum" id="6XRG"/>
<dbReference type="PDBsum" id="7CC2"/>
<dbReference type="PDBsum" id="7DT2"/>
<dbReference type="PDBsum" id="7N9G"/>
<dbReference type="PDBsum" id="7PVQ"/>
<dbReference type="PDBsum" id="7PVR"/>
<dbReference type="PDBsum" id="7PVS"/>
<dbReference type="PDBsum" id="7PVV"/>
<dbReference type="PDBsum" id="7PW2"/>
<dbReference type="PDBsum" id="7W7X"/>
<dbReference type="PDBsum" id="7W7Y"/>
<dbReference type="PDBsum" id="8H7F"/>
<dbReference type="PDBsum" id="8H7H"/>
<dbReference type="PDBsum" id="8I7S"/>
<dbReference type="PDBsum" id="8I7T"/>
<dbReference type="PDBsum" id="8I7Z"/>
<dbReference type="PDBsum" id="8SSN"/>
<dbReference type="BMRB" id="P00519"/>
<dbReference type="SMR" id="P00519"/>
<dbReference type="BioGRID" id="106543">
    <property type="interactions" value="234"/>
</dbReference>
<dbReference type="CORUM" id="P00519"/>
<dbReference type="DIP" id="DIP-1042N"/>
<dbReference type="FunCoup" id="P00519">
    <property type="interactions" value="2642"/>
</dbReference>
<dbReference type="IntAct" id="P00519">
    <property type="interactions" value="278"/>
</dbReference>
<dbReference type="MINT" id="P00519"/>
<dbReference type="STRING" id="9606.ENSP00000361423"/>
<dbReference type="BindingDB" id="P00519"/>
<dbReference type="ChEMBL" id="CHEMBL1862"/>
<dbReference type="DrugBank" id="DB08043">
    <property type="generic name" value="1-[4-(PYRIDIN-4-YLOXY)PHENYL]-3-[3-(TRIFLUOROMETHYL)PHENYL]UREA"/>
</dbReference>
<dbReference type="DrugBank" id="DB08583">
    <property type="generic name" value="2-amino-5-[3-(1-ethyl-1H-pyrazol-5-yl)-1H-pyrrolo[2,3-b]pyridin-5-yl]-N,N-dimethylbenzamide"/>
</dbReference>
<dbReference type="DrugBank" id="DB07831">
    <property type="generic name" value="2-{[(6-OXO-1,6-DIHYDROPYRIDIN-3-YL)METHYL]AMINO}-N-[4-PROPYL-3-(TRIFLUOROMETHYL)PHENYL]BENZAMIDE"/>
</dbReference>
<dbReference type="DrugBank" id="DB08350">
    <property type="generic name" value="5-[3-(2-METHOXYPHENYL)-1H-PYRROLO[2,3-B]PYRIDIN-5-YL]-N,N-DIMETHYLPYRIDINE-3-CARBOXAMIDE"/>
</dbReference>
<dbReference type="DrugBank" id="DB12597">
    <property type="generic name" value="Asciminib"/>
</dbReference>
<dbReference type="DrugBank" id="DB00171">
    <property type="generic name" value="ATP"/>
</dbReference>
<dbReference type="DrugBank" id="DB06626">
    <property type="generic name" value="Axitinib"/>
</dbReference>
<dbReference type="DrugBank" id="DB06616">
    <property type="generic name" value="Bosutinib"/>
</dbReference>
<dbReference type="DrugBank" id="DB12267">
    <property type="generic name" value="Brigatinib"/>
</dbReference>
<dbReference type="DrugBank" id="DB01254">
    <property type="generic name" value="Dasatinib"/>
</dbReference>
<dbReference type="DrugBank" id="DB11904">
    <property type="generic name" value="Flumatinib"/>
</dbReference>
<dbReference type="DrugBank" id="DB12010">
    <property type="generic name" value="Fostamatinib"/>
</dbReference>
<dbReference type="DrugBank" id="DB00619">
    <property type="generic name" value="Imatinib"/>
</dbReference>
<dbReference type="DrugBank" id="DB13749">
    <property type="generic name" value="Magnesium gluconate"/>
</dbReference>
<dbReference type="DrugBank" id="DB08231">
    <property type="generic name" value="Myristic acid"/>
</dbReference>
<dbReference type="DrugBank" id="DB03878">
    <property type="generic name" value="N-[4-Methyl-3-[[4-(3-Pyridinyl)-2-Pyrimidinyl]Amino]Phenyl]-3-Pyridinecarboxamide"/>
</dbReference>
<dbReference type="DrugBank" id="DB04868">
    <property type="generic name" value="Nilotinib"/>
</dbReference>
<dbReference type="DrugBank" id="DB08339">
    <property type="generic name" value="PD-166326"/>
</dbReference>
<dbReference type="DrugBank" id="DB08901">
    <property type="generic name" value="Ponatinib"/>
</dbReference>
<dbReference type="DrugBank" id="DB08052">
    <property type="generic name" value="PP-121"/>
</dbReference>
<dbReference type="DrugBank" id="DB12323">
    <property type="generic name" value="Radotinib"/>
</dbReference>
<dbReference type="DrugBank" id="DB13005">
    <property type="generic name" value="Rebastinib"/>
</dbReference>
<dbReference type="DrugBank" id="DB08896">
    <property type="generic name" value="Regorafenib"/>
</dbReference>
<dbReference type="DrugBank" id="DB11805">
    <property type="generic name" value="Saracatinib"/>
</dbReference>
<dbReference type="DrugBank" id="DB14989">
    <property type="generic name" value="Umbralisib"/>
</dbReference>
<dbReference type="DrugBank" id="DB05184">
    <property type="generic name" value="XL228"/>
</dbReference>
<dbReference type="DrugCentral" id="P00519"/>
<dbReference type="GuidetoPHARMACOLOGY" id="1923"/>
<dbReference type="MoonDB" id="P00519">
    <property type="type" value="Predicted"/>
</dbReference>
<dbReference type="GlyCosmos" id="P00519">
    <property type="glycosylation" value="1 site, 1 glycan"/>
</dbReference>
<dbReference type="GlyGen" id="P00519">
    <property type="glycosylation" value="4 sites, 1 O-linked glycan (2 sites)"/>
</dbReference>
<dbReference type="iPTMnet" id="P00519"/>
<dbReference type="PhosphoSitePlus" id="P00519"/>
<dbReference type="BioMuta" id="ABL1"/>
<dbReference type="DMDM" id="85681908"/>
<dbReference type="CPTAC" id="CPTAC-1776"/>
<dbReference type="CPTAC" id="CPTAC-1788"/>
<dbReference type="CPTAC" id="CPTAC-3041"/>
<dbReference type="CPTAC" id="CPTAC-3042"/>
<dbReference type="jPOST" id="P00519"/>
<dbReference type="MassIVE" id="P00519"/>
<dbReference type="PaxDb" id="9606-ENSP00000361423"/>
<dbReference type="PeptideAtlas" id="P00519"/>
<dbReference type="ProteomicsDB" id="51259">
    <molecule id="P00519-1"/>
</dbReference>
<dbReference type="ProteomicsDB" id="51260">
    <molecule id="P00519-2"/>
</dbReference>
<dbReference type="Pumba" id="P00519"/>
<dbReference type="ABCD" id="P00519">
    <property type="antibodies" value="12 sequenced antibodies"/>
</dbReference>
<dbReference type="Antibodypedia" id="3637">
    <property type="antibodies" value="2142 antibodies from 44 providers"/>
</dbReference>
<dbReference type="DNASU" id="25"/>
<dbReference type="Ensembl" id="ENST00000318560.6">
    <molecule id="P00519-1"/>
    <property type="protein sequence ID" value="ENSP00000323315.5"/>
    <property type="gene ID" value="ENSG00000097007.20"/>
</dbReference>
<dbReference type="Ensembl" id="ENST00000372348.9">
    <molecule id="P00519-2"/>
    <property type="protein sequence ID" value="ENSP00000361423.2"/>
    <property type="gene ID" value="ENSG00000097007.20"/>
</dbReference>
<dbReference type="GeneID" id="25"/>
<dbReference type="KEGG" id="hsa:25"/>
<dbReference type="MANE-Select" id="ENST00000318560.6">
    <property type="protein sequence ID" value="ENSP00000323315.5"/>
    <property type="RefSeq nucleotide sequence ID" value="NM_005157.6"/>
    <property type="RefSeq protein sequence ID" value="NP_005148.2"/>
</dbReference>
<dbReference type="UCSC" id="uc004bzv.4">
    <molecule id="P00519-1"/>
    <property type="organism name" value="human"/>
</dbReference>
<dbReference type="AGR" id="HGNC:76"/>
<dbReference type="CTD" id="25"/>
<dbReference type="DisGeNET" id="25"/>
<dbReference type="GeneCards" id="ABL1"/>
<dbReference type="HGNC" id="HGNC:76">
    <property type="gene designation" value="ABL1"/>
</dbReference>
<dbReference type="HPA" id="ENSG00000097007">
    <property type="expression patterns" value="Low tissue specificity"/>
</dbReference>
<dbReference type="MalaCards" id="ABL1"/>
<dbReference type="MIM" id="189980">
    <property type="type" value="gene"/>
</dbReference>
<dbReference type="MIM" id="608232">
    <property type="type" value="phenotype"/>
</dbReference>
<dbReference type="MIM" id="617602">
    <property type="type" value="phenotype"/>
</dbReference>
<dbReference type="neXtProt" id="NX_P00519"/>
<dbReference type="OpenTargets" id="ENSG00000097007"/>
<dbReference type="Orphanet" id="585909">
    <property type="disease" value="B-lymphoblastic leukemia/lymphoma with t(9;22)(q34.1;q11.2)"/>
</dbReference>
<dbReference type="Orphanet" id="521">
    <property type="disease" value="Chronic myeloid leukemia"/>
</dbReference>
<dbReference type="Orphanet" id="643503">
    <property type="disease" value="Marfanoid habitus-facial dysmorphism-skeletal abnormality-heart defect syndrome"/>
</dbReference>
<dbReference type="Orphanet" id="99861">
    <property type="disease" value="Precursor T-cell acute lymphoblastic leukemia"/>
</dbReference>
<dbReference type="PharmGKB" id="PA24413"/>
<dbReference type="VEuPathDB" id="HostDB:ENSG00000097007"/>
<dbReference type="eggNOG" id="KOG4278">
    <property type="taxonomic scope" value="Eukaryota"/>
</dbReference>
<dbReference type="GeneTree" id="ENSGT00940000153838"/>
<dbReference type="HOGENOM" id="CLU_002795_0_0_1"/>
<dbReference type="InParanoid" id="P00519"/>
<dbReference type="OMA" id="TRNSEQM"/>
<dbReference type="OrthoDB" id="98077at2759"/>
<dbReference type="PAN-GO" id="P00519">
    <property type="GO annotations" value="2 GO annotations based on evolutionary models"/>
</dbReference>
<dbReference type="PhylomeDB" id="P00519"/>
<dbReference type="TreeFam" id="TF105081"/>
<dbReference type="BRENDA" id="2.7.10.2">
    <property type="organism ID" value="2681"/>
</dbReference>
<dbReference type="PathwayCommons" id="P00519"/>
<dbReference type="Reactome" id="R-HSA-2029482">
    <property type="pathway name" value="Regulation of actin dynamics for phagocytic cup formation"/>
</dbReference>
<dbReference type="Reactome" id="R-HSA-428890">
    <property type="pathway name" value="Role of ABL in ROBO-SLIT signaling"/>
</dbReference>
<dbReference type="Reactome" id="R-HSA-525793">
    <property type="pathway name" value="Myogenesis"/>
</dbReference>
<dbReference type="Reactome" id="R-HSA-5663213">
    <property type="pathway name" value="RHO GTPases Activate WASPs and WAVEs"/>
</dbReference>
<dbReference type="Reactome" id="R-HSA-5685938">
    <property type="pathway name" value="HDR through Single Strand Annealing (SSA)"/>
</dbReference>
<dbReference type="Reactome" id="R-HSA-5693565">
    <property type="pathway name" value="Recruitment and ATM-mediated phosphorylation of repair and signaling proteins at DNA double strand breaks"/>
</dbReference>
<dbReference type="Reactome" id="R-HSA-69231">
    <property type="pathway name" value="Cyclin D associated events in G1"/>
</dbReference>
<dbReference type="Reactome" id="R-HSA-8939236">
    <property type="pathway name" value="RUNX1 regulates transcription of genes involved in differentiation of HSCs"/>
</dbReference>
<dbReference type="Reactome" id="R-HSA-8940973">
    <property type="pathway name" value="RUNX2 regulates osteoblast differentiation"/>
</dbReference>
<dbReference type="Reactome" id="R-HSA-9664422">
    <property type="pathway name" value="FCGR3A-mediated phagocytosis"/>
</dbReference>
<dbReference type="Reactome" id="R-HSA-983231">
    <property type="pathway name" value="Factors involved in megakaryocyte development and platelet production"/>
</dbReference>
<dbReference type="Reactome" id="R-HSA-9841922">
    <property type="pathway name" value="MLL4 and MLL3 complexes regulate expression of PPARG target genes in adipogenesis and hepatic steatosis"/>
</dbReference>
<dbReference type="Reactome" id="R-HSA-9860927">
    <property type="pathway name" value="Turbulent (oscillatory, disturbed) flow shear stress activates signaling by PIEZO1 and integrins in endothelial cells"/>
</dbReference>
<dbReference type="SignaLink" id="P00519"/>
<dbReference type="SIGNOR" id="P00519"/>
<dbReference type="BioGRID-ORCS" id="25">
    <property type="hits" value="30 hits in 1205 CRISPR screens"/>
</dbReference>
<dbReference type="CD-CODE" id="041D4500">
    <property type="entry name" value="Synthetic Condensate 000036"/>
</dbReference>
<dbReference type="CD-CODE" id="1CD3856C">
    <property type="entry name" value="Synthetic Condensate 000003"/>
</dbReference>
<dbReference type="CD-CODE" id="7ADEF05E">
    <property type="entry name" value="Synthetic Condensate 000039"/>
</dbReference>
<dbReference type="CD-CODE" id="A13F0EB5">
    <property type="entry name" value="Synthetic Condensate 000320"/>
</dbReference>
<dbReference type="CD-CODE" id="B5B9A610">
    <property type="entry name" value="PML body"/>
</dbReference>
<dbReference type="ChiTaRS" id="ABL1">
    <property type="organism name" value="human"/>
</dbReference>
<dbReference type="EvolutionaryTrace" id="P00519"/>
<dbReference type="GeneWiki" id="ABL_(gene)"/>
<dbReference type="GenomeRNAi" id="25"/>
<dbReference type="Pharos" id="P00519">
    <property type="development level" value="Tclin"/>
</dbReference>
<dbReference type="PRO" id="PR:P00519"/>
<dbReference type="Proteomes" id="UP000005640">
    <property type="component" value="Chromosome 9"/>
</dbReference>
<dbReference type="RNAct" id="P00519">
    <property type="molecule type" value="protein"/>
</dbReference>
<dbReference type="Bgee" id="ENSG00000097007">
    <property type="expression patterns" value="Expressed in frontal pole and 196 other cell types or tissues"/>
</dbReference>
<dbReference type="ExpressionAtlas" id="P00519">
    <property type="expression patterns" value="baseline and differential"/>
</dbReference>
<dbReference type="GO" id="GO:0015629">
    <property type="term" value="C:actin cytoskeleton"/>
    <property type="evidence" value="ECO:0000304"/>
    <property type="project" value="UniProtKB"/>
</dbReference>
<dbReference type="GO" id="GO:0005737">
    <property type="term" value="C:cytoplasm"/>
    <property type="evidence" value="ECO:0000314"/>
    <property type="project" value="CAFA"/>
</dbReference>
<dbReference type="GO" id="GO:0005829">
    <property type="term" value="C:cytosol"/>
    <property type="evidence" value="ECO:0000314"/>
    <property type="project" value="MGI"/>
</dbReference>
<dbReference type="GO" id="GO:0030425">
    <property type="term" value="C:dendrite"/>
    <property type="evidence" value="ECO:0000250"/>
    <property type="project" value="ARUK-UCL"/>
</dbReference>
<dbReference type="GO" id="GO:0098978">
    <property type="term" value="C:glutamatergic synapse"/>
    <property type="evidence" value="ECO:0007669"/>
    <property type="project" value="Ensembl"/>
</dbReference>
<dbReference type="GO" id="GO:0030426">
    <property type="term" value="C:growth cone"/>
    <property type="evidence" value="ECO:0007669"/>
    <property type="project" value="Ensembl"/>
</dbReference>
<dbReference type="GO" id="GO:0005739">
    <property type="term" value="C:mitochondrion"/>
    <property type="evidence" value="ECO:0000303"/>
    <property type="project" value="ParkinsonsUK-UCL"/>
</dbReference>
<dbReference type="GO" id="GO:0043025">
    <property type="term" value="C:neuronal cell body"/>
    <property type="evidence" value="ECO:0000250"/>
    <property type="project" value="ARUK-UCL"/>
</dbReference>
<dbReference type="GO" id="GO:0016604">
    <property type="term" value="C:nuclear body"/>
    <property type="evidence" value="ECO:0000314"/>
    <property type="project" value="HPA"/>
</dbReference>
<dbReference type="GO" id="GO:0031965">
    <property type="term" value="C:nuclear membrane"/>
    <property type="evidence" value="ECO:0007669"/>
    <property type="project" value="UniProtKB-SubCell"/>
</dbReference>
<dbReference type="GO" id="GO:0005730">
    <property type="term" value="C:nucleolus"/>
    <property type="evidence" value="ECO:0000314"/>
    <property type="project" value="MGI"/>
</dbReference>
<dbReference type="GO" id="GO:0005654">
    <property type="term" value="C:nucleoplasm"/>
    <property type="evidence" value="ECO:0000314"/>
    <property type="project" value="HPA"/>
</dbReference>
<dbReference type="GO" id="GO:0005634">
    <property type="term" value="C:nucleus"/>
    <property type="evidence" value="ECO:0000314"/>
    <property type="project" value="UniProtKB"/>
</dbReference>
<dbReference type="GO" id="GO:0048471">
    <property type="term" value="C:perinuclear region of cytoplasm"/>
    <property type="evidence" value="ECO:0000314"/>
    <property type="project" value="UniProtKB"/>
</dbReference>
<dbReference type="GO" id="GO:0005886">
    <property type="term" value="C:plasma membrane"/>
    <property type="evidence" value="ECO:0000318"/>
    <property type="project" value="GO_Central"/>
</dbReference>
<dbReference type="GO" id="GO:0098794">
    <property type="term" value="C:postsynapse"/>
    <property type="evidence" value="ECO:0000304"/>
    <property type="project" value="ARUK-UCL"/>
</dbReference>
<dbReference type="GO" id="GO:0014069">
    <property type="term" value="C:postsynaptic density"/>
    <property type="evidence" value="ECO:0007669"/>
    <property type="project" value="Ensembl"/>
</dbReference>
<dbReference type="GO" id="GO:0032991">
    <property type="term" value="C:protein-containing complex"/>
    <property type="evidence" value="ECO:0000353"/>
    <property type="project" value="CAFA"/>
</dbReference>
<dbReference type="GO" id="GO:0001726">
    <property type="term" value="C:ruffle"/>
    <property type="evidence" value="ECO:0007669"/>
    <property type="project" value="Ensembl"/>
</dbReference>
<dbReference type="GO" id="GO:0051015">
    <property type="term" value="F:actin filament binding"/>
    <property type="evidence" value="ECO:0007669"/>
    <property type="project" value="Ensembl"/>
</dbReference>
<dbReference type="GO" id="GO:0003785">
    <property type="term" value="F:actin monomer binding"/>
    <property type="evidence" value="ECO:0000304"/>
    <property type="project" value="UniProtKB"/>
</dbReference>
<dbReference type="GO" id="GO:0005524">
    <property type="term" value="F:ATP binding"/>
    <property type="evidence" value="ECO:0000314"/>
    <property type="project" value="UniProtKB"/>
</dbReference>
<dbReference type="GO" id="GO:0000405">
    <property type="term" value="F:bubble DNA binding"/>
    <property type="evidence" value="ECO:0000314"/>
    <property type="project" value="ARUK-UCL"/>
</dbReference>
<dbReference type="GO" id="GO:0070097">
    <property type="term" value="F:delta-catenin binding"/>
    <property type="evidence" value="ECO:0007669"/>
    <property type="project" value="Ensembl"/>
</dbReference>
<dbReference type="GO" id="GO:0003677">
    <property type="term" value="F:DNA binding"/>
    <property type="evidence" value="ECO:0000303"/>
    <property type="project" value="UniProtKB"/>
</dbReference>
<dbReference type="GO" id="GO:0008047">
    <property type="term" value="F:enzyme activator activity"/>
    <property type="evidence" value="ECO:0000314"/>
    <property type="project" value="BHF-UCL"/>
</dbReference>
<dbReference type="GO" id="GO:0019899">
    <property type="term" value="F:enzyme binding"/>
    <property type="evidence" value="ECO:0000353"/>
    <property type="project" value="BHF-UCL"/>
</dbReference>
<dbReference type="GO" id="GO:0046875">
    <property type="term" value="F:ephrin receptor binding"/>
    <property type="evidence" value="ECO:0000250"/>
    <property type="project" value="ARUK-UCL"/>
</dbReference>
<dbReference type="GO" id="GO:0000400">
    <property type="term" value="F:four-way junction DNA binding"/>
    <property type="evidence" value="ECO:0000314"/>
    <property type="project" value="ARUK-UCL"/>
</dbReference>
<dbReference type="GO" id="GO:0016301">
    <property type="term" value="F:kinase activity"/>
    <property type="evidence" value="ECO:0000315"/>
    <property type="project" value="UniProtKB"/>
</dbReference>
<dbReference type="GO" id="GO:0000287">
    <property type="term" value="F:magnesium ion binding"/>
    <property type="evidence" value="ECO:0000314"/>
    <property type="project" value="UniProtKB"/>
</dbReference>
<dbReference type="GO" id="GO:0030145">
    <property type="term" value="F:manganese ion binding"/>
    <property type="evidence" value="ECO:0000314"/>
    <property type="project" value="UniProtKB"/>
</dbReference>
<dbReference type="GO" id="GO:0051019">
    <property type="term" value="F:mitogen-activated protein kinase binding"/>
    <property type="evidence" value="ECO:0000353"/>
    <property type="project" value="BHF-UCL"/>
</dbReference>
<dbReference type="GO" id="GO:0038191">
    <property type="term" value="F:neuropilin binding"/>
    <property type="evidence" value="ECO:0000353"/>
    <property type="project" value="BHF-UCL"/>
</dbReference>
<dbReference type="GO" id="GO:0004515">
    <property type="term" value="F:nicotinate-nucleotide adenylyltransferase activity"/>
    <property type="evidence" value="ECO:0000304"/>
    <property type="project" value="UniProtKB"/>
</dbReference>
<dbReference type="GO" id="GO:0004715">
    <property type="term" value="F:non-membrane spanning protein tyrosine kinase activity"/>
    <property type="evidence" value="ECO:0000314"/>
    <property type="project" value="UniProtKB"/>
</dbReference>
<dbReference type="GO" id="GO:0001784">
    <property type="term" value="F:phosphotyrosine residue binding"/>
    <property type="evidence" value="ECO:0000353"/>
    <property type="project" value="CAFA"/>
</dbReference>
<dbReference type="GO" id="GO:0070064">
    <property type="term" value="F:proline-rich region binding"/>
    <property type="evidence" value="ECO:0000314"/>
    <property type="project" value="UniProtKB"/>
</dbReference>
<dbReference type="GO" id="GO:0004672">
    <property type="term" value="F:protein kinase activity"/>
    <property type="evidence" value="ECO:0000314"/>
    <property type="project" value="MGI"/>
</dbReference>
<dbReference type="GO" id="GO:0005080">
    <property type="term" value="F:protein kinase C binding"/>
    <property type="evidence" value="ECO:0000353"/>
    <property type="project" value="ParkinsonsUK-UCL"/>
</dbReference>
<dbReference type="GO" id="GO:0004713">
    <property type="term" value="F:protein tyrosine kinase activity"/>
    <property type="evidence" value="ECO:0000314"/>
    <property type="project" value="UniProtKB"/>
</dbReference>
<dbReference type="GO" id="GO:1990837">
    <property type="term" value="F:sequence-specific double-stranded DNA binding"/>
    <property type="evidence" value="ECO:0000314"/>
    <property type="project" value="ARUK-UCL"/>
</dbReference>
<dbReference type="GO" id="GO:0042169">
    <property type="term" value="F:SH2 domain binding"/>
    <property type="evidence" value="ECO:0000353"/>
    <property type="project" value="CAFA"/>
</dbReference>
<dbReference type="GO" id="GO:0017124">
    <property type="term" value="F:SH3 domain binding"/>
    <property type="evidence" value="ECO:0000353"/>
    <property type="project" value="UniProtKB"/>
</dbReference>
<dbReference type="GO" id="GO:0019905">
    <property type="term" value="F:syntaxin binding"/>
    <property type="evidence" value="ECO:0000353"/>
    <property type="project" value="UniProtKB"/>
</dbReference>
<dbReference type="GO" id="GO:0003713">
    <property type="term" value="F:transcription coactivator activity"/>
    <property type="evidence" value="ECO:0000304"/>
    <property type="project" value="ARUK-UCL"/>
</dbReference>
<dbReference type="GO" id="GO:0030036">
    <property type="term" value="P:actin cytoskeleton organization"/>
    <property type="evidence" value="ECO:0000250"/>
    <property type="project" value="UniProtKB"/>
</dbReference>
<dbReference type="GO" id="GO:0030041">
    <property type="term" value="P:actin filament polymerization"/>
    <property type="evidence" value="ECO:0007669"/>
    <property type="project" value="Ensembl"/>
</dbReference>
<dbReference type="GO" id="GO:0050798">
    <property type="term" value="P:activated T cell proliferation"/>
    <property type="evidence" value="ECO:0007669"/>
    <property type="project" value="Ensembl"/>
</dbReference>
<dbReference type="GO" id="GO:1990051">
    <property type="term" value="P:activation of protein kinase C activity"/>
    <property type="evidence" value="ECO:0000314"/>
    <property type="project" value="ParkinsonsUK-UCL"/>
</dbReference>
<dbReference type="GO" id="GO:0046632">
    <property type="term" value="P:alpha-beta T cell differentiation"/>
    <property type="evidence" value="ECO:0007669"/>
    <property type="project" value="Ensembl"/>
</dbReference>
<dbReference type="GO" id="GO:0008306">
    <property type="term" value="P:associative learning"/>
    <property type="evidence" value="ECO:0007669"/>
    <property type="project" value="Ensembl"/>
</dbReference>
<dbReference type="GO" id="GO:0006914">
    <property type="term" value="P:autophagy"/>
    <property type="evidence" value="ECO:0007669"/>
    <property type="project" value="UniProtKB-KW"/>
</dbReference>
<dbReference type="GO" id="GO:0002322">
    <property type="term" value="P:B cell proliferation involved in immune response"/>
    <property type="evidence" value="ECO:0007669"/>
    <property type="project" value="Ensembl"/>
</dbReference>
<dbReference type="GO" id="GO:0050853">
    <property type="term" value="P:B cell receptor signaling pathway"/>
    <property type="evidence" value="ECO:0007669"/>
    <property type="project" value="Ensembl"/>
</dbReference>
<dbReference type="GO" id="GO:0001922">
    <property type="term" value="P:B-1 B cell homeostasis"/>
    <property type="evidence" value="ECO:0007669"/>
    <property type="project" value="Ensembl"/>
</dbReference>
<dbReference type="GO" id="GO:0060020">
    <property type="term" value="P:Bergmann glial cell differentiation"/>
    <property type="evidence" value="ECO:0007669"/>
    <property type="project" value="Ensembl"/>
</dbReference>
<dbReference type="GO" id="GO:0030509">
    <property type="term" value="P:BMP signaling pathway"/>
    <property type="evidence" value="ECO:0007669"/>
    <property type="project" value="Ensembl"/>
</dbReference>
<dbReference type="GO" id="GO:0007249">
    <property type="term" value="P:canonical NF-kappaB signal transduction"/>
    <property type="evidence" value="ECO:0007669"/>
    <property type="project" value="Ensembl"/>
</dbReference>
<dbReference type="GO" id="GO:0060038">
    <property type="term" value="P:cardiac muscle cell proliferation"/>
    <property type="evidence" value="ECO:0007669"/>
    <property type="project" value="Ensembl"/>
</dbReference>
<dbReference type="GO" id="GO:0098609">
    <property type="term" value="P:cell-cell adhesion"/>
    <property type="evidence" value="ECO:0007669"/>
    <property type="project" value="Ensembl"/>
</dbReference>
<dbReference type="GO" id="GO:1903351">
    <property type="term" value="P:cellular response to dopamine"/>
    <property type="evidence" value="ECO:0000304"/>
    <property type="project" value="ParkinsonsUK-UCL"/>
</dbReference>
<dbReference type="GO" id="GO:0070301">
    <property type="term" value="P:cellular response to hydrogen peroxide"/>
    <property type="evidence" value="ECO:0000314"/>
    <property type="project" value="ParkinsonsUK-UCL"/>
</dbReference>
<dbReference type="GO" id="GO:0071222">
    <property type="term" value="P:cellular response to lipopolysaccharide"/>
    <property type="evidence" value="ECO:0007669"/>
    <property type="project" value="Ensembl"/>
</dbReference>
<dbReference type="GO" id="GO:0034599">
    <property type="term" value="P:cellular response to oxidative stress"/>
    <property type="evidence" value="ECO:0000314"/>
    <property type="project" value="BHF-UCL"/>
</dbReference>
<dbReference type="GO" id="GO:0071560">
    <property type="term" value="P:cellular response to transforming growth factor beta stimulus"/>
    <property type="evidence" value="ECO:0007669"/>
    <property type="project" value="Ensembl"/>
</dbReference>
<dbReference type="GO" id="GO:0090398">
    <property type="term" value="P:cellular senescence"/>
    <property type="evidence" value="ECO:0007669"/>
    <property type="project" value="Ensembl"/>
</dbReference>
<dbReference type="GO" id="GO:0021587">
    <property type="term" value="P:cerebellum morphogenesis"/>
    <property type="evidence" value="ECO:0007669"/>
    <property type="project" value="Ensembl"/>
</dbReference>
<dbReference type="GO" id="GO:1904157">
    <property type="term" value="P:DN4 thymocyte differentiation"/>
    <property type="evidence" value="ECO:0007669"/>
    <property type="project" value="Ensembl"/>
</dbReference>
<dbReference type="GO" id="GO:0071103">
    <property type="term" value="P:DNA conformation change"/>
    <property type="evidence" value="ECO:0000314"/>
    <property type="project" value="ARUK-UCL"/>
</dbReference>
<dbReference type="GO" id="GO:0006974">
    <property type="term" value="P:DNA damage response"/>
    <property type="evidence" value="ECO:0000314"/>
    <property type="project" value="UniProtKB"/>
</dbReference>
<dbReference type="GO" id="GO:0043542">
    <property type="term" value="P:endothelial cell migration"/>
    <property type="evidence" value="ECO:0000315"/>
    <property type="project" value="BHF-UCL"/>
</dbReference>
<dbReference type="GO" id="GO:0048013">
    <property type="term" value="P:ephrin receptor signaling pathway"/>
    <property type="evidence" value="ECO:0007669"/>
    <property type="project" value="Ensembl"/>
</dbReference>
<dbReference type="GO" id="GO:0007173">
    <property type="term" value="P:epidermal growth factor receptor signaling pathway"/>
    <property type="evidence" value="ECO:0000318"/>
    <property type="project" value="GO_Central"/>
</dbReference>
<dbReference type="GO" id="GO:0070371">
    <property type="term" value="P:ERK1 and ERK2 cascade"/>
    <property type="evidence" value="ECO:0007669"/>
    <property type="project" value="Ensembl"/>
</dbReference>
<dbReference type="GO" id="GO:0051649">
    <property type="term" value="P:establishment of localization in cell"/>
    <property type="evidence" value="ECO:0007669"/>
    <property type="project" value="Ensembl"/>
</dbReference>
<dbReference type="GO" id="GO:0038096">
    <property type="term" value="P:Fc-gamma receptor signaling pathway involved in phagocytosis"/>
    <property type="evidence" value="ECO:0000304"/>
    <property type="project" value="Reactome"/>
</dbReference>
<dbReference type="GO" id="GO:0007229">
    <property type="term" value="P:integrin-mediated signaling pathway"/>
    <property type="evidence" value="ECO:0000315"/>
    <property type="project" value="BHF-UCL"/>
</dbReference>
<dbReference type="GO" id="GO:0035556">
    <property type="term" value="P:intracellular signal transduction"/>
    <property type="evidence" value="ECO:0000314"/>
    <property type="project" value="BHF-UCL"/>
</dbReference>
<dbReference type="GO" id="GO:0008630">
    <property type="term" value="P:intrinsic apoptotic signaling pathway in response to DNA damage"/>
    <property type="evidence" value="ECO:0000304"/>
    <property type="project" value="UniProtKB"/>
</dbReference>
<dbReference type="GO" id="GO:0030035">
    <property type="term" value="P:microspike assembly"/>
    <property type="evidence" value="ECO:0007669"/>
    <property type="project" value="Ensembl"/>
</dbReference>
<dbReference type="GO" id="GO:0006298">
    <property type="term" value="P:mismatch repair"/>
    <property type="evidence" value="ECO:0000304"/>
    <property type="project" value="ProtInc"/>
</dbReference>
<dbReference type="GO" id="GO:0051882">
    <property type="term" value="P:mitochondrial depolarization"/>
    <property type="evidence" value="ECO:0000304"/>
    <property type="project" value="ParkinsonsUK-UCL"/>
</dbReference>
<dbReference type="GO" id="GO:0000278">
    <property type="term" value="P:mitotic cell cycle"/>
    <property type="evidence" value="ECO:0000304"/>
    <property type="project" value="ParkinsonsUK-UCL"/>
</dbReference>
<dbReference type="GO" id="GO:0051450">
    <property type="term" value="P:myoblast proliferation"/>
    <property type="evidence" value="ECO:0007669"/>
    <property type="project" value="Ensembl"/>
</dbReference>
<dbReference type="GO" id="GO:0030514">
    <property type="term" value="P:negative regulation of BMP signaling pathway"/>
    <property type="evidence" value="ECO:0007669"/>
    <property type="project" value="Ensembl"/>
</dbReference>
<dbReference type="GO" id="GO:0022408">
    <property type="term" value="P:negative regulation of cell-cell adhesion"/>
    <property type="evidence" value="ECO:0007669"/>
    <property type="project" value="Ensembl"/>
</dbReference>
<dbReference type="GO" id="GO:2000773">
    <property type="term" value="P:negative regulation of cellular senescence"/>
    <property type="evidence" value="ECO:0007669"/>
    <property type="project" value="Ensembl"/>
</dbReference>
<dbReference type="GO" id="GO:2000042">
    <property type="term" value="P:negative regulation of double-strand break repair via homologous recombination"/>
    <property type="evidence" value="ECO:0000314"/>
    <property type="project" value="UniProtKB"/>
</dbReference>
<dbReference type="GO" id="GO:2000352">
    <property type="term" value="P:negative regulation of endothelial cell apoptotic process"/>
    <property type="evidence" value="ECO:0007669"/>
    <property type="project" value="Ensembl"/>
</dbReference>
<dbReference type="GO" id="GO:0070373">
    <property type="term" value="P:negative regulation of ERK1 and ERK2 cascade"/>
    <property type="evidence" value="ECO:0007669"/>
    <property type="project" value="Ensembl"/>
</dbReference>
<dbReference type="GO" id="GO:1900272">
    <property type="term" value="P:negative regulation of long-term synaptic potentiation"/>
    <property type="evidence" value="ECO:0000250"/>
    <property type="project" value="ARUK-UCL"/>
</dbReference>
<dbReference type="GO" id="GO:0045930">
    <property type="term" value="P:negative regulation of mitotic cell cycle"/>
    <property type="evidence" value="ECO:0007669"/>
    <property type="project" value="Ensembl"/>
</dbReference>
<dbReference type="GO" id="GO:0051444">
    <property type="term" value="P:negative regulation of ubiquitin-protein transferase activity"/>
    <property type="evidence" value="ECO:0000314"/>
    <property type="project" value="MGI"/>
</dbReference>
<dbReference type="GO" id="GO:0001843">
    <property type="term" value="P:neural tube closure"/>
    <property type="evidence" value="ECO:0007669"/>
    <property type="project" value="Ensembl"/>
</dbReference>
<dbReference type="GO" id="GO:0060563">
    <property type="term" value="P:neuroepithelial cell differentiation"/>
    <property type="evidence" value="ECO:0007669"/>
    <property type="project" value="Ensembl"/>
</dbReference>
<dbReference type="GO" id="GO:0050885">
    <property type="term" value="P:neuromuscular process controlling balance"/>
    <property type="evidence" value="ECO:0007669"/>
    <property type="project" value="Ensembl"/>
</dbReference>
<dbReference type="GO" id="GO:0051402">
    <property type="term" value="P:neuron apoptotic process"/>
    <property type="evidence" value="ECO:0007669"/>
    <property type="project" value="Ensembl"/>
</dbReference>
<dbReference type="GO" id="GO:0030182">
    <property type="term" value="P:neuron differentiation"/>
    <property type="evidence" value="ECO:0007669"/>
    <property type="project" value="Ensembl"/>
</dbReference>
<dbReference type="GO" id="GO:0038189">
    <property type="term" value="P:neuropilin signaling pathway"/>
    <property type="evidence" value="ECO:0000315"/>
    <property type="project" value="BHF-UCL"/>
</dbReference>
<dbReference type="GO" id="GO:0038083">
    <property type="term" value="P:peptidyl-tyrosine autophosphorylation"/>
    <property type="evidence" value="ECO:0000315"/>
    <property type="project" value="UniProtKB"/>
</dbReference>
<dbReference type="GO" id="GO:0018108">
    <property type="term" value="P:peptidyl-tyrosine phosphorylation"/>
    <property type="evidence" value="ECO:0000314"/>
    <property type="project" value="UniProtKB"/>
</dbReference>
<dbReference type="GO" id="GO:0030845">
    <property type="term" value="P:phospholipase C-inhibiting G protein-coupled receptor signaling pathway"/>
    <property type="evidence" value="ECO:0000315"/>
    <property type="project" value="MGI"/>
</dbReference>
<dbReference type="GO" id="GO:0035791">
    <property type="term" value="P:platelet-derived growth factor receptor-beta signaling pathway"/>
    <property type="evidence" value="ECO:0000315"/>
    <property type="project" value="UniProtKB"/>
</dbReference>
<dbReference type="GO" id="GO:1903210">
    <property type="term" value="P:podocyte apoptotic process"/>
    <property type="evidence" value="ECO:0007669"/>
    <property type="project" value="Ensembl"/>
</dbReference>
<dbReference type="GO" id="GO:1904531">
    <property type="term" value="P:positive regulation of actin filament binding"/>
    <property type="evidence" value="ECO:0000315"/>
    <property type="project" value="UniProtKB"/>
</dbReference>
<dbReference type="GO" id="GO:0043065">
    <property type="term" value="P:positive regulation of apoptotic process"/>
    <property type="evidence" value="ECO:0000314"/>
    <property type="project" value="UniProtKB"/>
</dbReference>
<dbReference type="GO" id="GO:1905555">
    <property type="term" value="P:positive regulation of blood vessel branching"/>
    <property type="evidence" value="ECO:0007669"/>
    <property type="project" value="Ensembl"/>
</dbReference>
<dbReference type="GO" id="GO:0043123">
    <property type="term" value="P:positive regulation of canonical NF-kappaB signal transduction"/>
    <property type="evidence" value="ECO:0007669"/>
    <property type="project" value="Ensembl"/>
</dbReference>
<dbReference type="GO" id="GO:0090050">
    <property type="term" value="P:positive regulation of cell migration involved in sprouting angiogenesis"/>
    <property type="evidence" value="ECO:0007669"/>
    <property type="project" value="Ensembl"/>
</dbReference>
<dbReference type="GO" id="GO:0007204">
    <property type="term" value="P:positive regulation of cytosolic calcium ion concentration"/>
    <property type="evidence" value="ECO:0000315"/>
    <property type="project" value="MGI"/>
</dbReference>
<dbReference type="GO" id="GO:1900006">
    <property type="term" value="P:positive regulation of dendrite development"/>
    <property type="evidence" value="ECO:0007669"/>
    <property type="project" value="Ensembl"/>
</dbReference>
<dbReference type="GO" id="GO:0010595">
    <property type="term" value="P:positive regulation of endothelial cell migration"/>
    <property type="evidence" value="ECO:0000315"/>
    <property type="project" value="BHF-UCL"/>
</dbReference>
<dbReference type="GO" id="GO:0070374">
    <property type="term" value="P:positive regulation of ERK1 and ERK2 cascade"/>
    <property type="evidence" value="ECO:0007669"/>
    <property type="project" value="Ensembl"/>
</dbReference>
<dbReference type="GO" id="GO:1903905">
    <property type="term" value="P:positive regulation of establishment of T cell polarity"/>
    <property type="evidence" value="ECO:0000250"/>
    <property type="project" value="UniProtKB"/>
</dbReference>
<dbReference type="GO" id="GO:1903055">
    <property type="term" value="P:positive regulation of extracellular matrix organization"/>
    <property type="evidence" value="ECO:0007669"/>
    <property type="project" value="Ensembl"/>
</dbReference>
<dbReference type="GO" id="GO:0048146">
    <property type="term" value="P:positive regulation of fibroblast proliferation"/>
    <property type="evidence" value="ECO:0007669"/>
    <property type="project" value="Ensembl"/>
</dbReference>
<dbReference type="GO" id="GO:0051894">
    <property type="term" value="P:positive regulation of focal adhesion assembly"/>
    <property type="evidence" value="ECO:0000315"/>
    <property type="project" value="BHF-UCL"/>
</dbReference>
<dbReference type="GO" id="GO:0032743">
    <property type="term" value="P:positive regulation of interleukin-2 production"/>
    <property type="evidence" value="ECO:0007669"/>
    <property type="project" value="Ensembl"/>
</dbReference>
<dbReference type="GO" id="GO:1904528">
    <property type="term" value="P:positive regulation of microtubule binding"/>
    <property type="evidence" value="ECO:0000315"/>
    <property type="project" value="UniProtKB"/>
</dbReference>
<dbReference type="GO" id="GO:0045931">
    <property type="term" value="P:positive regulation of mitotic cell cycle"/>
    <property type="evidence" value="ECO:0007669"/>
    <property type="project" value="Ensembl"/>
</dbReference>
<dbReference type="GO" id="GO:0043525">
    <property type="term" value="P:positive regulation of neuron apoptotic process"/>
    <property type="evidence" value="ECO:0007669"/>
    <property type="project" value="Ensembl"/>
</dbReference>
<dbReference type="GO" id="GO:0033690">
    <property type="term" value="P:positive regulation of osteoblast proliferation"/>
    <property type="evidence" value="ECO:0007669"/>
    <property type="project" value="Ensembl"/>
</dbReference>
<dbReference type="GO" id="GO:0050731">
    <property type="term" value="P:positive regulation of peptidyl-tyrosine phosphorylation"/>
    <property type="evidence" value="ECO:0000314"/>
    <property type="project" value="UniProtKB"/>
</dbReference>
<dbReference type="GO" id="GO:0001934">
    <property type="term" value="P:positive regulation of protein phosphorylation"/>
    <property type="evidence" value="ECO:0000315"/>
    <property type="project" value="UniProtKB"/>
</dbReference>
<dbReference type="GO" id="GO:0051281">
    <property type="term" value="P:positive regulation of release of sequestered calcium ion into cytosol"/>
    <property type="evidence" value="ECO:0007669"/>
    <property type="project" value="Ensembl"/>
</dbReference>
<dbReference type="GO" id="GO:0051496">
    <property type="term" value="P:positive regulation of stress fiber assembly"/>
    <property type="evidence" value="ECO:0000315"/>
    <property type="project" value="BHF-UCL"/>
</dbReference>
<dbReference type="GO" id="GO:1900026">
    <property type="term" value="P:positive regulation of substrate adhesion-dependent cell spreading"/>
    <property type="evidence" value="ECO:0000315"/>
    <property type="project" value="BHF-UCL"/>
</dbReference>
<dbReference type="GO" id="GO:2000406">
    <property type="term" value="P:positive regulation of T cell migration"/>
    <property type="evidence" value="ECO:0000250"/>
    <property type="project" value="UniProtKB"/>
</dbReference>
<dbReference type="GO" id="GO:0045944">
    <property type="term" value="P:positive regulation of transcription by RNA polymerase II"/>
    <property type="evidence" value="ECO:0000304"/>
    <property type="project" value="ARUK-UCL"/>
</dbReference>
<dbReference type="GO" id="GO:0032729">
    <property type="term" value="P:positive regulation of type II interferon production"/>
    <property type="evidence" value="ECO:0007669"/>
    <property type="project" value="Ensembl"/>
</dbReference>
<dbReference type="GO" id="GO:0045907">
    <property type="term" value="P:positive regulation of vasoconstriction"/>
    <property type="evidence" value="ECO:0007669"/>
    <property type="project" value="Ensembl"/>
</dbReference>
<dbReference type="GO" id="GO:2000096">
    <property type="term" value="P:positive regulation of Wnt signaling pathway, planar cell polarity pathway"/>
    <property type="evidence" value="ECO:0007669"/>
    <property type="project" value="Ensembl"/>
</dbReference>
<dbReference type="GO" id="GO:0009791">
    <property type="term" value="P:post-embryonic development"/>
    <property type="evidence" value="ECO:0007669"/>
    <property type="project" value="Ensembl"/>
</dbReference>
<dbReference type="GO" id="GO:0046777">
    <property type="term" value="P:protein autophosphorylation"/>
    <property type="evidence" value="ECO:0000314"/>
    <property type="project" value="ParkinsonsUK-UCL"/>
</dbReference>
<dbReference type="GO" id="GO:1904518">
    <property type="term" value="P:protein localization to cytoplasmic microtubule plus-end"/>
    <property type="evidence" value="ECO:0000315"/>
    <property type="project" value="UniProtKB"/>
</dbReference>
<dbReference type="GO" id="GO:0036211">
    <property type="term" value="P:protein modification process"/>
    <property type="evidence" value="ECO:0000303"/>
    <property type="project" value="UniProtKB"/>
</dbReference>
<dbReference type="GO" id="GO:0032956">
    <property type="term" value="P:regulation of actin cytoskeleton organization"/>
    <property type="evidence" value="ECO:0000315"/>
    <property type="project" value="UniProtKB"/>
</dbReference>
<dbReference type="GO" id="GO:0010506">
    <property type="term" value="P:regulation of autophagy"/>
    <property type="evidence" value="ECO:0000304"/>
    <property type="project" value="UniProtKB"/>
</dbReference>
<dbReference type="GO" id="GO:0030516">
    <property type="term" value="P:regulation of axon extension"/>
    <property type="evidence" value="ECO:0000315"/>
    <property type="project" value="UniProtKB"/>
</dbReference>
<dbReference type="GO" id="GO:0032489">
    <property type="term" value="P:regulation of Cdc42 protein signal transduction"/>
    <property type="evidence" value="ECO:0000315"/>
    <property type="project" value="BHF-UCL"/>
</dbReference>
<dbReference type="GO" id="GO:0030155">
    <property type="term" value="P:regulation of cell adhesion"/>
    <property type="evidence" value="ECO:0000304"/>
    <property type="project" value="UniProtKB"/>
</dbReference>
<dbReference type="GO" id="GO:0051726">
    <property type="term" value="P:regulation of cell cycle"/>
    <property type="evidence" value="ECO:0000304"/>
    <property type="project" value="ParkinsonsUK-UCL"/>
</dbReference>
<dbReference type="GO" id="GO:2000145">
    <property type="term" value="P:regulation of cell motility"/>
    <property type="evidence" value="ECO:0000304"/>
    <property type="project" value="UniProtKB"/>
</dbReference>
<dbReference type="GO" id="GO:0006355">
    <property type="term" value="P:regulation of DNA-templated transcription"/>
    <property type="evidence" value="ECO:0000304"/>
    <property type="project" value="ProtInc"/>
</dbReference>
<dbReference type="GO" id="GO:0030100">
    <property type="term" value="P:regulation of endocytosis"/>
    <property type="evidence" value="ECO:0000304"/>
    <property type="project" value="UniProtKB"/>
</dbReference>
<dbReference type="GO" id="GO:1902036">
    <property type="term" value="P:regulation of hematopoietic stem cell differentiation"/>
    <property type="evidence" value="ECO:0000304"/>
    <property type="project" value="Reactome"/>
</dbReference>
<dbReference type="GO" id="GO:0031113">
    <property type="term" value="P:regulation of microtubule polymerization"/>
    <property type="evidence" value="ECO:0000315"/>
    <property type="project" value="UniProtKB"/>
</dbReference>
<dbReference type="GO" id="GO:1905244">
    <property type="term" value="P:regulation of modification of synaptic structure"/>
    <property type="evidence" value="ECO:0000250"/>
    <property type="project" value="ARUK-UCL"/>
</dbReference>
<dbReference type="GO" id="GO:0099150">
    <property type="term" value="P:regulation of postsynaptic specialization assembly"/>
    <property type="evidence" value="ECO:0007669"/>
    <property type="project" value="Ensembl"/>
</dbReference>
<dbReference type="GO" id="GO:0045580">
    <property type="term" value="P:regulation of T cell differentiation"/>
    <property type="evidence" value="ECO:0000250"/>
    <property type="project" value="UniProtKB"/>
</dbReference>
<dbReference type="GO" id="GO:0034976">
    <property type="term" value="P:response to endoplasmic reticulum stress"/>
    <property type="evidence" value="ECO:0007669"/>
    <property type="project" value="Ensembl"/>
</dbReference>
<dbReference type="GO" id="GO:0071871">
    <property type="term" value="P:response to epinephrine"/>
    <property type="evidence" value="ECO:0007669"/>
    <property type="project" value="Ensembl"/>
</dbReference>
<dbReference type="GO" id="GO:0006979">
    <property type="term" value="P:response to oxidative stress"/>
    <property type="evidence" value="ECO:0000316"/>
    <property type="project" value="MGI"/>
</dbReference>
<dbReference type="GO" id="GO:0009410">
    <property type="term" value="P:response to xenobiotic stimulus"/>
    <property type="evidence" value="ECO:0007669"/>
    <property type="project" value="Ensembl"/>
</dbReference>
<dbReference type="GO" id="GO:0042770">
    <property type="term" value="P:signal transduction in response to DNA damage"/>
    <property type="evidence" value="ECO:0000314"/>
    <property type="project" value="UniProtKB"/>
</dbReference>
<dbReference type="GO" id="GO:0048536">
    <property type="term" value="P:spleen development"/>
    <property type="evidence" value="ECO:0007669"/>
    <property type="project" value="Ensembl"/>
</dbReference>
<dbReference type="GO" id="GO:0034446">
    <property type="term" value="P:substrate adhesion-dependent cell spreading"/>
    <property type="evidence" value="ECO:0007669"/>
    <property type="project" value="Ensembl"/>
</dbReference>
<dbReference type="GO" id="GO:0050852">
    <property type="term" value="P:T cell receptor signaling pathway"/>
    <property type="evidence" value="ECO:0007669"/>
    <property type="project" value="Ensembl"/>
</dbReference>
<dbReference type="GO" id="GO:0048538">
    <property type="term" value="P:thymus development"/>
    <property type="evidence" value="ECO:0007669"/>
    <property type="project" value="Ensembl"/>
</dbReference>
<dbReference type="GO" id="GO:0002333">
    <property type="term" value="P:transitional one stage B cell differentiation"/>
    <property type="evidence" value="ECO:0007669"/>
    <property type="project" value="Ensembl"/>
</dbReference>
<dbReference type="GO" id="GO:0097706">
    <property type="term" value="P:vascular endothelial cell response to oscillatory fluid shear stress"/>
    <property type="evidence" value="ECO:0000304"/>
    <property type="project" value="Reactome"/>
</dbReference>
<dbReference type="CDD" id="cd05052">
    <property type="entry name" value="PTKc_Abl"/>
    <property type="match status" value="1"/>
</dbReference>
<dbReference type="CDD" id="cd09935">
    <property type="entry name" value="SH2_ABL"/>
    <property type="match status" value="1"/>
</dbReference>
<dbReference type="CDD" id="cd11850">
    <property type="entry name" value="SH3_Abl"/>
    <property type="match status" value="1"/>
</dbReference>
<dbReference type="FunFam" id="1.10.510.10:FF:002964">
    <property type="entry name" value="Tyrosine-protein kinase"/>
    <property type="match status" value="1"/>
</dbReference>
<dbReference type="FunFam" id="1.20.120.330:FF:000003">
    <property type="entry name" value="Tyrosine-protein kinase"/>
    <property type="match status" value="1"/>
</dbReference>
<dbReference type="FunFam" id="2.30.30.40:FF:000010">
    <property type="entry name" value="Tyrosine-protein kinase"/>
    <property type="match status" value="1"/>
</dbReference>
<dbReference type="FunFam" id="3.30.200.20:FF:000037">
    <property type="entry name" value="Tyrosine-protein kinase"/>
    <property type="match status" value="1"/>
</dbReference>
<dbReference type="FunFam" id="3.30.505.10:FF:000004">
    <property type="entry name" value="Tyrosine-protein kinase"/>
    <property type="match status" value="1"/>
</dbReference>
<dbReference type="Gene3D" id="1.20.120.330">
    <property type="entry name" value="Nucleotidyltransferases domain 2"/>
    <property type="match status" value="1"/>
</dbReference>
<dbReference type="Gene3D" id="3.30.200.20">
    <property type="entry name" value="Phosphorylase Kinase, domain 1"/>
    <property type="match status" value="1"/>
</dbReference>
<dbReference type="Gene3D" id="3.30.505.10">
    <property type="entry name" value="SH2 domain"/>
    <property type="match status" value="1"/>
</dbReference>
<dbReference type="Gene3D" id="2.30.30.40">
    <property type="entry name" value="SH3 Domains"/>
    <property type="match status" value="1"/>
</dbReference>
<dbReference type="Gene3D" id="1.10.510.10">
    <property type="entry name" value="Transferase(Phosphotransferase) domain 1"/>
    <property type="match status" value="1"/>
</dbReference>
<dbReference type="IDEAL" id="IID00645"/>
<dbReference type="InterPro" id="IPR035837">
    <property type="entry name" value="ABL_SH2"/>
</dbReference>
<dbReference type="InterPro" id="IPR015015">
    <property type="entry name" value="F-actin-binding"/>
</dbReference>
<dbReference type="InterPro" id="IPR011009">
    <property type="entry name" value="Kinase-like_dom_sf"/>
</dbReference>
<dbReference type="InterPro" id="IPR050198">
    <property type="entry name" value="Non-receptor_tyrosine_kinases"/>
</dbReference>
<dbReference type="InterPro" id="IPR000719">
    <property type="entry name" value="Prot_kinase_dom"/>
</dbReference>
<dbReference type="InterPro" id="IPR017441">
    <property type="entry name" value="Protein_kinase_ATP_BS"/>
</dbReference>
<dbReference type="InterPro" id="IPR001245">
    <property type="entry name" value="Ser-Thr/Tyr_kinase_cat_dom"/>
</dbReference>
<dbReference type="InterPro" id="IPR000980">
    <property type="entry name" value="SH2"/>
</dbReference>
<dbReference type="InterPro" id="IPR036860">
    <property type="entry name" value="SH2_dom_sf"/>
</dbReference>
<dbReference type="InterPro" id="IPR036028">
    <property type="entry name" value="SH3-like_dom_sf"/>
</dbReference>
<dbReference type="InterPro" id="IPR001452">
    <property type="entry name" value="SH3_domain"/>
</dbReference>
<dbReference type="InterPro" id="IPR008266">
    <property type="entry name" value="Tyr_kinase_AS"/>
</dbReference>
<dbReference type="InterPro" id="IPR020635">
    <property type="entry name" value="Tyr_kinase_cat_dom"/>
</dbReference>
<dbReference type="PANTHER" id="PTHR24418">
    <property type="entry name" value="TYROSINE-PROTEIN KINASE"/>
    <property type="match status" value="1"/>
</dbReference>
<dbReference type="Pfam" id="PF08919">
    <property type="entry name" value="F_actin_bind"/>
    <property type="match status" value="1"/>
</dbReference>
<dbReference type="Pfam" id="PF07714">
    <property type="entry name" value="PK_Tyr_Ser-Thr"/>
    <property type="match status" value="1"/>
</dbReference>
<dbReference type="Pfam" id="PF00017">
    <property type="entry name" value="SH2"/>
    <property type="match status" value="1"/>
</dbReference>
<dbReference type="Pfam" id="PF00018">
    <property type="entry name" value="SH3_1"/>
    <property type="match status" value="1"/>
</dbReference>
<dbReference type="PRINTS" id="PR00401">
    <property type="entry name" value="SH2DOMAIN"/>
</dbReference>
<dbReference type="PRINTS" id="PR00109">
    <property type="entry name" value="TYRKINASE"/>
</dbReference>
<dbReference type="SMART" id="SM00808">
    <property type="entry name" value="FABD"/>
    <property type="match status" value="1"/>
</dbReference>
<dbReference type="SMART" id="SM00252">
    <property type="entry name" value="SH2"/>
    <property type="match status" value="1"/>
</dbReference>
<dbReference type="SMART" id="SM00326">
    <property type="entry name" value="SH3"/>
    <property type="match status" value="1"/>
</dbReference>
<dbReference type="SMART" id="SM00219">
    <property type="entry name" value="TyrKc"/>
    <property type="match status" value="1"/>
</dbReference>
<dbReference type="SUPFAM" id="SSF56112">
    <property type="entry name" value="Protein kinase-like (PK-like)"/>
    <property type="match status" value="1"/>
</dbReference>
<dbReference type="SUPFAM" id="SSF55550">
    <property type="entry name" value="SH2 domain"/>
    <property type="match status" value="1"/>
</dbReference>
<dbReference type="SUPFAM" id="SSF50044">
    <property type="entry name" value="SH3-domain"/>
    <property type="match status" value="1"/>
</dbReference>
<dbReference type="PROSITE" id="PS00107">
    <property type="entry name" value="PROTEIN_KINASE_ATP"/>
    <property type="match status" value="1"/>
</dbReference>
<dbReference type="PROSITE" id="PS50011">
    <property type="entry name" value="PROTEIN_KINASE_DOM"/>
    <property type="match status" value="1"/>
</dbReference>
<dbReference type="PROSITE" id="PS00109">
    <property type="entry name" value="PROTEIN_KINASE_TYR"/>
    <property type="match status" value="1"/>
</dbReference>
<dbReference type="PROSITE" id="PS50001">
    <property type="entry name" value="SH2"/>
    <property type="match status" value="1"/>
</dbReference>
<dbReference type="PROSITE" id="PS50002">
    <property type="entry name" value="SH3"/>
    <property type="match status" value="1"/>
</dbReference>
<gene>
    <name type="primary">ABL1</name>
    <name type="synonym">ABL</name>
    <name type="synonym">JTK7</name>
</gene>
<sequence length="1130" mass="122873">MLEICLKLVGCKSKKGLSSSSSCYLEEALQRPVASDFEPQGLSEAARWNSKENLLAGPSENDPNLFVALYDFVASGDNTLSITKGEKLRVLGYNHNGEWCEAQTKNGQGWVPSNYITPVNSLEKHSWYHGPVSRNAAEYLLSSGINGSFLVRESESSPGQRSISLRYEGRVYHYRINTASDGKLYVSSESRFNTLAELVHHHSTVADGLITTLHYPAPKRNKPTVYGVSPNYDKWEMERTDITMKHKLGGGQYGEVYEGVWKKYSLTVAVKTLKEDTMEVEEFLKEAAVMKEIKHPNLVQLLGVCTREPPFYIITEFMTYGNLLDYLRECNRQEVNAVVLLYMATQISSAMEYLEKKNFIHRDLAARNCLVGENHLVKVADFGLSRLMTGDTYTAHAGAKFPIKWTAPESLAYNKFSIKSDVWAFGVLLWEIATYGMSPYPGIDLSQVYELLEKDYRMERPEGCPEKVYELMRACWQWNPSDRPSFAEIHQAFETMFQESSISDEVEKELGKQGVRGAVSTLLQAPELPTKTRTSRRAAEHRDTTDVPEMPHSKGQGESDPLDHEPAVSPLLPRKERGPPEGGLNEDERLLPKDKKTNLFSALIKKKKKTAPTPPKRSSSFREMDGQPERRGAGEEEGRDISNGALAFTPLDTADPAKSPKPSNGAGVPNGALRESGGSGFRSPHLWKKSSTLTSSRLATGEEEGGGSSSKRFLRSCSASCVPHGAKDTEWRSVTLPRDLQSTGRQFDSSTFGGHKSEKPALPRKRAGENRSDQVTRGTVTPPPRLVKKNEEAADEVFKDIMESSPGSSPPNLTPKPLRRQVTVAPASGLPHKEEAGKGSALGTPAAAEPVTPTSKAGSGAPGGTSKGPAEESRVRRHKHSSESPGRDKGKLSRLKPAPPPPPAASAGKAGGKPSQSPSQEAAGEAVLGAKTKATSLVDAVNSDAAKPSQPGEGLKKPVLPATPKPQSAKPSGTPISPAPVPSTLPSASSALAGDQPSSTAFIPLISTRVSLRKTRQPPERIASGAITKGVVLDSTEALCLAISRNSEQMASHSAVLEAGKNLYTFCVSYVDSIQQMRNKFAFREAINKLENNLRELQICPATAGSGPAATQDFSKLLSSVKEISDIVQR</sequence>
<name>ABL1_HUMAN</name>
<accession>P00519</accession>
<accession>A3KFJ3</accession>
<accession>Q13869</accession>
<accession>Q13870</accession>
<accession>Q16133</accession>
<accession>Q17R61</accession>
<accession>Q45F09</accession>
<comment type="function">
    <text evidence="2 11 13 14 17 19 20 23 24 26 27 30 32 33 36 38 40 42 44 45 47 50 52 53 54">Non-receptor tyrosine-protein kinase that plays a role in many key processes linked to cell growth and survival such as cytoskeleton remodeling in response to extracellular stimuli, cell motility and adhesion, receptor endocytosis, autophagy, DNA damage response and apoptosis. Coordinates actin remodeling through tyrosine phosphorylation of proteins controlling cytoskeleton dynamics like WASF3 (involved in branch formation); ANXA1 (involved in membrane anchoring); DBN1, DBNL, CTTN, RAPH1 and ENAH (involved in signaling); or MAPT and PXN (microtubule-binding proteins). Phosphorylation of WASF3 is critical for the stimulation of lamellipodia formation and cell migration. Involved in the regulation of cell adhesion and motility through phosphorylation of key regulators of these processes such as BCAR1, CRK, CRKL, DOK1, EFS or NEDD9 (PubMed:22810897). Phosphorylates multiple receptor tyrosine kinases and more particularly promotes endocytosis of EGFR, facilitates the formation of neuromuscular synapses through MUSK, inhibits PDGFRB-mediated chemotaxis and modulates the endocytosis of activated B-cell receptor complexes. Other substrates which are involved in endocytosis regulation are the caveolin (CAV1) and RIN1. Moreover, ABL1 regulates the CBL family of ubiquitin ligases that drive receptor down-regulation and actin remodeling. Phosphorylation of CBL leads to increased EGFR stability. Involved in late-stage autophagy by regulating positively the trafficking and function of lysosomal components. ABL1 targets to mitochondria in response to oxidative stress and thereby mediates mitochondrial dysfunction and cell death. In response to oxidative stress, phosphorylates serine/threonine kinase PRKD2 at 'Tyr-717' (PubMed:28428613). ABL1 is also translocated in the nucleus where it has DNA-binding activity and is involved in DNA-damage response and apoptosis. Many substrates are known mediators of DNA repair: DDB1, DDB2, ERCC3, ERCC6, RAD9A, RAD51, RAD52 or WRN. Activates the proapoptotic pathway when the DNA damage is too severe to be repaired. Phosphorylates TP73, a primary regulator for this type of damage-induced apoptosis. Phosphorylates the caspase CASP9 on 'Tyr-153' and regulates its processing in the apoptotic response to DNA damage. Phosphorylates PSMA7 that leads to an inhibition of proteasomal activity and cell cycle transition blocks. ABL1 also acts as a regulator of multiple pathological signaling cascades during infection. Several known tyrosine-phosphorylated microbial proteins have been identified as ABL1 substrates. This is the case of A36R of Vaccinia virus, Tir (translocated intimin receptor) of pathogenic E.coli and possibly Citrobacter, CagA (cytotoxin-associated gene A) of H.pylori, or AnkA (ankyrin repeat-containing protein A) of A.phagocytophilum. Pathogens can highjack ABL1 kinase signaling to reorganize the host actin cytoskeleton for multiple purposes, like facilitating intracellular movement and host cell exit. Finally, functions as its own regulator through autocatalytic activity as well as through phosphorylation of its inhibitor, ABI1. Regulates T-cell differentiation in a TBX21-dependent manner (By similarity). Positively regulates chemokine-mediated T-cell migration, polarization, and homing to lymph nodes and immune-challenged tissues, potentially via activation of NEDD9/HEF1 and RAP1 (By similarity). Phosphorylates TBX21 on tyrosine residues leading to an enhancement of its transcriptional activator activity (By similarity).</text>
</comment>
<comment type="catalytic activity">
    <reaction evidence="8 44 50">
        <text>L-tyrosyl-[protein] + ATP = O-phospho-L-tyrosyl-[protein] + ADP + H(+)</text>
        <dbReference type="Rhea" id="RHEA:10596"/>
        <dbReference type="Rhea" id="RHEA-COMP:10136"/>
        <dbReference type="Rhea" id="RHEA-COMP:20101"/>
        <dbReference type="ChEBI" id="CHEBI:15378"/>
        <dbReference type="ChEBI" id="CHEBI:30616"/>
        <dbReference type="ChEBI" id="CHEBI:46858"/>
        <dbReference type="ChEBI" id="CHEBI:61978"/>
        <dbReference type="ChEBI" id="CHEBI:456216"/>
        <dbReference type="EC" id="2.7.10.2"/>
    </reaction>
</comment>
<comment type="cofactor">
    <cofactor evidence="2">
        <name>Mg(2+)</name>
        <dbReference type="ChEBI" id="CHEBI:18420"/>
    </cofactor>
</comment>
<comment type="activity regulation">
    <text evidence="1 11 18 27 28 38 50">Stabilized in the inactive form by an association between the SH3 domain and the SH2-TK linker region, interactions of the N-terminal cap, and contributions from an N-terminal myristoyl group and phospholipids. Activated by autophosphorylation as well as by SRC-family kinase-mediated phosphorylation. Activated by RIN1 binding to the SH2 and SH3 domains. Also stimulated by cell death inducers and DNA-damage. Phosphatidylinositol 4,5-bisphosphate (PIP2), a highly abundant phosphoinositide known to regulate cytoskeletal and membrane proteins, also inhibits the tyrosine kinase activity (By similarity). Activated by 5-(1,3-diaryl-1H-pyrazol-4-yl)hydantoin, 5-[3-(4-fluorophenyl)-1-phenyl-1H-pyrazol-4-yl]-2,4-imidazolidinedione (DPH) (PubMed:28428613). Inhibited by ABI1, whose activity is controlled by ABL1 itself through tyrosine phosphorylation. Also inhibited by imatinib mesylate (Gleevec) which is used for the treatment of chronic myeloid leukemia (CML), and by VX-680, an inhibitor that also acts on imatinib-resistant mutants (PubMed:28428613).</text>
</comment>
<comment type="subunit">
    <text evidence="2 10 11 12 13 14 15 21 24 25 27 30 31 35 36 37 39 41 43 44 46 47 48 53 54">Interacts with SORBS1 following insulin stimulation. Found in a trimolecular complex containing CDK5 and CABLES1. Interacts with CABLES1 and PSTPIP1. Interacts with ZDHHC16, ITGB1 and HCK (By similarity). Interacts with STX17; probably phosphorylates STX17. Interacts with INPPL1/SHIP2. Interacts with the 14-3-3 proteins, YWHAB, YWHAE, YWHAG, YWHAH, SFN and YWHAZ; the interaction with 14-3-3 proteins requires phosphorylation on Thr-735 and, sequesters ABL1 into the cytoplasm. Interacts with ABI1, ABI2, BCR, CRK, FGR, FYN, HCK, LYN, PSMA7 RAD9A, RAD51, RAD52, TP73 and WASF3. A complex made of ABL1, CTTN and MYLK regulates cortical actin-based cytoskeletal rearrangement critical to sphingosine 1-phosphate (S1P)-mediated endothelial cell (EC) barrier enhancement. Interacts (via SH3 domain) with CASP9; the interaction is direct and increases in the response of cells to genotoxic stress and ABL1/c-Abl activation. Found in a complex with ABL1, ABL2, CRK and UNC119; leading to the inhibition of CRK phosphorylation by ABL kinases. Interacts with TBX21 (By similarity). Interacts with NEDD9/HEF1; interaction is induced by CXCL12 promotion of ABL-mediated phosphorylation of NEDD9/HEF1 (PubMed:22810897).</text>
</comment>
<comment type="interaction">
    <interactant intactId="EBI-375543">
        <id>P00519</id>
    </interactant>
    <interactant intactId="EBI-375446">
        <id>Q8IZP0</id>
        <label>ABI1</label>
    </interactant>
    <organismsDiffer>false</organismsDiffer>
    <experiments>11</experiments>
</comment>
<comment type="interaction">
    <interactant intactId="EBI-375543">
        <id>P00519</id>
    </interactant>
    <interactant intactId="EBI-743598">
        <id>Q9NYB9</id>
        <label>ABI2</label>
    </interactant>
    <organismsDiffer>false</organismsDiffer>
    <experiments>3</experiments>
</comment>
<comment type="interaction">
    <interactant intactId="EBI-375543">
        <id>P00519</id>
    </interactant>
    <interactant intactId="EBI-1536151">
        <id>O14672</id>
        <label>ADAM10</label>
    </interactant>
    <organismsDiffer>false</organismsDiffer>
    <experiments>2</experiments>
</comment>
<comment type="interaction">
    <interactant intactId="EBI-375543">
        <id>P00519</id>
    </interactant>
    <interactant intactId="EBI-608057">
        <id>P10275</id>
        <label>AR</label>
    </interactant>
    <organismsDiffer>false</organismsDiffer>
    <experiments>2</experiments>
</comment>
<comment type="interaction">
    <interactant intactId="EBI-375543">
        <id>P00519</id>
    </interactant>
    <interactant intactId="EBI-495465">
        <id>Q13315</id>
        <label>ATM</label>
    </interactant>
    <organismsDiffer>false</organismsDiffer>
    <experiments>4</experiments>
</comment>
<comment type="interaction">
    <interactant intactId="EBI-375543">
        <id>P00519</id>
    </interactant>
    <interactant intactId="EBI-7016840">
        <id>Q4KMG0</id>
        <label>CDON</label>
    </interactant>
    <organismsDiffer>false</organismsDiffer>
    <experiments>2</experiments>
</comment>
<comment type="interaction">
    <interactant intactId="EBI-375543">
        <id>P00519</id>
    </interactant>
    <interactant intactId="EBI-886">
        <id>P46108</id>
        <label>CRK</label>
    </interactant>
    <organismsDiffer>false</organismsDiffer>
    <experiments>5</experiments>
</comment>
<comment type="interaction">
    <interactant intactId="EBI-375543">
        <id>P00519</id>
    </interactant>
    <interactant intactId="EBI-910">
        <id>P46109</id>
        <label>CRKL</label>
    </interactant>
    <organismsDiffer>false</organismsDiffer>
    <experiments>4</experiments>
</comment>
<comment type="interaction">
    <interactant intactId="EBI-375543">
        <id>P00519</id>
    </interactant>
    <interactant intactId="EBI-491549">
        <id>P35222</id>
        <label>CTNNB1</label>
    </interactant>
    <organismsDiffer>false</organismsDiffer>
    <experiments>2</experiments>
</comment>
<comment type="interaction">
    <interactant intactId="EBI-375543">
        <id>P00519</id>
    </interactant>
    <interactant intactId="EBI-297353">
        <id>P00533</id>
        <label>EGFR</label>
    </interactant>
    <organismsDiffer>false</organismsDiffer>
    <experiments>3</experiments>
</comment>
<comment type="interaction">
    <interactant intactId="EBI-375543">
        <id>P00519</id>
    </interactant>
    <interactant intactId="EBI-641062">
        <id>P04626</id>
        <label>ERBB2</label>
    </interactant>
    <organismsDiffer>false</organismsDiffer>
    <experiments>2</experiments>
</comment>
<comment type="interaction">
    <interactant intactId="EBI-375543">
        <id>P00519</id>
    </interactant>
    <interactant intactId="EBI-295284">
        <id>Q03468</id>
        <label>ERCC6</label>
    </interactant>
    <organismsDiffer>false</organismsDiffer>
    <experiments>8</experiments>
</comment>
<comment type="interaction">
    <interactant intactId="EBI-375543">
        <id>P00519</id>
    </interactant>
    <interactant intactId="EBI-489954">
        <id>Q14315</id>
        <label>FLNC</label>
    </interactant>
    <organismsDiffer>false</organismsDiffer>
    <experiments>2</experiments>
</comment>
<comment type="interaction">
    <interactant intactId="EBI-375543">
        <id>P00519</id>
    </interactant>
    <interactant intactId="EBI-3946257">
        <id>P36888</id>
        <label>FLT3</label>
    </interactant>
    <organismsDiffer>false</organismsDiffer>
    <experiments>2</experiments>
</comment>
<comment type="interaction">
    <interactant intactId="EBI-375543">
        <id>P00519</id>
    </interactant>
    <interactant intactId="EBI-300173">
        <id>P05107</id>
        <label>ITGB2</label>
    </interactant>
    <organismsDiffer>false</organismsDiffer>
    <experiments>4</experiments>
</comment>
<comment type="interaction">
    <interactant intactId="EBI-375543">
        <id>P00519</id>
    </interactant>
    <interactant intactId="EBI-1379503">
        <id>P10721</id>
        <label>KIT</label>
    </interactant>
    <organismsDiffer>false</organismsDiffer>
    <experiments>2</experiments>
</comment>
<comment type="interaction">
    <interactant intactId="EBI-375543">
        <id>P00519</id>
    </interactant>
    <interactant intactId="EBI-1050422">
        <id>Q38SD2</id>
        <label>LRRK1</label>
    </interactant>
    <organismsDiffer>false</organismsDiffer>
    <experiments>3</experiments>
</comment>
<comment type="interaction">
    <interactant intactId="EBI-375543">
        <id>P00519</id>
    </interactant>
    <interactant intactId="EBI-881">
        <id>Q92918</id>
        <label>MAP4K1</label>
    </interactant>
    <organismsDiffer>false</organismsDiffer>
    <experiments>3</experiments>
</comment>
<comment type="interaction">
    <interactant intactId="EBI-375543">
        <id>P00519</id>
    </interactant>
    <interactant intactId="EBI-995373">
        <id>Q7Z434</id>
        <label>MAVS</label>
    </interactant>
    <organismsDiffer>false</organismsDiffer>
    <experiments>6</experiments>
</comment>
<comment type="interaction">
    <interactant intactId="EBI-375543">
        <id>P00519</id>
    </interactant>
    <interactant intactId="EBI-6092730">
        <id>O43196</id>
        <label>MSH5</label>
    </interactant>
    <organismsDiffer>false</organismsDiffer>
    <experiments>10</experiments>
</comment>
<comment type="interaction">
    <interactant intactId="EBI-375543">
        <id>P00519</id>
    </interactant>
    <interactant intactId="EBI-2804728">
        <id>P15941</id>
        <label>MUC1</label>
    </interactant>
    <organismsDiffer>false</organismsDiffer>
    <experiments>4</experiments>
</comment>
<comment type="interaction">
    <interactant intactId="EBI-375543">
        <id>P00519</id>
    </interactant>
    <interactant intactId="EBI-34603716">
        <id>P15941-12</id>
        <label>MUC1</label>
    </interactant>
    <organismsDiffer>false</organismsDiffer>
    <experiments>4</experiments>
</comment>
<comment type="interaction">
    <interactant intactId="EBI-375543">
        <id>P00519</id>
    </interactant>
    <interactant intactId="EBI-389883">
        <id>P16333</id>
        <label>NCK1</label>
    </interactant>
    <organismsDiffer>false</organismsDiffer>
    <experiments>2</experiments>
</comment>
<comment type="interaction">
    <interactant intactId="EBI-375543">
        <id>P00519</id>
    </interactant>
    <interactant intactId="EBI-1751761">
        <id>O43900</id>
        <label>PRICKLE3</label>
    </interactant>
    <organismsDiffer>false</organismsDiffer>
    <experiments>2</experiments>
</comment>
<comment type="interaction">
    <interactant intactId="EBI-375543">
        <id>P00519</id>
    </interactant>
    <interactant intactId="EBI-976876">
        <id>Q13905</id>
        <label>RAPGEF1</label>
    </interactant>
    <organismsDiffer>false</organismsDiffer>
    <experiments>4</experiments>
</comment>
<comment type="interaction">
    <interactant intactId="EBI-375543">
        <id>P00519</id>
    </interactant>
    <interactant intactId="EBI-1043236">
        <id>Q86UR5</id>
        <label>RIMS1</label>
    </interactant>
    <organismsDiffer>false</organismsDiffer>
    <experiments>2</experiments>
</comment>
<comment type="interaction">
    <interactant intactId="EBI-375543">
        <id>P00519</id>
    </interactant>
    <interactant intactId="EBI-366017">
        <id>Q13671</id>
        <label>RIN1</label>
    </interactant>
    <organismsDiffer>false</organismsDiffer>
    <experiments>6</experiments>
</comment>
<comment type="interaction">
    <interactant intactId="EBI-375543">
        <id>P00519</id>
    </interactant>
    <interactant intactId="EBI-476295">
        <id>P31947</id>
        <label>SFN</label>
    </interactant>
    <organismsDiffer>false</organismsDiffer>
    <experiments>5</experiments>
</comment>
<comment type="interaction">
    <interactant intactId="EBI-375543">
        <id>P00519</id>
    </interactant>
    <interactant intactId="EBI-4402156">
        <id>Q15464</id>
        <label>SHB</label>
    </interactant>
    <organismsDiffer>false</organismsDiffer>
    <experiments>5</experiments>
</comment>
<comment type="interaction">
    <interactant intactId="EBI-375543">
        <id>P00519</id>
    </interactant>
    <interactant intactId="EBI-1752674">
        <id>O75751</id>
        <label>SLC22A3</label>
    </interactant>
    <organismsDiffer>false</organismsDiffer>
    <experiments>2</experiments>
</comment>
<comment type="interaction">
    <interactant intactId="EBI-375543">
        <id>P00519</id>
    </interactant>
    <interactant intactId="EBI-985879">
        <id>P37840</id>
        <label>SNCA</label>
    </interactant>
    <organismsDiffer>false</organismsDiffer>
    <experiments>3</experiments>
</comment>
<comment type="interaction">
    <interactant intactId="EBI-375543">
        <id>P00519</id>
    </interactant>
    <interactant intactId="EBI-433642">
        <id>Q9BX66</id>
        <label>SORBS1</label>
    </interactant>
    <organismsDiffer>false</organismsDiffer>
    <experiments>2</experiments>
</comment>
<comment type="interaction">
    <interactant intactId="EBI-375543">
        <id>P00519</id>
    </interactant>
    <interactant intactId="EBI-1222956">
        <id>O60504-2</id>
        <label>SORBS3</label>
    </interactant>
    <organismsDiffer>false</organismsDiffer>
    <experiments>5</experiments>
</comment>
<comment type="interaction">
    <interactant intactId="EBI-375543">
        <id>P00519</id>
    </interactant>
    <interactant intactId="EBI-298181">
        <id>Q07890</id>
        <label>SOS2</label>
    </interactant>
    <organismsDiffer>false</organismsDiffer>
    <experiments>2</experiments>
</comment>
<comment type="interaction">
    <interactant intactId="EBI-375543">
        <id>P00519</id>
    </interactant>
    <interactant intactId="EBI-621482">
        <id>P12931</id>
        <label>SRC</label>
    </interactant>
    <organismsDiffer>false</organismsDiffer>
    <experiments>2</experiments>
</comment>
<comment type="interaction">
    <interactant intactId="EBI-375543">
        <id>P00519</id>
    </interactant>
    <interactant intactId="EBI-1186119">
        <id>P51692</id>
        <label>STAT5B</label>
    </interactant>
    <organismsDiffer>false</organismsDiffer>
    <experiments>2</experiments>
</comment>
<comment type="interaction">
    <interactant intactId="EBI-375543">
        <id>P00519</id>
    </interactant>
    <interactant intactId="EBI-1220811">
        <id>Q9Y4G6</id>
        <label>TLN2</label>
    </interactant>
    <organismsDiffer>false</organismsDiffer>
    <experiments>3</experiments>
</comment>
<comment type="interaction">
    <interactant intactId="EBI-375543">
        <id>P00519</id>
    </interactant>
    <interactant intactId="EBI-876302">
        <id>P11387</id>
        <label>TOP1</label>
    </interactant>
    <organismsDiffer>false</organismsDiffer>
    <experiments>7</experiments>
</comment>
<comment type="interaction">
    <interactant intactId="EBI-375543">
        <id>P00519</id>
    </interactant>
    <interactant intactId="EBI-366083">
        <id>P04637</id>
        <label>TP53</label>
    </interactant>
    <organismsDiffer>false</organismsDiffer>
    <experiments>2</experiments>
</comment>
<comment type="interaction">
    <interactant intactId="EBI-375543">
        <id>P00519</id>
    </interactant>
    <interactant intactId="EBI-625518">
        <id>P15498</id>
        <label>VAV1</label>
    </interactant>
    <organismsDiffer>false</organismsDiffer>
    <experiments>5</experiments>
</comment>
<comment type="interaction">
    <interactant intactId="EBI-375543">
        <id>P00519</id>
    </interactant>
    <interactant intactId="EBI-4290615">
        <id>Q9Y6W5</id>
        <label>WASF2</label>
    </interactant>
    <organismsDiffer>false</organismsDiffer>
    <experiments>2</experiments>
</comment>
<comment type="interaction">
    <interactant intactId="EBI-375543">
        <id>P00519</id>
    </interactant>
    <interactant intactId="EBI-356498">
        <id>P62258</id>
        <label>YWHAE</label>
    </interactant>
    <organismsDiffer>false</organismsDiffer>
    <experiments>6</experiments>
</comment>
<comment type="interaction">
    <interactant intactId="EBI-375543">
        <id>P00519</id>
    </interactant>
    <interactant intactId="EBI-359832">
        <id>P61981</id>
        <label>YWHAG</label>
    </interactant>
    <organismsDiffer>false</organismsDiffer>
    <experiments>8</experiments>
</comment>
<comment type="interaction">
    <interactant intactId="EBI-375543">
        <id>P00519</id>
    </interactant>
    <interactant intactId="EBI-347088">
        <id>P63104</id>
        <label>YWHAZ</label>
    </interactant>
    <organismsDiffer>false</organismsDiffer>
    <experiments>4</experiments>
</comment>
<comment type="interaction">
    <interactant intactId="EBI-375543">
        <id>P00519</id>
    </interactant>
    <interactant intactId="EBI-7016767">
        <id>O35158</id>
        <label>Cdon</label>
    </interactant>
    <organismsDiffer>true</organismsDiffer>
    <experiments>4</experiments>
</comment>
<comment type="interaction">
    <interactant intactId="EBI-5278159">
        <id>P00519-1</id>
    </interactant>
    <interactant intactId="EBI-985879">
        <id>P37840</id>
        <label>SNCA</label>
    </interactant>
    <organismsDiffer>false</organismsDiffer>
    <experiments>6</experiments>
</comment>
<comment type="interaction">
    <interactant intactId="EBI-9254597">
        <id>P00519-2</id>
    </interactant>
    <interactant intactId="EBI-17458373">
        <id>P48165</id>
        <label>GJA8</label>
    </interactant>
    <organismsDiffer>false</organismsDiffer>
    <experiments>3</experiments>
</comment>
<comment type="interaction">
    <interactant intactId="EBI-9254597">
        <id>P00519-2</id>
    </interactant>
    <interactant intactId="EBI-948001">
        <id>Q15323</id>
        <label>KRT31</label>
    </interactant>
    <organismsDiffer>false</organismsDiffer>
    <experiments>3</experiments>
</comment>
<comment type="interaction">
    <interactant intactId="EBI-9254597">
        <id>P00519-2</id>
    </interactant>
    <interactant intactId="EBI-985879">
        <id>P37840</id>
        <label>SNCA</label>
    </interactant>
    <organismsDiffer>false</organismsDiffer>
    <experiments>5</experiments>
</comment>
<comment type="subcellular location">
    <subcellularLocation>
        <location>Cytoplasm</location>
        <location>Cytoskeleton</location>
    </subcellularLocation>
    <subcellularLocation>
        <location>Nucleus</location>
    </subcellularLocation>
    <subcellularLocation>
        <location evidence="1">Mitochondrion</location>
    </subcellularLocation>
    <text evidence="1">Shuttles between the nucleus and cytoplasm depending on environmental signals. Sequestered into the cytoplasm through interaction with 14-3-3 proteins. Localizes to mitochondria in response to oxidative stress (By similarity).</text>
</comment>
<comment type="subcellular location">
    <molecule>Isoform IB</molecule>
    <subcellularLocation>
        <location>Nucleus membrane</location>
        <topology>Lipid-anchor</topology>
    </subcellularLocation>
    <text>The myristoylated c-ABL protein is reported to be nuclear.</text>
</comment>
<comment type="alternative products">
    <event type="alternative splicing"/>
    <isoform>
        <id>P00519-1</id>
        <name>IA</name>
        <sequence type="displayed"/>
    </isoform>
    <isoform>
        <id>P00519-2</id>
        <name>IB</name>
        <sequence type="described" ref="VSP_004957"/>
    </isoform>
</comment>
<comment type="tissue specificity">
    <text>Widely expressed.</text>
</comment>
<comment type="PTM">
    <text evidence="29">Acetylated at Lys-711 by EP300 which promotes the cytoplasmic translocation.</text>
</comment>
<comment type="PTM">
    <text evidence="1">Phosphorylation at Tyr-70 by members of the SRC family of kinases disrupts SH3 domain-based autoinhibitory interactions and intermolecular associations, such as that with ABI1, and also enhances kinase activity. Phosphorylation at Tyr-226 and Tyr-393 correlate with increased activity. DNA damage-induced activation of ABL1 requires the function of ATM and Ser-446 phosphorylation (By similarity). Phosphorylation at Ser-569 has been attributed to a CDC2-associated kinase and is coupled to cell division (By similarity). Phosphorylation at Ser-618 and Ser-619 by PAK2 increases binding to CRK and reduces binding to ABI1. Phosphorylation on Thr-735 is required for binding 14-3-3 proteins for cytoplasmic translocation. Phosphorylated by PRKDC (By similarity).</text>
</comment>
<comment type="PTM">
    <text evidence="16">Polyubiquitinated. Polyubiquitination of ABL1 leads to degradation.</text>
</comment>
<comment type="disease">
    <disease id="DI-03735">
        <name>Leukemia, chronic myeloid</name>
        <acronym>CML</acronym>
        <description>A clonal myeloproliferative disorder of a pluripotent stem cell with a specific cytogenetic abnormality, the Philadelphia chromosome (Ph), involving myeloid, erythroid, megakaryocytic, B-lymphoid, and sometimes T-lymphoid cells, but not marrow fibroblasts.</description>
        <dbReference type="MIM" id="608232"/>
    </disease>
    <text>The gene represented in this entry is involved in disease pathogenesis.</text>
</comment>
<comment type="disease">
    <text evidence="51">A chromosomal aberration involving ABL1 has been found in patients with chronic myeloid leukemia. Translocation t(9;22)(q34;q11) with BCR. The translocation produces a BCR-ABL found also in acute myeloid leukemia (AML) and acute lymphoblastic leukemia (ALL).</text>
</comment>
<comment type="disease">
    <text evidence="22">A chromosomal aberration involving ABL1 is found in a form of acute lymphoblastic leukemia (PubMed:15361874). Translocation t(9;9)(q34;q34) with NUP214 (PubMed:15361874).</text>
</comment>
<comment type="disease" evidence="49">
    <disease id="DI-05064">
        <name>Congenital heart defects and skeletal malformations syndrome</name>
        <acronym>CHDSKM</acronym>
        <description>An autosomal dominant disorder characterized by congenital heart disease with atrial and ventricular septal defects, variable skeletal abnormalities, and failure to thrive. Skeletal defects include pectus excavatum, scoliosis, and finger contractures. Some patient exhibit joint laxity.</description>
        <dbReference type="MIM" id="617602"/>
    </disease>
    <text>The disease is caused by variants affecting the gene represented in this entry.</text>
</comment>
<comment type="similarity">
    <text evidence="5">Belongs to the protein kinase superfamily. Tyr protein kinase family. ABL subfamily.</text>
</comment>
<comment type="online information" name="Atlas of Genetics and Cytogenetics in Oncology and Haematology">
    <link uri="https://atlasgeneticsoncology.org/gene/1/ABL"/>
</comment>
<keyword id="KW-0002">3D-structure</keyword>
<keyword id="KW-0007">Acetylation</keyword>
<keyword id="KW-0025">Alternative splicing</keyword>
<keyword id="KW-0053">Apoptosis</keyword>
<keyword id="KW-0067">ATP-binding</keyword>
<keyword id="KW-0072">Autophagy</keyword>
<keyword id="KW-0130">Cell adhesion</keyword>
<keyword id="KW-0160">Chromosomal rearrangement</keyword>
<keyword id="KW-0963">Cytoplasm</keyword>
<keyword id="KW-0206">Cytoskeleton</keyword>
<keyword id="KW-0225">Disease variant</keyword>
<keyword id="KW-0227">DNA damage</keyword>
<keyword id="KW-0234">DNA repair</keyword>
<keyword id="KW-0238">DNA-binding</keyword>
<keyword id="KW-0254">Endocytosis</keyword>
<keyword id="KW-0418">Kinase</keyword>
<keyword id="KW-0449">Lipoprotein</keyword>
<keyword id="KW-0460">Magnesium</keyword>
<keyword id="KW-0464">Manganese</keyword>
<keyword id="KW-0472">Membrane</keyword>
<keyword id="KW-0479">Metal-binding</keyword>
<keyword id="KW-0496">Mitochondrion</keyword>
<keyword id="KW-0519">Myristate</keyword>
<keyword id="KW-0547">Nucleotide-binding</keyword>
<keyword id="KW-0539">Nucleus</keyword>
<keyword id="KW-0597">Phosphoprotein</keyword>
<keyword id="KW-1267">Proteomics identification</keyword>
<keyword id="KW-0656">Proto-oncogene</keyword>
<keyword id="KW-1185">Reference proteome</keyword>
<keyword id="KW-0727">SH2 domain</keyword>
<keyword id="KW-0728">SH3 domain</keyword>
<keyword id="KW-0808">Transferase</keyword>
<keyword id="KW-0829">Tyrosine-protein kinase</keyword>
<keyword id="KW-0832">Ubl conjugation</keyword>
<organism>
    <name type="scientific">Homo sapiens</name>
    <name type="common">Human</name>
    <dbReference type="NCBI Taxonomy" id="9606"/>
    <lineage>
        <taxon>Eukaryota</taxon>
        <taxon>Metazoa</taxon>
        <taxon>Chordata</taxon>
        <taxon>Craniata</taxon>
        <taxon>Vertebrata</taxon>
        <taxon>Euteleostomi</taxon>
        <taxon>Mammalia</taxon>
        <taxon>Eutheria</taxon>
        <taxon>Euarchontoglires</taxon>
        <taxon>Primates</taxon>
        <taxon>Haplorrhini</taxon>
        <taxon>Catarrhini</taxon>
        <taxon>Hominidae</taxon>
        <taxon>Homo</taxon>
    </lineage>
</organism>